<gene>
    <name evidence="105 112" type="primary">SIRT1</name>
    <name type="synonym">SIR2L1</name>
</gene>
<evidence type="ECO:0000250" key="1"/>
<evidence type="ECO:0000250" key="2">
    <source>
        <dbReference type="UniProtKB" id="Q8IXJ6"/>
    </source>
</evidence>
<evidence type="ECO:0000250" key="3">
    <source>
        <dbReference type="UniProtKB" id="Q923E4"/>
    </source>
</evidence>
<evidence type="ECO:0000255" key="4">
    <source>
        <dbReference type="PROSITE-ProRule" id="PRU00236"/>
    </source>
</evidence>
<evidence type="ECO:0000256" key="5">
    <source>
        <dbReference type="SAM" id="MobiDB-lite"/>
    </source>
</evidence>
<evidence type="ECO:0000269" key="6">
    <source>
    </source>
</evidence>
<evidence type="ECO:0000269" key="7">
    <source>
    </source>
</evidence>
<evidence type="ECO:0000269" key="8">
    <source>
    </source>
</evidence>
<evidence type="ECO:0000269" key="9">
    <source>
    </source>
</evidence>
<evidence type="ECO:0000269" key="10">
    <source>
    </source>
</evidence>
<evidence type="ECO:0000269" key="11">
    <source>
    </source>
</evidence>
<evidence type="ECO:0000269" key="12">
    <source>
    </source>
</evidence>
<evidence type="ECO:0000269" key="13">
    <source>
    </source>
</evidence>
<evidence type="ECO:0000269" key="14">
    <source>
    </source>
</evidence>
<evidence type="ECO:0000269" key="15">
    <source>
    </source>
</evidence>
<evidence type="ECO:0000269" key="16">
    <source>
    </source>
</evidence>
<evidence type="ECO:0000269" key="17">
    <source>
    </source>
</evidence>
<evidence type="ECO:0000269" key="18">
    <source>
    </source>
</evidence>
<evidence type="ECO:0000269" key="19">
    <source>
    </source>
</evidence>
<evidence type="ECO:0000269" key="20">
    <source>
    </source>
</evidence>
<evidence type="ECO:0000269" key="21">
    <source>
    </source>
</evidence>
<evidence type="ECO:0000269" key="22">
    <source>
    </source>
</evidence>
<evidence type="ECO:0000269" key="23">
    <source>
    </source>
</evidence>
<evidence type="ECO:0000269" key="24">
    <source>
    </source>
</evidence>
<evidence type="ECO:0000269" key="25">
    <source>
    </source>
</evidence>
<evidence type="ECO:0000269" key="26">
    <source>
    </source>
</evidence>
<evidence type="ECO:0000269" key="27">
    <source>
    </source>
</evidence>
<evidence type="ECO:0000269" key="28">
    <source>
    </source>
</evidence>
<evidence type="ECO:0000269" key="29">
    <source>
    </source>
</evidence>
<evidence type="ECO:0000269" key="30">
    <source>
    </source>
</evidence>
<evidence type="ECO:0000269" key="31">
    <source>
    </source>
</evidence>
<evidence type="ECO:0000269" key="32">
    <source>
    </source>
</evidence>
<evidence type="ECO:0000269" key="33">
    <source>
    </source>
</evidence>
<evidence type="ECO:0000269" key="34">
    <source>
    </source>
</evidence>
<evidence type="ECO:0000269" key="35">
    <source>
    </source>
</evidence>
<evidence type="ECO:0000269" key="36">
    <source>
    </source>
</evidence>
<evidence type="ECO:0000269" key="37">
    <source>
    </source>
</evidence>
<evidence type="ECO:0000269" key="38">
    <source>
    </source>
</evidence>
<evidence type="ECO:0000269" key="39">
    <source>
    </source>
</evidence>
<evidence type="ECO:0000269" key="40">
    <source>
    </source>
</evidence>
<evidence type="ECO:0000269" key="41">
    <source>
    </source>
</evidence>
<evidence type="ECO:0000269" key="42">
    <source>
    </source>
</evidence>
<evidence type="ECO:0000269" key="43">
    <source>
    </source>
</evidence>
<evidence type="ECO:0000269" key="44">
    <source>
    </source>
</evidence>
<evidence type="ECO:0000269" key="45">
    <source>
    </source>
</evidence>
<evidence type="ECO:0000269" key="46">
    <source>
    </source>
</evidence>
<evidence type="ECO:0000269" key="47">
    <source>
    </source>
</evidence>
<evidence type="ECO:0000269" key="48">
    <source>
    </source>
</evidence>
<evidence type="ECO:0000269" key="49">
    <source>
    </source>
</evidence>
<evidence type="ECO:0000269" key="50">
    <source>
    </source>
</evidence>
<evidence type="ECO:0000269" key="51">
    <source>
    </source>
</evidence>
<evidence type="ECO:0000269" key="52">
    <source>
    </source>
</evidence>
<evidence type="ECO:0000269" key="53">
    <source>
    </source>
</evidence>
<evidence type="ECO:0000269" key="54">
    <source>
    </source>
</evidence>
<evidence type="ECO:0000269" key="55">
    <source>
    </source>
</evidence>
<evidence type="ECO:0000269" key="56">
    <source>
    </source>
</evidence>
<evidence type="ECO:0000269" key="57">
    <source>
    </source>
</evidence>
<evidence type="ECO:0000269" key="58">
    <source>
    </source>
</evidence>
<evidence type="ECO:0000269" key="59">
    <source>
    </source>
</evidence>
<evidence type="ECO:0000269" key="60">
    <source>
    </source>
</evidence>
<evidence type="ECO:0000269" key="61">
    <source>
    </source>
</evidence>
<evidence type="ECO:0000269" key="62">
    <source>
    </source>
</evidence>
<evidence type="ECO:0000269" key="63">
    <source>
    </source>
</evidence>
<evidence type="ECO:0000269" key="64">
    <source>
    </source>
</evidence>
<evidence type="ECO:0000269" key="65">
    <source>
    </source>
</evidence>
<evidence type="ECO:0000269" key="66">
    <source>
    </source>
</evidence>
<evidence type="ECO:0000269" key="67">
    <source>
    </source>
</evidence>
<evidence type="ECO:0000269" key="68">
    <source>
    </source>
</evidence>
<evidence type="ECO:0000269" key="69">
    <source>
    </source>
</evidence>
<evidence type="ECO:0000269" key="70">
    <source>
    </source>
</evidence>
<evidence type="ECO:0000269" key="71">
    <source>
    </source>
</evidence>
<evidence type="ECO:0000269" key="72">
    <source>
    </source>
</evidence>
<evidence type="ECO:0000269" key="73">
    <source>
    </source>
</evidence>
<evidence type="ECO:0000269" key="74">
    <source>
    </source>
</evidence>
<evidence type="ECO:0000269" key="75">
    <source>
    </source>
</evidence>
<evidence type="ECO:0000269" key="76">
    <source>
    </source>
</evidence>
<evidence type="ECO:0000269" key="77">
    <source>
    </source>
</evidence>
<evidence type="ECO:0000269" key="78">
    <source>
    </source>
</evidence>
<evidence type="ECO:0000269" key="79">
    <source>
    </source>
</evidence>
<evidence type="ECO:0000269" key="80">
    <source>
    </source>
</evidence>
<evidence type="ECO:0000269" key="81">
    <source>
    </source>
</evidence>
<evidence type="ECO:0000269" key="82">
    <source>
    </source>
</evidence>
<evidence type="ECO:0000269" key="83">
    <source>
    </source>
</evidence>
<evidence type="ECO:0000269" key="84">
    <source>
    </source>
</evidence>
<evidence type="ECO:0000269" key="85">
    <source>
    </source>
</evidence>
<evidence type="ECO:0000269" key="86">
    <source>
    </source>
</evidence>
<evidence type="ECO:0000269" key="87">
    <source>
    </source>
</evidence>
<evidence type="ECO:0000269" key="88">
    <source>
    </source>
</evidence>
<evidence type="ECO:0000269" key="89">
    <source>
    </source>
</evidence>
<evidence type="ECO:0000269" key="90">
    <source>
    </source>
</evidence>
<evidence type="ECO:0000269" key="91">
    <source>
    </source>
</evidence>
<evidence type="ECO:0000269" key="92">
    <source>
    </source>
</evidence>
<evidence type="ECO:0000269" key="93">
    <source>
    </source>
</evidence>
<evidence type="ECO:0000269" key="94">
    <source>
    </source>
</evidence>
<evidence type="ECO:0000269" key="95">
    <source>
    </source>
</evidence>
<evidence type="ECO:0000269" key="96">
    <source>
    </source>
</evidence>
<evidence type="ECO:0000269" key="97">
    <source>
    </source>
</evidence>
<evidence type="ECO:0000269" key="98">
    <source>
    </source>
</evidence>
<evidence type="ECO:0000269" key="99">
    <source>
    </source>
</evidence>
<evidence type="ECO:0000269" key="100">
    <source>
    </source>
</evidence>
<evidence type="ECO:0000269" key="101">
    <source>
    </source>
</evidence>
<evidence type="ECO:0000269" key="102">
    <source>
    </source>
</evidence>
<evidence type="ECO:0000269" key="103">
    <source>
    </source>
</evidence>
<evidence type="ECO:0000269" key="104">
    <source ref="3"/>
</evidence>
<evidence type="ECO:0000303" key="105">
    <source>
    </source>
</evidence>
<evidence type="ECO:0000303" key="106">
    <source>
    </source>
</evidence>
<evidence type="ECO:0000305" key="107"/>
<evidence type="ECO:0000305" key="108">
    <source>
    </source>
</evidence>
<evidence type="ECO:0000305" key="109">
    <source>
    </source>
</evidence>
<evidence type="ECO:0000305" key="110">
    <source>
    </source>
</evidence>
<evidence type="ECO:0000305" key="111">
    <source>
    </source>
</evidence>
<evidence type="ECO:0000312" key="112">
    <source>
        <dbReference type="HGNC" id="HGNC:14929"/>
    </source>
</evidence>
<evidence type="ECO:0007744" key="113">
    <source>
    </source>
</evidence>
<evidence type="ECO:0007744" key="114">
    <source>
    </source>
</evidence>
<evidence type="ECO:0007744" key="115">
    <source>
    </source>
</evidence>
<evidence type="ECO:0007744" key="116">
    <source>
    </source>
</evidence>
<evidence type="ECO:0007744" key="117">
    <source>
    </source>
</evidence>
<evidence type="ECO:0007744" key="118">
    <source>
    </source>
</evidence>
<evidence type="ECO:0007744" key="119">
    <source>
    </source>
</evidence>
<evidence type="ECO:0007744" key="120">
    <source>
    </source>
</evidence>
<evidence type="ECO:0007744" key="121">
    <source>
    </source>
</evidence>
<evidence type="ECO:0007744" key="122">
    <source>
    </source>
</evidence>
<evidence type="ECO:0007829" key="123">
    <source>
        <dbReference type="PDB" id="4I5I"/>
    </source>
</evidence>
<evidence type="ECO:0007829" key="124">
    <source>
        <dbReference type="PDB" id="4IG9"/>
    </source>
</evidence>
<evidence type="ECO:0007829" key="125">
    <source>
        <dbReference type="PDB" id="4KXQ"/>
    </source>
</evidence>
<evidence type="ECO:0007829" key="126">
    <source>
        <dbReference type="PDB" id="4ZZI"/>
    </source>
</evidence>
<evidence type="ECO:0007829" key="127">
    <source>
        <dbReference type="PDB" id="5BTR"/>
    </source>
</evidence>
<evidence type="ECO:0007829" key="128">
    <source>
        <dbReference type="PDB" id="8ANB"/>
    </source>
</evidence>
<proteinExistence type="evidence at protein level"/>
<name>SIR1_HUMAN</name>
<protein>
    <recommendedName>
        <fullName evidence="107">NAD-dependent protein deacetylase sirtuin-1</fullName>
        <shortName>hSIRT1</shortName>
        <ecNumber evidence="4 8 83 97 100">2.3.1.286</ecNumber>
    </recommendedName>
    <alternativeName>
        <fullName evidence="107">NAD-dependent protein deacylase sirtuin-1</fullName>
        <ecNumber evidence="92">2.3.1.-</ecNumber>
    </alternativeName>
    <alternativeName>
        <fullName>Regulatory protein SIR2 homolog 1</fullName>
    </alternativeName>
    <alternativeName>
        <fullName>SIR2-like protein 1</fullName>
        <shortName>hSIR2</shortName>
    </alternativeName>
    <component>
        <recommendedName>
            <fullName evidence="106">SirtT1 75 kDa fragment</fullName>
            <shortName evidence="106">75SirT1</shortName>
        </recommendedName>
    </component>
</protein>
<sequence>MADEAALALQPGGSPSAAGADREAASSPAGEPLRKRPRRDGPGLERSPGEPGGAAPEREVPAAARGCPGAAAAALWREAEAEAAAAGGEQEAQATAAAGEGDNGPGLQGPSREPPLADNLYDEDDDDEGEEEEEAAAAAIGYRDNLLFGDEIITNGFHSCESDEEDRASHASSSDWTPRPRIGPYTFVQQHLMIGTDPRTILKDLLPETIPPPELDDMTLWQIVINILSEPPKRKKRKDINTIEDAVKLLQECKKIIVLTGAGVSVSCGIPDFRSRDGIYARLAVDFPDLPDPQAMFDIEYFRKDPRPFFKFAKEIYPGQFQPSLCHKFIALSDKEGKLLRNYTQNIDTLEQVAGIQRIIQCHGSFATASCLICKYKVDCEAVRGDIFNQVVPRCPRCPADEPLAIMKPEIVFFGENLPEQFHRAMKYDKDEVDLLIVIGSSLKVRPVALIPSSIPHEVPQILINREPLPHLHFDVELLGDCDVIINELCHRLGGEYAKLCCNPVKLSEITEKPPRTQKELAYLSELPPTPLHVSEDSSSPERTSPPDSSVIVTLLDQAAKSNDDLDVSESKGCMEEKPQEVQTSRNVESIAEQMENPDLKNVGSSTGEKNERTSVAGTVRKCWPNRVAKEQISRRLDGNQYLFLPPNRYIFHGAEVYSDSEDDVLSSSSCGSNSDSGTCQSPSLEEPMEDESEIEEFYNGLEDEPDVPERAGGAGFGTDGDDQEAINEAISVKQEVTDMNYPSNKS</sequence>
<organism>
    <name type="scientific">Homo sapiens</name>
    <name type="common">Human</name>
    <dbReference type="NCBI Taxonomy" id="9606"/>
    <lineage>
        <taxon>Eukaryota</taxon>
        <taxon>Metazoa</taxon>
        <taxon>Chordata</taxon>
        <taxon>Craniata</taxon>
        <taxon>Vertebrata</taxon>
        <taxon>Euteleostomi</taxon>
        <taxon>Mammalia</taxon>
        <taxon>Eutheria</taxon>
        <taxon>Euarchontoglires</taxon>
        <taxon>Primates</taxon>
        <taxon>Haplorrhini</taxon>
        <taxon>Catarrhini</taxon>
        <taxon>Hominidae</taxon>
        <taxon>Homo</taxon>
    </lineage>
</organism>
<comment type="function">
    <text evidence="3 7 8 10 12 13 14 15 16 17 19 21 22 23 24 25 26 27 28 29 30 32 35 38 40 41 42 45 46 49 50 51 54 55 58 59 60 61 62 63 65 67 68 69 70 71 72 73 74 75 76 79 81 82 83 84 87 88 92 94 95 96 97 99 100 101 103">NAD-dependent protein deacetylase that links transcriptional regulation directly to intracellular energetics and participates in the coordination of several separated cellular functions such as cell cycle, response to DNA damage, metabolism, apoptosis and autophagy (PubMed:11672523, PubMed:12006491, PubMed:14976264, PubMed:14980222, PubMed:15126506, PubMed:15152190, PubMed:15205477, PubMed:15469825, PubMed:15692560, PubMed:16079181, PubMed:16166628, PubMed:16892051, PubMed:16998810, PubMed:17283066, PubMed:17290224, PubMed:17334224, PubMed:17505061, PubMed:17612497, PubMed:17620057, PubMed:17936707, PubMed:18203716, PubMed:18296641, PubMed:18662546, PubMed:18687677, PubMed:19188449, PubMed:19220062, PubMed:19364925, PubMed:19690166, PubMed:19934257, PubMed:20097625, PubMed:20100829, PubMed:20203304, PubMed:20375098, PubMed:20620956, PubMed:20670893, PubMed:20817729, PubMed:20955178, PubMed:21149730, PubMed:21245319, PubMed:21471201, PubMed:21504832, PubMed:21555002, PubMed:21698133, PubMed:21701047, PubMed:21775285, PubMed:21807113, PubMed:21841822, PubMed:21890893, PubMed:21947282, PubMed:22274616, PubMed:22918831, PubMed:24415752, PubMed:24824780, PubMed:29681526, PubMed:29765047, PubMed:30409912). Can modulate chromatin function through deacetylation of histones and can promote alterations in the methylation of histones and DNA, leading to transcriptional repression (PubMed:15469825). Deacetylates a broad range of transcription factors and coregulators, thereby regulating target gene expression positively and negatively (PubMed:14976264, PubMed:14980222, PubMed:15152190). Serves as a sensor of the cytosolic ratio of NAD(+)/NADH which is altered by glucose deprivation and metabolic changes associated with caloric restriction (PubMed:15205477). Is essential in skeletal muscle cell differentiation and in response to low nutrients mediates the inhibitory effect on skeletal myoblast differentiation which also involves 5'-AMP-activated protein kinase (AMPK) and nicotinamide phosphoribosyltransferase (NAMPT) (By similarity). Component of the eNoSC (energy-dependent nucleolar silencing) complex, a complex that mediates silencing of rDNA in response to intracellular energy status and acts by recruiting histone-modifying enzymes (PubMed:18485871). The eNoSC complex is able to sense the energy status of cell: upon glucose starvation, elevation of NAD(+)/NADP(+) ratio activates SIRT1, leading to histone H3 deacetylation followed by dimethylation of H3 at 'Lys-9' (H3K9me2) by SUV39H1 and the formation of silent chromatin in the rDNA locus (PubMed:18485871, PubMed:21504832). Deacetylates 'Lys-266' of SUV39H1, leading to its activation (PubMed:21504832). Inhibits skeletal muscle differentiation by deacetylating PCAF and MYOD1 (PubMed:19188449). Deacetylates H2A and 'Lys-26' of H1-4 (PubMed:15469825). Deacetylates 'Lys-16' of histone H4 (in vitro). Involved in NR0B2/SHP corepression function through chromatin remodeling: Recruited to LRH1 target gene promoters by NR0B2/SHP thereby stimulating histone H3 and H4 deacetylation leading to transcriptional repression (PubMed:20375098). Proposed to contribute to genomic integrity via positive regulation of telomere length; however, reports on localization to pericentromeric heterochromatin are conflicting (By similarity). Proposed to play a role in constitutive heterochromatin (CH) formation and/or maintenance through regulation of the available pool of nuclear SUV39H1 (PubMed:15469825, PubMed:18004385). Upon oxidative/metabolic stress decreases SUV39H1 degradation by inhibiting SUV39H1 polyubiquitination by MDM2 (PubMed:18004385, PubMed:21504832). This increase in SUV39H1 levels enhances SUV39H1 turnover in CH, which in turn seems to accelerate renewal of the heterochromatin which correlates with greater genomic integrity during stress response (PubMed:18004385, PubMed:21504832). Deacetylates 'Lys-382' of p53/TP53 and impairs its ability to induce transcription-dependent proapoptotic program and modulate cell senescence (PubMed:11672523, PubMed:12006491, PubMed:22542455). Deacetylates TAF1B and thereby represses rDNA transcription by the RNA polymerase I (By similarity). Deacetylates MYC, promotes the association of MYC with MAX and decreases MYC stability leading to compromised transformational capability (PubMed:19364925, PubMed:21807113). Deacetylates FOXO3 in response to oxidative stress thereby increasing its ability to induce cell cycle arrest and resistance to oxidative stress but inhibiting FOXO3-mediated induction of apoptosis transcriptional activity; also leading to FOXO3 ubiquitination and protesomal degradation (PubMed:14976264, PubMed:14980222, PubMed:21841822). Appears to have a similar effect on MLLT7/FOXO4 in regulation of transcriptional activity and apoptosis (PubMed:15126506). Deacetylates DNMT1; thereby impairs DNMT1 methyltransferase-independent transcription repressor activity, modulates DNMT1 cell cycle regulatory function and DNMT1-mediated gene silencing (PubMed:21947282). Deacetylates RELA/NF-kappa-B p65 thereby inhibiting its transactivating potential and augments apoptosis in response to TNF-alpha (PubMed:15152190). Deacetylates HIF1A, KAT5/TIP60, RB1 and HIC1 (PubMed:17283066, PubMed:17620057, PubMed:20100829, PubMed:20620956). Deacetylates FOXO1 resulting in its nuclear retention and enhancement of its transcriptional activity leading to increased gluconeogenesis in liver (PubMed:15692560). Inhibits E2F1 transcriptional activity and apoptotic function, possibly by deacetylation (PubMed:16892051). Involved in HES1- and HEY2-mediated transcriptional repression (PubMed:12535671). In cooperation with MYCN seems to be involved in transcriptional repression of DUSP6/MAPK3 leading to MYCN stabilization by phosphorylation at 'Ser-62' (PubMed:21698133). Deacetylates MEF2D (PubMed:16166628). Required for antagonist-mediated transcription suppression of AR-dependent genes which may be linked to local deacetylation of histone H3 (PubMed:17505061). Represses HNF1A-mediated transcription (By similarity). Required for the repression of ESRRG by CREBZF (PubMed:19690166). Deacetylates NR1H3 and NR1H2 and deacetylation of NR1H3 at 'Lys-434' positively regulates transcription of NR1H3:RXR target genes, promotes NR1H3 proteasomal degradation and results in cholesterol efflux; a promoter clearing mechanism after reach round of transcription is proposed (PubMed:17936707). Involved in lipid metabolism: deacetylates LPIN1, thereby inhibiting diacylglycerol synthesis (PubMed:20817729, PubMed:29765047). Implicated in regulation of adipogenesis and fat mobilization in white adipocytes by repression of PPARG which probably involves association with NCOR1 and SMRT/NCOR2 (By similarity). Deacetylates p300/EP300 and PRMT1 (By similarity). Deacetylates ACSS2 leading to its activation, and HMGCS1 deacetylation (PubMed:21701047). Involved in liver and muscle metabolism. Through deacetylation and activation of PPARGC1A is required to activate fatty acid oxidation in skeletal muscle under low-glucose conditions and is involved in glucose homeostasis (PubMed:23142079). Involved in regulation of PPARA and fatty acid beta-oxidation in liver. Involved in positive regulation of insulin secretion in pancreatic beta cells in response to glucose; the function seems to imply transcriptional repression of UCP2. Proposed to deacetylate IRS2 thereby facilitating its insulin-induced tyrosine phosphorylation. Deacetylates SREBF1 isoform SREBP-1C thereby decreasing its stability and transactivation in lipogenic gene expression (PubMed:17290224, PubMed:20817729). Involved in DNA damage response by repressing genes which are involved in DNA repair, such as XPC and TP73, deacetylating XRCC6/Ku70, and facilitating recruitment of additional factors to sites of damaged DNA, such as SIRT1-deacetylated NBN can recruit ATM to initiate DNA repair and SIRT1-deacetylated XPA interacts with RPA2 (PubMed:15205477, PubMed:16998810, PubMed:17334224, PubMed:17612497, PubMed:20670893, PubMed:21149730). Also involved in DNA repair of DNA double-strand breaks by homologous recombination and specifically single-strand annealing independently of XRCC6/Ku70 and NBN (PubMed:15205477, PubMed:17334224, PubMed:20097625). Promotes DNA double-strand breaks by mediating deacetylation of SIRT6 (PubMed:32538779). Transcriptional suppression of XPC probably involves an E2F4:RBL2 suppressor complex and protein kinase B (AKT) signaling. Transcriptional suppression of TP73 probably involves E2F4 and PCAF. Deacetylates WRN thereby regulating its helicase and exonuclease activities and regulates WRN nuclear translocation in response to DNA damage (PubMed:18203716). Deacetylates APEX1 at 'Lys-6' and 'Lys-7' and stimulates cellular AP endonuclease activity by promoting the association of APEX1 to XRCC1 (PubMed:19934257). Catalyzes deacetylation of ERCC4/XPF, thereby impairing interaction with ERCC1 and nucleotide excision repair (NER) (PubMed:32034146). Increases p53/TP53-mediated transcription-independent apoptosis by blocking nuclear translocation of cytoplasmic p53/TP53 and probably redirecting it to mitochondria. Deacetylates XRCC6/Ku70 at 'Lys-539' and 'Lys-542' causing it to sequester BAX away from mitochondria thereby inhibiting stress-induced apoptosis. Is involved in autophagy, presumably by deacetylating ATG5, ATG7 and MAP1LC3B/ATG8 (PubMed:18296641). Deacetylates AKT1 which leads to enhanced binding of AKT1 and PDK1 to PIP3 and promotes their activation (PubMed:21775285). Proposed to play role in regulation of STK11/LBK1-dependent AMPK signaling pathways implicated in cellular senescence which seems to involve the regulation of the acetylation status of STK11/LBK1. Can deacetylate STK11/LBK1 and thereby increase its activity, cytoplasmic localization and association with STRAD; however, the relevance of such activity in normal cells is unclear (PubMed:18687677, PubMed:20203304). In endothelial cells is shown to inhibit STK11/LBK1 activity and to promote its degradation. Deacetylates SMAD7 at 'Lys-64' and 'Lys-70' thereby promoting its degradation. Deacetylates CIITA and augments its MHC class II transactivation and contributes to its stability (PubMed:21890893). Deacetylates MECOM/EVI1 (PubMed:21555002). Deacetylates PML at 'Lys-487' and this deacetylation promotes PML control of PER2 nuclear localization (PubMed:22274616). During the neurogenic transition, represses selective NOTCH1-target genes through histone deacetylation in a BCL6-dependent manner and leading to neuronal differentiation. Regulates the circadian expression of several core clock genes, including BMAL1, RORC, PER2 and CRY1 and plays a critical role in maintaining a controlled rhythmicity in histone acetylation, thereby contributing to circadian chromatin remodeling (PubMed:18662546). Deacetylates BMAL1 and histones at the circadian gene promoters in order to facilitate repression by inhibitory components of the circadian oscillator (By similarity). Deacetylates PER2, facilitating its ubiquitination and degradation by the proteasome (By similarity). Protects cardiomyocytes against palmitate-induced apoptosis (By similarity). Deacetylates XBP1 isoform 2; deacetylation decreases protein stability of XBP1 isoform 2 and inhibits its transcriptional activity (PubMed:20955178). Deacetylates PCK1 and directs its activity toward phosphoenolpyruvate production promoting gluconeogenesis (PubMed:30193097). Involved in the CCAR2-mediated regulation of PCK1 and NR1D1 (PubMed:24415752). Deacetylates CTNB1 at 'Lys-49' (PubMed:24824780). In POMC (pro-opiomelanocortin) neurons, required for leptin-induced activation of PI3K signaling (By similarity). Deacetylates SOX9; promoting SOX9 nuclear localization and transactivation activity (By similarity). Involved in the regulation of centrosome duplication: deacetylates CENATAC in G1 phase, allowing for SASS6 accumulation on the centrosome and subsequent procentriole assembly (PubMed:31722219). Deacetylates NDC80/HEC1 (PubMed:30409912). In addition to protein deacetylase activity, also acts as a protein-lysine deacylase by mediating protein delactylation, depropionylation and decrotonylation (PubMed:28497810, PubMed:38512451). Mediates depropionylation of Osterix (SP7) (By similarity). Catalyzes decrotonylation of histones; it however does not represent a major histone decrotonylase (PubMed:28497810). Mediates protein delactylation of TEAD1 and YAP1 (PubMed:38512451).</text>
</comment>
<comment type="function">
    <molecule>Isoform 2</molecule>
    <text evidence="64">Deacetylates 'Lys-382' of p53/TP53, however with lower activity than isoform 1. In combination, the two isoforms exert an additive effect. Isoform 2 regulates p53/TP53 expression and cellular stress response and is in turn repressed by p53/TP53 presenting a SIRT1 isoform-dependent auto-regulatory loop.</text>
</comment>
<comment type="function">
    <molecule>SirtT1 75 kDa fragment</molecule>
    <text evidence="80">Catalytically inactive 75SirT1 may be involved in regulation of apoptosis. May be involved in protecting chondrocytes from apoptotic death by associating with cytochrome C and interfering with apoptosome assembly.</text>
</comment>
<comment type="function">
    <text evidence="39">(Microbial infection) In case of HIV-1 infection, interacts with and deacetylates the viral Tat protein. The viral Tat protein inhibits SIRT1 deacetylation activity toward RELA/NF-kappa-B p65, thereby potentiates its transcriptional activity and SIRT1 is proposed to contribute to T-cell hyperactivation during infection.</text>
</comment>
<comment type="catalytic activity">
    <reaction evidence="4 8 83 95 97 100 101">
        <text>N(6)-acetyl-L-lysyl-[protein] + NAD(+) + H2O = 2''-O-acetyl-ADP-D-ribose + nicotinamide + L-lysyl-[protein]</text>
        <dbReference type="Rhea" id="RHEA:43636"/>
        <dbReference type="Rhea" id="RHEA-COMP:9752"/>
        <dbReference type="Rhea" id="RHEA-COMP:10731"/>
        <dbReference type="ChEBI" id="CHEBI:15377"/>
        <dbReference type="ChEBI" id="CHEBI:17154"/>
        <dbReference type="ChEBI" id="CHEBI:29969"/>
        <dbReference type="ChEBI" id="CHEBI:57540"/>
        <dbReference type="ChEBI" id="CHEBI:61930"/>
        <dbReference type="ChEBI" id="CHEBI:83767"/>
        <dbReference type="EC" id="2.3.1.286"/>
    </reaction>
</comment>
<comment type="catalytic activity">
    <reaction evidence="3">
        <text>N(6)-propanoyl-L-lysyl-[protein] + NAD(+) + H2O = 3''-O-propanoyl-ADP-D-ribose + nicotinamide + L-lysyl-[protein]</text>
        <dbReference type="Rhea" id="RHEA:23500"/>
        <dbReference type="Rhea" id="RHEA-COMP:9752"/>
        <dbReference type="Rhea" id="RHEA-COMP:13758"/>
        <dbReference type="ChEBI" id="CHEBI:15377"/>
        <dbReference type="ChEBI" id="CHEBI:17154"/>
        <dbReference type="ChEBI" id="CHEBI:29969"/>
        <dbReference type="ChEBI" id="CHEBI:57540"/>
        <dbReference type="ChEBI" id="CHEBI:138019"/>
        <dbReference type="ChEBI" id="CHEBI:145015"/>
    </reaction>
    <physiologicalReaction direction="left-to-right" evidence="3">
        <dbReference type="Rhea" id="RHEA:23501"/>
    </physiologicalReaction>
</comment>
<comment type="catalytic activity">
    <reaction evidence="92">
        <text>N(6)-(2E)-butenoyl-L-lysyl-[protein] + NAD(+) + H2O = 2''-O-(2E)-but-2-enoyl-ADP-D-ribose + nicotinamide + L-lysyl-[protein]</text>
        <dbReference type="Rhea" id="RHEA:69332"/>
        <dbReference type="Rhea" id="RHEA-COMP:9752"/>
        <dbReference type="Rhea" id="RHEA-COMP:13707"/>
        <dbReference type="ChEBI" id="CHEBI:15377"/>
        <dbReference type="ChEBI" id="CHEBI:17154"/>
        <dbReference type="ChEBI" id="CHEBI:29969"/>
        <dbReference type="ChEBI" id="CHEBI:57540"/>
        <dbReference type="ChEBI" id="CHEBI:137954"/>
        <dbReference type="ChEBI" id="CHEBI:183235"/>
    </reaction>
    <physiologicalReaction direction="left-to-right" evidence="92">
        <dbReference type="Rhea" id="RHEA:69333"/>
    </physiologicalReaction>
</comment>
<comment type="catalytic activity">
    <reaction evidence="103">
        <text>N(6)-[(S)-lactoyl]-L-lysyl-[protein] + NAD(+) + H2O = 2''-O-(S)-lactoyl-ADP-D-ribose + nicotinamide + L-lysyl-[protein]</text>
        <dbReference type="Rhea" id="RHEA:80287"/>
        <dbReference type="Rhea" id="RHEA-COMP:9752"/>
        <dbReference type="Rhea" id="RHEA-COMP:19466"/>
        <dbReference type="ChEBI" id="CHEBI:15377"/>
        <dbReference type="ChEBI" id="CHEBI:17154"/>
        <dbReference type="ChEBI" id="CHEBI:29969"/>
        <dbReference type="ChEBI" id="CHEBI:57540"/>
        <dbReference type="ChEBI" id="CHEBI:231484"/>
        <dbReference type="ChEBI" id="CHEBI:231527"/>
    </reaction>
    <physiologicalReaction direction="left-to-right" evidence="103">
        <dbReference type="Rhea" id="RHEA:80288"/>
    </physiologicalReaction>
</comment>
<comment type="cofactor">
    <cofactor evidence="2">
        <name>Zn(2+)</name>
        <dbReference type="ChEBI" id="CHEBI:29105"/>
    </cofactor>
    <text evidence="2">Binds 1 zinc ion per subunit.</text>
</comment>
<comment type="activity regulation">
    <text evidence="9 11 36 37">Inhibited by nicotinamide. Activated by resveratrol (3,5,4'-trihydroxy-trans-stilbene), butein (3,4,2',4'-tetrahydroxychalcone), piceatannol (3,5,3',4'-tetrahydroxy-trans-stilbene), Isoliquiritigenin (4,2',4'-trihydroxychalcone), fisetin (3,7,3',4'-tetrahydroxyflavone) and quercetin (3,5,7,3',4'-pentahydroxyflavone). MAPK8/JNK1 and RPS19BP1/AROS act as positive regulators of deacetylation activity. Negatively regulated by CCAR2.</text>
</comment>
<comment type="subunit">
    <text evidence="3 8 10 18 19 22 23 31 33 36 37 40 48 50 53 57 59 63 64 67 71 77 78 85 86 89 90 91 93 94 98 102">Interacts with XBP1 isoform 2 (PubMed:20955178). Found in a complex with PCAF and MYOD1. Interacts with FOXO1; the interaction deacetylates FOXO1, resulting in its nuclear retention and promotion of its transcriptional activity Component of the eNoSC complex, composed of SIRT1, SUV39H1 and RRP8. Interacts with HES1, HEY2 and PML. Interacts with RPS19BP1/AROS. Interacts with CCAR2 (via N-terminus); the interaction disrupts the interaction between SIRT1 and p53/TP53. Interacts with SETD7; the interaction induces the dissociation of SIRT1 from p53/TP53 and increases p53/TP53 activity. Interacts with MYCN, NR1I2, CREBZF, TSC2, TLE1, FOS, JUN, NR0B2, PPARG, NCOR, IRS1, IRS2 and NMNAT1. Interacts with HNF1A; the interaction occurs under nutrient restriction. Interacts with SUZ12; the interaction mediates the association with the PRC4 histone methylation complex which is specific as an association with PCR2 and PCR3 complex variants is not found. Interacts with BCL6; leads to a epigenetic repression of specific target genes. Interacts with CLOCK, BMAL1 and PER2 (By similarity). Interacts with PPARA; the interaction seems to be modulated by NAD(+) levels (PubMed:24043310). Interacts with NR1H3 and this interaction is inhibited in the presence of CCAR2. Interacts with CHEK2. Interacts with p53/TP53. Exhibits a preferential interaction with sumoylated CCAR2 over its unmodified form. Interacts with PACS2 (PubMed:29656858). Interacts with SIRT7 (By similarity). Interacts with PUS7 (PubMed:31451225). Interacts with TULP3 (PubMed:35397207). Interacts with MORN3; the interaction enhances the ubiquitination of p53/TP53 (PubMed:29681526).</text>
</comment>
<comment type="subunit">
    <text evidence="20 39">(Microbial infection) Interacts with HIV-1 Tat.</text>
</comment>
<comment type="interaction">
    <interactant intactId="EBI-1802965">
        <id>Q96EB6</id>
    </interactant>
    <interactant intactId="EBI-717681">
        <id>Q13085</id>
        <label>ACACA</label>
    </interactant>
    <organismsDiffer>false</organismsDiffer>
    <experiments>3</experiments>
</comment>
<comment type="interaction">
    <interactant intactId="EBI-1802965">
        <id>Q96EB6</id>
    </interactant>
    <interactant intactId="EBI-296087">
        <id>P31749</id>
        <label>AKT1</label>
    </interactant>
    <organismsDiffer>false</organismsDiffer>
    <experiments>5</experiments>
</comment>
<comment type="interaction">
    <interactant intactId="EBI-1802965">
        <id>Q96EB6</id>
    </interactant>
    <interactant intactId="EBI-1048805">
        <id>P27695</id>
        <label>APEX1</label>
    </interactant>
    <organismsDiffer>false</organismsDiffer>
    <experiments>6</experiments>
</comment>
<comment type="interaction">
    <interactant intactId="EBI-1802965">
        <id>Q96EB6</id>
    </interactant>
    <interactant intactId="EBI-987834">
        <id>O95352</id>
        <label>ATG7</label>
    </interactant>
    <organismsDiffer>false</organismsDiffer>
    <experiments>3</experiments>
</comment>
<comment type="interaction">
    <interactant intactId="EBI-1802965">
        <id>Q96EB6</id>
    </interactant>
    <interactant intactId="EBI-355410">
        <id>Q8N163</id>
        <label>CCAR2</label>
    </interactant>
    <organismsDiffer>false</organismsDiffer>
    <experiments>16</experiments>
</comment>
<comment type="interaction">
    <interactant intactId="EBI-1802965">
        <id>Q96EB6</id>
    </interactant>
    <interactant intactId="EBI-1538819">
        <id>P33076</id>
        <label>CIITA</label>
    </interactant>
    <organismsDiffer>false</organismsDiffer>
    <experiments>4</experiments>
</comment>
<comment type="interaction">
    <interactant intactId="EBI-1802965">
        <id>Q96EB6</id>
    </interactant>
    <interactant intactId="EBI-632965">
        <id>Q9NS37</id>
        <label>CREBZF</label>
    </interactant>
    <organismsDiffer>false</organismsDiffer>
    <experiments>3</experiments>
</comment>
<comment type="interaction">
    <interactant intactId="EBI-1802965">
        <id>Q96EB6</id>
    </interactant>
    <interactant intactId="EBI-26354757">
        <id>Q9Y5P2</id>
        <label>CSAG3</label>
    </interactant>
    <organismsDiffer>false</organismsDiffer>
    <experiments>8</experiments>
</comment>
<comment type="interaction">
    <interactant intactId="EBI-1802965">
        <id>Q96EB6</id>
    </interactant>
    <interactant intactId="EBI-347804">
        <id>P68400</id>
        <label>CSNK2A1</label>
    </interactant>
    <organismsDiffer>false</organismsDiffer>
    <experiments>5</experiments>
</comment>
<comment type="interaction">
    <interactant intactId="EBI-1802965">
        <id>Q96EB6</id>
    </interactant>
    <interactant intactId="EBI-348169">
        <id>P67870</id>
        <label>CSNK2B</label>
    </interactant>
    <organismsDiffer>false</organismsDiffer>
    <experiments>5</experiments>
</comment>
<comment type="interaction">
    <interactant intactId="EBI-1802965">
        <id>Q96EB6</id>
    </interactant>
    <interactant intactId="EBI-719459">
        <id>P26358</id>
        <label>DNMT1</label>
    </interactant>
    <organismsDiffer>false</organismsDiffer>
    <experiments>11</experiments>
</comment>
<comment type="interaction">
    <interactant intactId="EBI-1802965">
        <id>Q96EB6</id>
    </interactant>
    <interactant intactId="EBI-723489">
        <id>O14640</id>
        <label>DVL1</label>
    </interactant>
    <organismsDiffer>false</organismsDiffer>
    <experiments>2</experiments>
</comment>
<comment type="interaction">
    <interactant intactId="EBI-1802965">
        <id>Q96EB6</id>
    </interactant>
    <interactant intactId="EBI-739789">
        <id>Q92997</id>
        <label>DVL3</label>
    </interactant>
    <organismsDiffer>false</organismsDiffer>
    <experiments>3</experiments>
</comment>
<comment type="interaction">
    <interactant intactId="EBI-1802965">
        <id>Q96EB6</id>
    </interactant>
    <interactant intactId="EBI-448924">
        <id>Q01094</id>
        <label>E2F1</label>
    </interactant>
    <organismsDiffer>false</organismsDiffer>
    <experiments>3</experiments>
</comment>
<comment type="interaction">
    <interactant intactId="EBI-1802965">
        <id>Q96EB6</id>
    </interactant>
    <interactant intactId="EBI-447295">
        <id>Q09472</id>
        <label>EP300</label>
    </interactant>
    <organismsDiffer>false</organismsDiffer>
    <experiments>4</experiments>
</comment>
<comment type="interaction">
    <interactant intactId="EBI-1802965">
        <id>Q96EB6</id>
    </interactant>
    <interactant intactId="EBI-701903">
        <id>Q14192</id>
        <label>FHL2</label>
    </interactant>
    <organismsDiffer>false</organismsDiffer>
    <experiments>2</experiments>
</comment>
<comment type="interaction">
    <interactant intactId="EBI-1802965">
        <id>Q96EB6</id>
    </interactant>
    <interactant intactId="EBI-1108782">
        <id>Q12778</id>
        <label>FOXO1</label>
    </interactant>
    <organismsDiffer>false</organismsDiffer>
    <experiments>4</experiments>
</comment>
<comment type="interaction">
    <interactant intactId="EBI-1802965">
        <id>Q96EB6</id>
    </interactant>
    <interactant intactId="EBI-1644164">
        <id>O43524</id>
        <label>FOXO3</label>
    </interactant>
    <organismsDiffer>false</organismsDiffer>
    <experiments>5</experiments>
</comment>
<comment type="interaction">
    <interactant intactId="EBI-1802965">
        <id>Q96EB6</id>
    </interactant>
    <interactant intactId="EBI-4481939">
        <id>P98177</id>
        <label>FOXO4</label>
    </interactant>
    <organismsDiffer>false</organismsDiffer>
    <experiments>3</experiments>
</comment>
<comment type="interaction">
    <interactant intactId="EBI-1802965">
        <id>Q96EB6</id>
    </interactant>
    <interactant intactId="EBI-396176">
        <id>P51610</id>
        <label>HCFC1</label>
    </interactant>
    <organismsDiffer>false</organismsDiffer>
    <experiments>2</experiments>
</comment>
<comment type="interaction">
    <interactant intactId="EBI-1802965">
        <id>Q96EB6</id>
    </interactant>
    <interactant intactId="EBI-2832522">
        <id>Q14469</id>
        <label>HES1</label>
    </interactant>
    <organismsDiffer>false</organismsDiffer>
    <experiments>4</experiments>
</comment>
<comment type="interaction">
    <interactant intactId="EBI-1802965">
        <id>Q96EB6</id>
    </interactant>
    <interactant intactId="EBI-750630">
        <id>Q9UBP5</id>
        <label>HEY2</label>
    </interactant>
    <organismsDiffer>false</organismsDiffer>
    <experiments>3</experiments>
</comment>
<comment type="interaction">
    <interactant intactId="EBI-1802965">
        <id>Q96EB6</id>
    </interactant>
    <interactant intactId="EBI-3893317">
        <id>P09067</id>
        <label>HOXB5</label>
    </interactant>
    <organismsDiffer>false</organismsDiffer>
    <experiments>3</experiments>
</comment>
<comment type="interaction">
    <interactant intactId="EBI-1802965">
        <id>Q96EB6</id>
    </interactant>
    <interactant intactId="EBI-1049582">
        <id>Q9Y4H2</id>
        <label>IRS2</label>
    </interactant>
    <organismsDiffer>false</organismsDiffer>
    <experiments>2</experiments>
</comment>
<comment type="interaction">
    <interactant intactId="EBI-1802965">
        <id>Q96EB6</id>
    </interactant>
    <interactant intactId="EBI-477430">
        <id>Q92831</id>
        <label>KAT2B</label>
    </interactant>
    <organismsDiffer>false</organismsDiffer>
    <experiments>3</experiments>
</comment>
<comment type="interaction">
    <interactant intactId="EBI-1802965">
        <id>Q96EB6</id>
    </interactant>
    <interactant intactId="EBI-591370">
        <id>Q03164</id>
        <label>KMT2A</label>
    </interactant>
    <organismsDiffer>false</organismsDiffer>
    <experiments>5</experiments>
</comment>
<comment type="interaction">
    <interactant intactId="EBI-1802965">
        <id>Q96EB6</id>
    </interactant>
    <interactant intactId="EBI-373144">
        <id>Q9GZQ8</id>
        <label>MAP1LC3B</label>
    </interactant>
    <organismsDiffer>false</organismsDiffer>
    <experiments>2</experiments>
</comment>
<comment type="interaction">
    <interactant intactId="EBI-1802965">
        <id>Q96EB6</id>
    </interactant>
    <interactant intactId="EBI-1384862">
        <id>Q03112</id>
        <label>MECOM</label>
    </interactant>
    <organismsDiffer>false</organismsDiffer>
    <experiments>2</experiments>
</comment>
<comment type="interaction">
    <interactant intactId="EBI-1802965">
        <id>Q96EB6</id>
    </interactant>
    <interactant intactId="EBI-359260">
        <id>P42345</id>
        <label>MTOR</label>
    </interactant>
    <organismsDiffer>false</organismsDiffer>
    <experiments>2</experiments>
</comment>
<comment type="interaction">
    <interactant intactId="EBI-1802965">
        <id>Q96EB6</id>
    </interactant>
    <interactant intactId="EBI-447544">
        <id>P01106</id>
        <label>MYC</label>
    </interactant>
    <organismsDiffer>false</organismsDiffer>
    <experiments>4</experiments>
</comment>
<comment type="interaction">
    <interactant intactId="EBI-1802965">
        <id>Q96EB6</id>
    </interactant>
    <interactant intactId="EBI-878369">
        <id>P04198</id>
        <label>MYCN</label>
    </interactant>
    <organismsDiffer>false</organismsDiffer>
    <experiments>3</experiments>
</comment>
<comment type="interaction">
    <interactant intactId="EBI-1802965">
        <id>Q96EB6</id>
    </interactant>
    <interactant intactId="EBI-494844">
        <id>O60934</id>
        <label>NBN</label>
    </interactant>
    <organismsDiffer>false</organismsDiffer>
    <experiments>5</experiments>
</comment>
<comment type="interaction">
    <interactant intactId="EBI-1802965">
        <id>Q96EB6</id>
    </interactant>
    <interactant intactId="EBI-5378683">
        <id>Q02577</id>
        <label>NHLH2</label>
    </interactant>
    <organismsDiffer>false</organismsDiffer>
    <experiments>2</experiments>
</comment>
<comment type="interaction">
    <interactant intactId="EBI-1802965">
        <id>Q96EB6</id>
    </interactant>
    <interactant intactId="EBI-3917542">
        <id>Q9HAN9</id>
        <label>NMNAT1</label>
    </interactant>
    <organismsDiffer>false</organismsDiffer>
    <experiments>3</experiments>
</comment>
<comment type="interaction">
    <interactant intactId="EBI-1802965">
        <id>Q96EB6</id>
    </interactant>
    <interactant intactId="EBI-3910729">
        <id>Q15466</id>
        <label>NR0B2</label>
    </interactant>
    <organismsDiffer>false</organismsDiffer>
    <experiments>6</experiments>
</comment>
<comment type="interaction">
    <interactant intactId="EBI-1802965">
        <id>Q96EB6</id>
    </interactant>
    <interactant intactId="EBI-79464">
        <id>P27986</id>
        <label>PIK3R1</label>
    </interactant>
    <organismsDiffer>false</organismsDiffer>
    <experiments>3</experiments>
</comment>
<comment type="interaction">
    <interactant intactId="EBI-1802965">
        <id>Q96EB6</id>
    </interactant>
    <interactant intactId="EBI-781384">
        <id>P37231</id>
        <label>PPARG</label>
    </interactant>
    <organismsDiffer>false</organismsDiffer>
    <experiments>5</experiments>
</comment>
<comment type="interaction">
    <interactant intactId="EBI-1802965">
        <id>Q96EB6</id>
    </interactant>
    <interactant intactId="EBI-413374">
        <id>P10276</id>
        <label>RARA</label>
    </interactant>
    <organismsDiffer>false</organismsDiffer>
    <experiments>3</experiments>
</comment>
<comment type="interaction">
    <interactant intactId="EBI-1802965">
        <id>Q96EB6</id>
    </interactant>
    <interactant intactId="EBI-73886">
        <id>Q04206</id>
        <label>RELA</label>
    </interactant>
    <organismsDiffer>false</organismsDiffer>
    <experiments>5</experiments>
</comment>
<comment type="interaction">
    <interactant intactId="EBI-1802965">
        <id>Q96EB6</id>
    </interactant>
    <interactant intactId="EBI-4479407">
        <id>Q86WX3</id>
        <label>RPS19BP1</label>
    </interactant>
    <organismsDiffer>false</organismsDiffer>
    <experiments>11</experiments>
</comment>
<comment type="interaction">
    <interactant intactId="EBI-1802965">
        <id>Q96EB6</id>
    </interactant>
    <interactant intactId="EBI-1567928">
        <id>Q8N122</id>
        <label>RPTOR</label>
    </interactant>
    <organismsDiffer>false</organismsDiffer>
    <experiments>3</experiments>
</comment>
<comment type="interaction">
    <interactant intactId="EBI-1802965">
        <id>Q96EB6</id>
    </interactant>
    <interactant intactId="EBI-2008793">
        <id>O43159</id>
        <label>RRP8</label>
    </interactant>
    <organismsDiffer>false</organismsDiffer>
    <experiments>3</experiments>
</comment>
<comment type="interaction">
    <interactant intactId="EBI-1802965">
        <id>Q96EB6</id>
    </interactant>
    <interactant intactId="EBI-1268586">
        <id>Q8WTS6</id>
        <label>SETD7</label>
    </interactant>
    <organismsDiffer>false</organismsDiffer>
    <experiments>11</experiments>
</comment>
<comment type="interaction">
    <interactant intactId="EBI-1802965">
        <id>Q96EB6</id>
    </interactant>
    <interactant intactId="EBI-632715">
        <id>Q13573</id>
        <label>SNW1</label>
    </interactant>
    <organismsDiffer>false</organismsDiffer>
    <experiments>7</experiments>
</comment>
<comment type="interaction">
    <interactant intactId="EBI-1802965">
        <id>Q96EB6</id>
    </interactant>
    <interactant intactId="EBI-948338">
        <id>P36956-3</id>
        <label>SREBF1</label>
    </interactant>
    <organismsDiffer>false</organismsDiffer>
    <experiments>2</experiments>
</comment>
<comment type="interaction">
    <interactant intactId="EBI-1802965">
        <id>Q96EB6</id>
    </interactant>
    <interactant intactId="EBI-349968">
        <id>O43463</id>
        <label>SUV39H1</label>
    </interactant>
    <organismsDiffer>false</organismsDiffer>
    <experiments>5</experiments>
</comment>
<comment type="interaction">
    <interactant intactId="EBI-1802965">
        <id>Q96EB6</id>
    </interactant>
    <interactant intactId="EBI-711424">
        <id>Q04724</id>
        <label>TLE1</label>
    </interactant>
    <organismsDiffer>false</organismsDiffer>
    <experiments>4</experiments>
</comment>
<comment type="interaction">
    <interactant intactId="EBI-1802965">
        <id>Q96EB6</id>
    </interactant>
    <interactant intactId="EBI-366083">
        <id>P04637</id>
        <label>TP53</label>
    </interactant>
    <organismsDiffer>false</organismsDiffer>
    <experiments>18</experiments>
</comment>
<comment type="interaction">
    <interactant intactId="EBI-1802965">
        <id>Q96EB6</id>
    </interactant>
    <interactant intactId="EBI-389606">
        <id>O15350</id>
        <label>TP73</label>
    </interactant>
    <organismsDiffer>false</organismsDiffer>
    <experiments>4</experiments>
</comment>
<comment type="interaction">
    <interactant intactId="EBI-1802965">
        <id>Q96EB6</id>
    </interactant>
    <interactant intactId="EBI-396587">
        <id>P49815</id>
        <label>TSC2</label>
    </interactant>
    <organismsDiffer>false</organismsDiffer>
    <experiments>2</experiments>
</comment>
<comment type="interaction">
    <interactant intactId="EBI-1802965">
        <id>Q96EB6</id>
    </interactant>
    <interactant intactId="EBI-368417">
        <id>Q14191</id>
        <label>WRN</label>
    </interactant>
    <organismsDiffer>false</organismsDiffer>
    <experiments>9</experiments>
</comment>
<comment type="interaction">
    <interactant intactId="EBI-1802965">
        <id>Q96EB6</id>
    </interactant>
    <interactant intactId="EBI-295222">
        <id>P23025</id>
        <label>XPA</label>
    </interactant>
    <organismsDiffer>false</organismsDiffer>
    <experiments>8</experiments>
</comment>
<comment type="interaction">
    <interactant intactId="EBI-1802965">
        <id>Q96EB6</id>
    </interactant>
    <interactant intactId="EBI-353208">
        <id>P12956</id>
        <label>XRCC6</label>
    </interactant>
    <organismsDiffer>false</organismsDiffer>
    <experiments>7</experiments>
</comment>
<comment type="interaction">
    <interactant intactId="EBI-1802965">
        <id>Q96EB6</id>
    </interactant>
    <interactant intactId="EBI-5235984">
        <id>Q8NAP3</id>
        <label>ZBTB38</label>
    </interactant>
    <organismsDiffer>false</organismsDiffer>
    <experiments>3</experiments>
</comment>
<comment type="interaction">
    <interactant intactId="EBI-1802965">
        <id>Q96EB6</id>
    </interactant>
    <interactant intactId="EBI-10746567">
        <id>P52744</id>
        <label>ZNF138</label>
    </interactant>
    <organismsDiffer>false</organismsDiffer>
    <experiments>2</experiments>
</comment>
<comment type="interaction">
    <interactant intactId="EBI-1802965">
        <id>Q96EB6</id>
    </interactant>
    <interactant intactId="EBI-5667494">
        <id>Q6ZN11</id>
        <label>ZNF793</label>
    </interactant>
    <organismsDiffer>false</organismsDiffer>
    <experiments>2</experiments>
</comment>
<comment type="interaction">
    <interactant intactId="EBI-1802965">
        <id>Q96EB6</id>
    </interactant>
    <interactant intactId="EBI-1371343">
        <id>Q9R1E0</id>
        <label>Foxo1</label>
    </interactant>
    <organismsDiffer>true</organismsDiffer>
    <experiments>2</experiments>
</comment>
<comment type="interaction">
    <interactant intactId="EBI-1802965">
        <id>Q96EB6</id>
    </interactant>
    <interactant intactId="EBI-349004">
        <id>Q60974</id>
        <label>Ncor1</label>
    </interactant>
    <organismsDiffer>true</organismsDiffer>
    <experiments>2</experiments>
</comment>
<comment type="interaction">
    <interactant intactId="EBI-1802965">
        <id>Q96EB6</id>
    </interactant>
    <interactant intactId="EBI-5276809">
        <id>Q60644</id>
        <label>Nr1h2</label>
    </interactant>
    <organismsDiffer>true</organismsDiffer>
    <experiments>2</experiments>
</comment>
<comment type="interaction">
    <interactant intactId="EBI-1802965">
        <id>Q96EB6</id>
    </interactant>
    <interactant intactId="EBI-5276764">
        <id>Q9Z0Y9</id>
        <label>Nr1h3</label>
    </interactant>
    <organismsDiffer>true</organismsDiffer>
    <experiments>2</experiments>
</comment>
<comment type="interaction">
    <interactant intactId="EBI-1802965">
        <id>Q96EB6</id>
    </interactant>
    <interactant intactId="EBI-5260705">
        <id>P37238</id>
        <label>Pparg</label>
    </interactant>
    <organismsDiffer>true</organismsDiffer>
    <experiments>3</experiments>
</comment>
<comment type="interaction">
    <interactant intactId="EBI-1802965">
        <id>Q96EB6</id>
    </interactant>
    <interactant intactId="EBI-6267861">
        <id>P37238-1</id>
        <label>Pparg</label>
    </interactant>
    <organismsDiffer>true</organismsDiffer>
    <experiments>2</experiments>
</comment>
<comment type="interaction">
    <interactant intactId="EBI-1802965">
        <id>Q96EB6</id>
    </interactant>
    <interactant intactId="EBI-6164389">
        <id>P04608</id>
        <label>tat</label>
    </interactant>
    <organismsDiffer>true</organismsDiffer>
    <experiments>3</experiments>
</comment>
<comment type="subcellular location">
    <subcellularLocation>
        <location evidence="8">Nucleus</location>
        <location evidence="8">PML body</location>
    </subcellularLocation>
    <subcellularLocation>
        <location evidence="52">Cytoplasm</location>
    </subcellularLocation>
    <subcellularLocation>
        <location evidence="7 17 21 51 52 56 63">Nucleus</location>
    </subcellularLocation>
    <text evidence="3 8 17 51 63">Recruited to the nuclear bodies via its interaction with PML (PubMed:12006491). Colocalized with APEX1 in the nucleus (PubMed:19934257). May be found in nucleolus, nuclear euchromatin, heterochromatin and inner membrane (PubMed:15469825). Shuttles between nucleus and cytoplasm (By similarity). Colocalizes in the nucleus with XBP1 isoform 2 (PubMed:20955178).</text>
</comment>
<comment type="subcellular location">
    <molecule>SirtT1 75 kDa fragment</molecule>
    <subcellularLocation>
        <location evidence="80">Cytoplasm</location>
    </subcellularLocation>
    <subcellularLocation>
        <location evidence="80">Mitochondrion</location>
    </subcellularLocation>
</comment>
<comment type="alternative products">
    <event type="alternative splicing"/>
    <isoform>
        <id>Q96EB6-1</id>
        <name>1</name>
        <sequence type="displayed"/>
    </isoform>
    <isoform>
        <id>Q96EB6-2</id>
        <name>2</name>
        <name>delta-exon8</name>
        <sequence type="described" ref="VSP_042189"/>
    </isoform>
</comment>
<comment type="tissue specificity">
    <text evidence="6">Widely expressed.</text>
</comment>
<comment type="induction">
    <text evidence="16 51">Up-regulated by methyl methanesulfonate (MMS). In H293T cells by presence of rat calorie restriction (CR) serum.</text>
</comment>
<comment type="PTM">
    <text evidence="67">Methylated on multiple lysine residues; methylation is enhanced after DNA damage and is dispensable for deacetylase activity toward p53/TP53.</text>
</comment>
<comment type="PTM">
    <text evidence="3 43 44 47 52 66 68">Phosphorylated. Phosphorylated by STK4/MST1, resulting in inhibition of SIRT1-mediated p53/TP53 deacetylation. Phosphorylation by MAPK8/JNK1 at Ser-27, Ser-47, and Thr-530 leads to increased nuclear localization and enzymatic activity. Phosphorylation at Thr-530 by DYRK1A and DYRK3 activates deacetylase activity and promotes cell survival. Phosphorylation by mammalian target of rapamycin complex 1 (mTORC1) at Ser-47 inhibits deacetylation activity. Phosphorylated by CaMK2, leading to increased p53/TP53 and NF-kappa-B p65/RELA deacetylation activity (By similarity). Phosphorylation at Ser-27 implicating MAPK9 is linked to protein stability. There is some ambiguity for some phosphosites: Ser-159/Ser-162 and Thr-544/Ser-545.</text>
</comment>
<comment type="PTM">
    <text evidence="80">Proteolytically cleaved by cathepsin B upon TNF-alpha treatment to yield catalytic inactive but stable SirtT1 75 kDa fragment (75SirT1).</text>
</comment>
<comment type="PTM">
    <text evidence="3">S-nitrosylated by GAPDH, leading to inhibit the NAD-dependent protein deacetylase activity.</text>
</comment>
<comment type="PTM">
    <text evidence="3">Acetylated at various Lys residues. Deacetylated via an autocatalytic mechanism. Autodeacetylation at Lys-238 promotes its protein deacetylase activity.</text>
</comment>
<comment type="PTM">
    <text evidence="82">Ubiquitinated; leading to degradation. Deubiquitinated by USP22; leading to stabilization.</text>
</comment>
<comment type="miscellaneous">
    <text>Red wine, which contains resveratrol, may participate in activation of sirtuin proteins, and may therefore participate in an extended lifespan as it has been observed in yeast.</text>
</comment>
<comment type="miscellaneous">
    <text evidence="108">Calf histone H1 is used as substrate in the in vitro deacetylation assay (PubMed:15469825). As, in vivo, interaction occurs between SIRT1 with H1-4, deacetylation has been validated only for H1-4.</text>
</comment>
<comment type="miscellaneous">
    <text evidence="110">The reported ADP-ribosyltransferase activity of sirtuins is likely some inefficient side reaction of the deacetylase activity and may not be physiologically relevant.</text>
</comment>
<comment type="similarity">
    <text evidence="107">Belongs to the sirtuin family. Class I subfamily.</text>
</comment>
<comment type="sequence caution" evidence="107">
    <conflict type="erroneous initiation">
        <sequence resource="EMBL-CDS" id="AAH12499"/>
    </conflict>
    <text>Truncated N-terminus.</text>
</comment>
<comment type="online information" name="Atlas of Genetics and Cytogenetics in Oncology and Haematology">
    <link uri="https://atlasgeneticsoncology.org/gene/44006/SIRT1"/>
</comment>
<reference key="1">
    <citation type="journal article" date="1999" name="Biochem. Biophys. Res. Commun.">
        <title>Characterization of five human cDNAs with homology to the yeast SIR2 gene: Sir2-like proteins (sirtuins) metabolize NAD and may have protein ADP-ribosyltransferase activity.</title>
        <authorList>
            <person name="Frye R.A."/>
        </authorList>
    </citation>
    <scope>NUCLEOTIDE SEQUENCE [MRNA]</scope>
    <scope>TISSUE SPECIFICITY</scope>
    <source>
        <tissue>Testis</tissue>
    </source>
</reference>
<reference key="2">
    <citation type="journal article" date="2003" name="Biochem. Biophys. Res. Commun.">
        <title>Human Sir2-related protein SIRT1 associates with the bHLH repressors HES1 and HEY2 and is involved in HES1- and HEY2-mediated transcriptional repression.</title>
        <authorList>
            <person name="Takata T."/>
            <person name="Ishikawa F."/>
        </authorList>
    </citation>
    <scope>NUCLEOTIDE SEQUENCE [MRNA]</scope>
    <scope>FUNCTION</scope>
    <scope>INTERACTION WITH HES1 AND HEY2</scope>
    <scope>MUTAGENESIS OF HIS-363</scope>
    <scope>ACTIVE SITE</scope>
</reference>
<reference key="3">
    <citation type="submission" date="2005-11" db="EMBL/GenBank/DDBJ databases">
        <authorList>
            <consortium name="NIEHS SNPs program"/>
        </authorList>
    </citation>
    <scope>NUCLEOTIDE SEQUENCE [GENOMIC DNA]</scope>
    <scope>VARIANT GLU-3</scope>
</reference>
<reference key="4">
    <citation type="journal article" date="2004" name="Nature">
        <title>The DNA sequence and comparative analysis of human chromosome 10.</title>
        <authorList>
            <person name="Deloukas P."/>
            <person name="Earthrowl M.E."/>
            <person name="Grafham D.V."/>
            <person name="Rubenfield M."/>
            <person name="French L."/>
            <person name="Steward C.A."/>
            <person name="Sims S.K."/>
            <person name="Jones M.C."/>
            <person name="Searle S."/>
            <person name="Scott C."/>
            <person name="Howe K."/>
            <person name="Hunt S.E."/>
            <person name="Andrews T.D."/>
            <person name="Gilbert J.G.R."/>
            <person name="Swarbreck D."/>
            <person name="Ashurst J.L."/>
            <person name="Taylor A."/>
            <person name="Battles J."/>
            <person name="Bird C.P."/>
            <person name="Ainscough R."/>
            <person name="Almeida J.P."/>
            <person name="Ashwell R.I.S."/>
            <person name="Ambrose K.D."/>
            <person name="Babbage A.K."/>
            <person name="Bagguley C.L."/>
            <person name="Bailey J."/>
            <person name="Banerjee R."/>
            <person name="Bates K."/>
            <person name="Beasley H."/>
            <person name="Bray-Allen S."/>
            <person name="Brown A.J."/>
            <person name="Brown J.Y."/>
            <person name="Burford D.C."/>
            <person name="Burrill W."/>
            <person name="Burton J."/>
            <person name="Cahill P."/>
            <person name="Camire D."/>
            <person name="Carter N.P."/>
            <person name="Chapman J.C."/>
            <person name="Clark S.Y."/>
            <person name="Clarke G."/>
            <person name="Clee C.M."/>
            <person name="Clegg S."/>
            <person name="Corby N."/>
            <person name="Coulson A."/>
            <person name="Dhami P."/>
            <person name="Dutta I."/>
            <person name="Dunn M."/>
            <person name="Faulkner L."/>
            <person name="Frankish A."/>
            <person name="Frankland J.A."/>
            <person name="Garner P."/>
            <person name="Garnett J."/>
            <person name="Gribble S."/>
            <person name="Griffiths C."/>
            <person name="Grocock R."/>
            <person name="Gustafson E."/>
            <person name="Hammond S."/>
            <person name="Harley J.L."/>
            <person name="Hart E."/>
            <person name="Heath P.D."/>
            <person name="Ho T.P."/>
            <person name="Hopkins B."/>
            <person name="Horne J."/>
            <person name="Howden P.J."/>
            <person name="Huckle E."/>
            <person name="Hynds C."/>
            <person name="Johnson C."/>
            <person name="Johnson D."/>
            <person name="Kana A."/>
            <person name="Kay M."/>
            <person name="Kimberley A.M."/>
            <person name="Kershaw J.K."/>
            <person name="Kokkinaki M."/>
            <person name="Laird G.K."/>
            <person name="Lawlor S."/>
            <person name="Lee H.M."/>
            <person name="Leongamornlert D.A."/>
            <person name="Laird G."/>
            <person name="Lloyd C."/>
            <person name="Lloyd D.M."/>
            <person name="Loveland J."/>
            <person name="Lovell J."/>
            <person name="McLaren S."/>
            <person name="McLay K.E."/>
            <person name="McMurray A."/>
            <person name="Mashreghi-Mohammadi M."/>
            <person name="Matthews L."/>
            <person name="Milne S."/>
            <person name="Nickerson T."/>
            <person name="Nguyen M."/>
            <person name="Overton-Larty E."/>
            <person name="Palmer S.A."/>
            <person name="Pearce A.V."/>
            <person name="Peck A.I."/>
            <person name="Pelan S."/>
            <person name="Phillimore B."/>
            <person name="Porter K."/>
            <person name="Rice C.M."/>
            <person name="Rogosin A."/>
            <person name="Ross M.T."/>
            <person name="Sarafidou T."/>
            <person name="Sehra H.K."/>
            <person name="Shownkeen R."/>
            <person name="Skuce C.D."/>
            <person name="Smith M."/>
            <person name="Standring L."/>
            <person name="Sycamore N."/>
            <person name="Tester J."/>
            <person name="Thorpe A."/>
            <person name="Torcasso W."/>
            <person name="Tracey A."/>
            <person name="Tromans A."/>
            <person name="Tsolas J."/>
            <person name="Wall M."/>
            <person name="Walsh J."/>
            <person name="Wang H."/>
            <person name="Weinstock K."/>
            <person name="West A.P."/>
            <person name="Willey D.L."/>
            <person name="Whitehead S.L."/>
            <person name="Wilming L."/>
            <person name="Wray P.W."/>
            <person name="Young L."/>
            <person name="Chen Y."/>
            <person name="Lovering R.C."/>
            <person name="Moschonas N.K."/>
            <person name="Siebert R."/>
            <person name="Fechtel K."/>
            <person name="Bentley D."/>
            <person name="Durbin R.M."/>
            <person name="Hubbard T."/>
            <person name="Doucette-Stamm L."/>
            <person name="Beck S."/>
            <person name="Smith D.R."/>
            <person name="Rogers J."/>
        </authorList>
    </citation>
    <scope>NUCLEOTIDE SEQUENCE [LARGE SCALE GENOMIC DNA]</scope>
</reference>
<reference key="5">
    <citation type="journal article" date="2004" name="Genome Res.">
        <title>The status, quality, and expansion of the NIH full-length cDNA project: the Mammalian Gene Collection (MGC).</title>
        <authorList>
            <consortium name="The MGC Project Team"/>
        </authorList>
    </citation>
    <scope>NUCLEOTIDE SEQUENCE [LARGE SCALE MRNA] OF 124-747</scope>
    <source>
        <tissue>Prostate</tissue>
    </source>
</reference>
<reference key="6">
    <citation type="journal article" date="2001" name="Cell">
        <title>hSIR2(SIRT1) functions as an NAD-dependent p53 deacetylase.</title>
        <authorList>
            <person name="Vaziri H."/>
            <person name="Dessain S.K."/>
            <person name="Ng Eaton E."/>
            <person name="Imai S."/>
            <person name="Frye R.A."/>
            <person name="Pandita T.K."/>
            <person name="Guarente L."/>
            <person name="Weinberg R.A."/>
        </authorList>
    </citation>
    <scope>FUNCTION IN DEACETYLATION OF TP53</scope>
    <scope>SUBCELLULAR LOCATION</scope>
    <scope>MUTAGENESIS OF HIS-363</scope>
    <scope>ACTIVE SITE</scope>
</reference>
<reference key="7">
    <citation type="journal article" date="2002" name="EMBO J.">
        <title>Human SIR2 deacetylates p53 and antagonizes PML/p53-induced cellular senescence.</title>
        <authorList>
            <person name="Langley E."/>
            <person name="Pearson M."/>
            <person name="Faretta M."/>
            <person name="Bauer U.-M."/>
            <person name="Frye R.A."/>
            <person name="Minucci S."/>
            <person name="Pelicci P.G."/>
            <person name="Kouzarides T."/>
        </authorList>
    </citation>
    <scope>FUNCTION</scope>
    <scope>ENZYME ACTIVITY</scope>
    <scope>SUBCELLULAR LOCATION</scope>
    <scope>INTERACTION WITH PML</scope>
    <scope>MUTAGENESIS OF HIS-363</scope>
    <scope>ACTIVE SITE</scope>
</reference>
<reference key="8">
    <citation type="journal article" date="2002" name="J. Biol. Chem.">
        <title>Inhibition of silencing and accelerated aging by nicotinamide, a putative negative regulator of yeast sir2 and human SIRT1.</title>
        <authorList>
            <person name="Bitterman K.J."/>
            <person name="Anderson R.M."/>
            <person name="Cohen H.Y."/>
            <person name="Latorre-Esteves M."/>
            <person name="Sinclair D.A."/>
        </authorList>
    </citation>
    <scope>ACTIVITY REGULATION</scope>
</reference>
<reference key="9">
    <citation type="journal article" date="2003" name="Nature">
        <title>Small molecule activators of sirtuins extend Saccharomyces cerevisiae lifespan.</title>
        <authorList>
            <person name="Howitz K.T."/>
            <person name="Bitterman K.J."/>
            <person name="Cohen H.Y."/>
            <person name="Lamming D.W."/>
            <person name="Lavu S."/>
            <person name="Wood J.G."/>
            <person name="Zipkin R.E."/>
            <person name="Chung P."/>
            <person name="Kisielewski A."/>
            <person name="Zhang L.-L."/>
            <person name="Scherer B."/>
            <person name="Sinclair D.A."/>
        </authorList>
    </citation>
    <scope>ACTIVITY REGULATION</scope>
</reference>
<reference key="10">
    <citation type="journal article" date="2004" name="EMBO J.">
        <title>Modulation of NF-kappaB-dependent transcription and cell survival by the SIRT1 deacetylase.</title>
        <authorList>
            <person name="Frye R.A."/>
            <person name="Mayo M.W."/>
        </authorList>
    </citation>
    <scope>FUNCTION</scope>
</reference>
<reference key="11">
    <citation type="journal article" date="2004" name="Cell">
        <title>Mammalian SIRT1 represses forkhead transcription factors.</title>
        <authorList>
            <person name="Motta M.C."/>
            <person name="Divecha N."/>
            <person name="Lemieux M."/>
            <person name="Kamel C."/>
            <person name="Chen D."/>
            <person name="Gu W."/>
            <person name="Bultsma Y."/>
            <person name="McBurney M."/>
            <person name="Guarente L."/>
        </authorList>
    </citation>
    <scope>FUNCTION IN DEACETYLATION OF FOXO3</scope>
    <scope>FUNCTION IN REGULATION OF FOXO3</scope>
</reference>
<reference key="12">
    <citation type="journal article" date="2004" name="J. Biol. Chem.">
        <title>FOXO4 is acetylated upon peroxide stress and deacetylated by the longevity protein hSir2(SIRT1).</title>
        <authorList>
            <person name="van der Horst A."/>
            <person name="Tertoolen L.G.J."/>
            <person name="de Vries-Smits L.M.M."/>
            <person name="Frye R.A."/>
            <person name="Medema R.H."/>
            <person name="Burgering B.M.T."/>
        </authorList>
    </citation>
    <scope>FUNCTION IN DEACETYLATION OF MLLT7</scope>
</reference>
<reference key="13">
    <citation type="journal article" date="2004" name="Mol. Cell">
        <title>Human SirT1 interacts with histone H1 and promotes formation of facultative heterochromatin.</title>
        <authorList>
            <person name="Vaquero A."/>
            <person name="Scher M."/>
            <person name="Lee D."/>
            <person name="Erdjument-Bromage H."/>
            <person name="Tempst P."/>
            <person name="Reinberg D."/>
        </authorList>
    </citation>
    <scope>FUNCTION</scope>
    <scope>SUBCELLULAR LOCATION</scope>
</reference>
<reference key="14">
    <citation type="journal article" date="2004" name="Science">
        <title>Stress-dependent regulation of FOXO transcription factors by the SIRT1 deacetylase.</title>
        <authorList>
            <person name="Brunet A."/>
            <person name="Sweeney L.B."/>
            <person name="Sturgill J.F."/>
            <person name="Chua K.F."/>
            <person name="Greer P.L."/>
            <person name="Lin Y."/>
            <person name="Tran H."/>
            <person name="Ross S.E."/>
            <person name="Mostoslavsky R."/>
            <person name="Cohen H.Y."/>
            <person name="Hu L.S."/>
            <person name="Cheng H.L."/>
            <person name="Jedrychowski M.P."/>
            <person name="Gygi S.P."/>
            <person name="Sinclair D.A."/>
            <person name="Alt F.W."/>
            <person name="Greenberg M.E."/>
        </authorList>
    </citation>
    <scope>FUNCTION IN DEACETYLATION OF FOXO3</scope>
    <scope>FUNCTION IN REGULATION OF FOXO3</scope>
</reference>
<reference key="15">
    <citation type="journal article" date="2004" name="Science">
        <title>Calorie restriction promotes mammalian cell survival by inducing the SIRT1 deacetylase.</title>
        <authorList>
            <person name="Cohen H.Y."/>
            <person name="Miller C."/>
            <person name="Bitterman K.J."/>
            <person name="Wall N.R."/>
            <person name="Hekking B."/>
            <person name="Kessler B."/>
            <person name="Howitz K.T."/>
            <person name="Gorospe M."/>
            <person name="de Cabo R."/>
            <person name="Sinclair D.A."/>
        </authorList>
    </citation>
    <scope>FUNCTION IN DEACETYLATION OF XRCC6</scope>
    <scope>INDUCTION BY CR</scope>
</reference>
<reference key="16">
    <citation type="journal article" date="2005" name="EMBO J.">
        <title>Suppression of FOXO1 activity by FHL2 through SIRT1-mediated deacetylation.</title>
        <authorList>
            <person name="Yang Y."/>
            <person name="Hou H."/>
            <person name="Haller E.M."/>
            <person name="Nicosia S.V."/>
            <person name="Bai W."/>
        </authorList>
    </citation>
    <scope>INTERACTION WITH FHL2</scope>
    <scope>FUNCTION IN DEACETYLATION OF FOXO1</scope>
    <scope>FUNCTION IN REGULATION OF FOXO1</scope>
</reference>
<reference key="17">
    <citation type="journal article" date="2005" name="Mol. Biol. Cell">
        <title>Evolutionarily conserved and nonconserved cellular localizations and functions of human SIRT proteins.</title>
        <authorList>
            <person name="Michishita E."/>
            <person name="Park J.Y."/>
            <person name="Burneskis J.M."/>
            <person name="Barrett J.C."/>
            <person name="Horikawa I."/>
        </authorList>
    </citation>
    <scope>FUNCTION</scope>
    <scope>SUBCELLULAR LOCATION</scope>
</reference>
<reference key="18">
    <citation type="journal article" date="2005" name="Mol. Cell. Biol.">
        <title>Regulation of MEF2 by histone deacetylase 4- and SIRT1 deacetylase-mediated lysine modifications.</title>
        <authorList>
            <person name="Zhao X."/>
            <person name="Sternsdorf T."/>
            <person name="Bolger T.A."/>
            <person name="Evans R.M."/>
            <person name="Yao T.-P."/>
        </authorList>
    </citation>
    <scope>FUNCTION IN DEACETYLATION OF MEF2D</scope>
    <scope>INTERACTION WITH HDAC4</scope>
</reference>
<reference key="19">
    <citation type="journal article" date="2005" name="PLoS Biol.">
        <title>SIRT1 regulates HIV transcription via Tat deacetylation.</title>
        <authorList>
            <person name="Pagans S."/>
            <person name="Pedal A."/>
            <person name="North B.J."/>
            <person name="Kaehlcke K."/>
            <person name="Marshall B.L."/>
            <person name="Dorr A."/>
            <person name="Hetzer-Egger C."/>
            <person name="Henklein P."/>
            <person name="Frye R."/>
            <person name="McBurney M.W."/>
            <person name="Hruby H."/>
            <person name="Jung M."/>
            <person name="Verdin E."/>
            <person name="Ott M."/>
        </authorList>
    </citation>
    <scope>INTERACTION WITH HIV-1 TAT (MICROBIAL INFECTION)</scope>
</reference>
<reference key="20">
    <citation type="journal article" date="2005" name="Proc. Natl. Acad. Sci. U.S.A.">
        <title>Composition and histone substrates of polycomb repressive group complexes change during cellular differentiation.</title>
        <authorList>
            <person name="Kuzmichev A."/>
            <person name="Margueron R."/>
            <person name="Vaquero A."/>
            <person name="Preissner T.S."/>
            <person name="Scher M."/>
            <person name="Kirmizis A."/>
            <person name="Ouyang X."/>
            <person name="Brockdorff N."/>
            <person name="Abate-Shen C."/>
            <person name="Farnham P.J."/>
            <person name="Reinberg D."/>
        </authorList>
    </citation>
    <scope>ASSOCIATION WITH THE PRC4 COMPLEX</scope>
    <scope>INTERACTION WITH SUZ12</scope>
</reference>
<reference key="21">
    <citation type="journal article" date="2006" name="Nat. Biotechnol.">
        <title>A probability-based approach for high-throughput protein phosphorylation analysis and site localization.</title>
        <authorList>
            <person name="Beausoleil S.A."/>
            <person name="Villen J."/>
            <person name="Gerber S.A."/>
            <person name="Rush J."/>
            <person name="Gygi S.P."/>
        </authorList>
    </citation>
    <scope>PHOSPHORYLATION [LARGE SCALE ANALYSIS] AT SER-47</scope>
    <scope>IDENTIFICATION BY MASS SPECTROMETRY [LARGE SCALE ANALYSIS]</scope>
    <source>
        <tissue>Cervix carcinoma</tissue>
    </source>
</reference>
<reference key="22">
    <citation type="journal article" date="2006" name="Nat. Cell Biol.">
        <title>Interactions between E2F1 and SirT1 regulate apoptotic response to DNA damage.</title>
        <authorList>
            <person name="Wang C."/>
            <person name="Chen L."/>
            <person name="Hou X."/>
            <person name="Li Z."/>
            <person name="Kabra N."/>
            <person name="Ma Y."/>
            <person name="Nemoto S."/>
            <person name="Finkel T."/>
            <person name="Gu W."/>
            <person name="Cress W.D."/>
            <person name="Chen J."/>
        </authorList>
    </citation>
    <scope>FUNCTION</scope>
    <scope>INTERACTION WITH E2F1</scope>
</reference>
<reference key="23">
    <citation type="journal article" date="2007" name="Biochem. J.">
        <title>Deacetylation of the retinoblastoma tumour suppressor protein by SIRT1.</title>
        <authorList>
            <person name="Wong S."/>
            <person name="Weber J.D."/>
        </authorList>
    </citation>
    <scope>FUNCTION IN DEACETYLATION OF RB1</scope>
</reference>
<reference key="24">
    <citation type="journal article" date="2007" name="Biochem. J.">
        <title>Sirt1 interacts with transducin-like enhancer of split-1 to inhibit nuclear factor kappaB-mediated transcription.</title>
        <authorList>
            <person name="Ghosh H.S."/>
            <person name="Spencer J.V."/>
            <person name="Ng B."/>
            <person name="McBurney M.W."/>
            <person name="Robbins P.D."/>
        </authorList>
    </citation>
    <scope>INTERACTION WITH TLE1</scope>
</reference>
<reference key="25">
    <citation type="journal article" date="2007" name="EMBO J.">
        <title>Distinct C/EBPalpha motifs regulate lipogenic and gluconeogenic gene expression in vivo.</title>
        <authorList>
            <person name="Pedersen T.A."/>
            <person name="Bereshchenko O."/>
            <person name="Garcia-Silva S."/>
            <person name="Ermakova O."/>
            <person name="Kurz E."/>
            <person name="Mandrup S."/>
            <person name="Porse B.T."/>
            <person name="Nerlov C."/>
        </authorList>
    </citation>
    <scope>FUNCTION</scope>
    <scope>MUTAGENESIS OF HIS-363</scope>
    <scope>ACTIVE SITE</scope>
</reference>
<reference key="26">
    <citation type="journal article" date="2007" name="Exp. Mol. Med.">
        <title>SIRT1 promotes DNA repair activity and deacetylation of Ku70.</title>
        <authorList>
            <person name="Jeong J."/>
            <person name="Juhn K."/>
            <person name="Lee H."/>
            <person name="Kim S.H."/>
            <person name="Min B.H."/>
            <person name="Lee K.M."/>
            <person name="Cho M.H."/>
            <person name="Park G.H."/>
            <person name="Lee K.H."/>
        </authorList>
    </citation>
    <scope>FUNCTION IN DEACETYLATION OF XRCC6</scope>
    <scope>FUNCTION IN DNA REPAIR</scope>
</reference>
<reference key="27">
    <citation type="journal article" date="2007" name="J. Cell. Physiol.">
        <title>SIRT1 interacts with p73 and suppresses p73-dependent transcriptional activity.</title>
        <authorList>
            <person name="Dai J.M."/>
            <person name="Wang Z.Y."/>
            <person name="Sun D.C."/>
            <person name="Lin R.X."/>
            <person name="Wang S.Q."/>
        </authorList>
    </citation>
    <scope>FUNCTION IN DEACETYLATION OF TP73</scope>
    <scope>FUNCTION IN REGULATION OF TP73</scope>
</reference>
<reference key="28">
    <citation type="journal article" date="2007" name="Mol. Endocrinol.">
        <title>Sirtuin 1 is required for antagonist-induced transcriptional repression of androgen-responsive genes by the androgen receptor.</title>
        <authorList>
            <person name="Dai Y."/>
            <person name="Ngo D."/>
            <person name="Forman L.W."/>
            <person name="Qin D.C."/>
            <person name="Jacob J."/>
            <person name="Faller D.V."/>
        </authorList>
    </citation>
    <scope>FUNCTION IN AR-DEPENDENT REPRESSION</scope>
</reference>
<reference key="29">
    <citation type="journal article" date="2007" name="Mol. Cell">
        <title>Active regulator of SIRT1 cooperates with SIRT1 and facilitates suppression of p53 activity.</title>
        <authorList>
            <person name="Kim E.-J."/>
            <person name="Kho J.-H."/>
            <person name="Kang M.-R."/>
            <person name="Um S.-J."/>
        </authorList>
    </citation>
    <scope>INTERACTION WITH RPS19BP1</scope>
</reference>
<reference key="30">
    <citation type="journal article" date="2007" name="Mol. Cell">
        <authorList>
            <person name="Kim E.-J."/>
            <person name="Kho J.-H."/>
            <person name="Kang M.-R."/>
            <person name="Um S.-J."/>
        </authorList>
    </citation>
    <scope>ERRATUM OF PUBMED:17964266</scope>
</reference>
<reference key="31">
    <citation type="journal article" date="2007" name="Mol. Cell">
        <title>SIRT1 deacetylates and positively regulates the nuclear receptor LXR.</title>
        <authorList>
            <person name="Li X."/>
            <person name="Zhang S."/>
            <person name="Blander G."/>
            <person name="Tse J.G."/>
            <person name="Krieger M."/>
            <person name="Guarente L."/>
        </authorList>
    </citation>
    <scope>FUNCTION IN DEACETYLATION OF NR1H3 AND NR1H2</scope>
</reference>
<reference key="32">
    <citation type="journal article" date="2007" name="Mol. Cell">
        <title>SIRT1 regulates the function of the Nijmegen breakage syndrome protein.</title>
        <authorList>
            <person name="Yuan Z."/>
            <person name="Zhang X."/>
            <person name="Sengupta N."/>
            <person name="Lane W.S."/>
            <person name="Seto E."/>
        </authorList>
    </citation>
    <scope>FUNCTION IN DEACETYLATION OF NBN</scope>
    <scope>FUNCTION IN DNA REPAIR</scope>
</reference>
<reference key="33">
    <citation type="journal article" date="2007" name="Mol. Cell. Biol.">
        <title>An acetylation/deacetylation-SUMOylation switch through a phylogenetically conserved psiKXEP motif in the tumor suppressor HIC1 regulates transcriptional repression activity.</title>
        <authorList>
            <person name="Stankovic-Valentin N."/>
            <person name="Deltour S."/>
            <person name="Seeler J."/>
            <person name="Pinte S."/>
            <person name="Vergoten G."/>
            <person name="Guerardel C."/>
            <person name="Dejean A."/>
            <person name="Leprince D."/>
        </authorList>
    </citation>
    <scope>FUNCTION IN DEACETYLATION OF HIC1</scope>
</reference>
<reference key="34">
    <citation type="journal article" date="2007" name="Nature">
        <title>SIRT1 regulates the histone methyl-transferase SUV39H1 during heterochromatin formation.</title>
        <authorList>
            <person name="Vaquero A."/>
            <person name="Scher M."/>
            <person name="Erdjument-Bromage H."/>
            <person name="Tempst P."/>
            <person name="Serrano L."/>
            <person name="Reinberg D."/>
        </authorList>
    </citation>
    <scope>FUNCTION</scope>
    <scope>MUTAGENESIS OF HIS-363</scope>
    <scope>ACTIVE SITE</scope>
</reference>
<reference key="35">
    <citation type="journal article" date="2008" name="Cell">
        <title>SIRT1 regulates circadian clock gene expression through PER2 deacetylation.</title>
        <authorList>
            <person name="Asher G."/>
            <person name="Gatfield D."/>
            <person name="Stratmann M."/>
            <person name="Reinke H."/>
            <person name="Dibner C."/>
            <person name="Kreppel F."/>
            <person name="Mostoslavsky R."/>
            <person name="Alt F.W."/>
            <person name="Schibler U."/>
        </authorList>
    </citation>
    <scope>FUNCTION</scope>
</reference>
<reference key="36">
    <citation type="journal article" date="2008" name="Cell">
        <title>Epigenetic control of rDNA loci in response to intracellular energy status.</title>
        <authorList>
            <person name="Murayama A."/>
            <person name="Ohmori K."/>
            <person name="Fujimura A."/>
            <person name="Minami H."/>
            <person name="Yasuzawa-Tanaka K."/>
            <person name="Kuroda T."/>
            <person name="Oie S."/>
            <person name="Daitoku H."/>
            <person name="Okuwaki M."/>
            <person name="Nagata K."/>
            <person name="Fukamizu A."/>
            <person name="Kimura K."/>
            <person name="Shimizu T."/>
            <person name="Yanagisawa J."/>
        </authorList>
    </citation>
    <scope>IDENTIFICATION IN THE ENOSC COMPLEX</scope>
    <scope>FUNCTION</scope>
    <scope>MUTAGENESIS OF HIS-363</scope>
    <scope>ACTIVE SITE</scope>
</reference>
<reference key="37">
    <citation type="journal article" date="2008" name="Cell Cycle">
        <title>JNK2-dependent regulation of SIRT1 protein stability.</title>
        <authorList>
            <person name="Ford J."/>
            <person name="Ahmed S."/>
            <person name="Allison S."/>
            <person name="Jiang M."/>
            <person name="Milner J."/>
        </authorList>
    </citation>
    <scope>PHOSPHORYLATION AT SER-27 AND SER-47</scope>
</reference>
<reference key="38">
    <citation type="journal article" date="2008" name="Cell Host Microbe">
        <title>Human immunodeficiency virus type 1 Tat protein inhibits the SIRT1 deacetylase and induces T cell hyperactivation.</title>
        <authorList>
            <person name="Kwon H.S."/>
            <person name="Brent M.M."/>
            <person name="Getachew R."/>
            <person name="Jayakumar P."/>
            <person name="Chen L.F."/>
            <person name="Schnolzer M."/>
            <person name="McBurney M.W."/>
            <person name="Marmorstein R."/>
            <person name="Greene W.C."/>
            <person name="Ott M."/>
        </authorList>
    </citation>
    <scope>INTERACTION WITH HIV-1 TAT (MICROBIAL INFECTION)</scope>
    <scope>FUNCTION IN T-CELL ACTIVATION (MICROBIAL INFECTION)</scope>
</reference>
<reference key="39">
    <citation type="journal article" date="2008" name="J. Biol. Chem.">
        <title>Regulation of WRN protein cellular localization and enzymatic activities by SIRT1-mediated deacetylation.</title>
        <authorList>
            <person name="Li K."/>
            <person name="Casta A."/>
            <person name="Wang R."/>
            <person name="Lozada E."/>
            <person name="Fan W."/>
            <person name="Kane S."/>
            <person name="Ge Q."/>
            <person name="Gu W."/>
            <person name="Orren D."/>
            <person name="Luo J."/>
        </authorList>
    </citation>
    <scope>FUNCTION IN DEACETYLATION OF WRN</scope>
    <scope>FUNCTION IN DNA DAMAGE</scope>
</reference>
<reference key="40">
    <citation type="journal article" date="2008" name="J. Biol. Chem.">
        <title>SIRT1 modulation of the acetylation status, cytosolic localization, and activity of LKB1. Possible role in AMP-activated protein kinase activation.</title>
        <authorList>
            <person name="Lan F."/>
            <person name="Cacicedo J.M."/>
            <person name="Ruderman N."/>
            <person name="Ido Y."/>
        </authorList>
    </citation>
    <scope>FUNCTION IN DEACETYLATION OF STK11</scope>
</reference>
<reference key="41">
    <citation type="journal article" date="2008" name="Nature">
        <title>DBC1 is a negative regulator of SIRT1.</title>
        <authorList>
            <person name="Kim J.-E."/>
            <person name="Chen J."/>
            <person name="Lou Z."/>
        </authorList>
    </citation>
    <scope>INTERACTION WITH CCAR2</scope>
    <scope>ACTIVITY REGULATION</scope>
    <scope>MUTAGENESIS OF HIS-363</scope>
    <scope>ACTIVE SITE</scope>
    <scope>IDENTIFICATION BY MASS SPECTROMETRY</scope>
</reference>
<reference key="42">
    <citation type="journal article" date="2008" name="Nature">
        <title>Negative regulation of the deacetylase SIRT1 by DBC1.</title>
        <authorList>
            <person name="Zhao W."/>
            <person name="Kruse J.-P."/>
            <person name="Tang Y."/>
            <person name="Jung S.Y."/>
            <person name="Qin J."/>
            <person name="Gu W."/>
        </authorList>
    </citation>
    <scope>INTERACTION WITH CCAR2</scope>
    <scope>ACTIVITY REGULATION</scope>
</reference>
<reference key="43">
    <citation type="journal article" date="2008" name="PLoS ONE">
        <title>Phosphorylation regulates SIRT1 function.</title>
        <authorList>
            <person name="Sasaki T."/>
            <person name="Maier B."/>
            <person name="Koclega K.D."/>
            <person name="Chruszcz M."/>
            <person name="Gluba W."/>
            <person name="Stukenberg P.T."/>
            <person name="Minor W."/>
            <person name="Scrable H."/>
        </authorList>
    </citation>
    <scope>PHOSPHORYLATION AT SER-14; SER-26; SER-27; SER-47; SER-159; SER-162; SER-172; SER-173; THR-530; THR-544; SER-545; THR-719 AND SER-747</scope>
    <scope>MUTAGENESIS OF THR-530 AND SER-540</scope>
</reference>
<reference key="44">
    <citation type="journal article" date="2008" name="Proc. Natl. Acad. Sci. U.S.A.">
        <title>A quantitative atlas of mitotic phosphorylation.</title>
        <authorList>
            <person name="Dephoure N."/>
            <person name="Zhou C."/>
            <person name="Villen J."/>
            <person name="Beausoleil S.A."/>
            <person name="Bakalarski C.E."/>
            <person name="Elledge S.J."/>
            <person name="Gygi S.P."/>
        </authorList>
    </citation>
    <scope>PHOSPHORYLATION [LARGE SCALE ANALYSIS] AT THR-719</scope>
    <scope>IDENTIFICATION BY MASS SPECTROMETRY [LARGE SCALE ANALYSIS]</scope>
    <source>
        <tissue>Cervix carcinoma</tissue>
    </source>
</reference>
<reference key="45">
    <citation type="journal article" date="2008" name="Proc. Natl. Acad. Sci. U.S.A.">
        <title>A role for the NAD-dependent deacetylase Sirt1 in the regulation of autophagy.</title>
        <authorList>
            <person name="Lee I.H."/>
            <person name="Cao L."/>
            <person name="Mostoslavsky R."/>
            <person name="Lombard D.B."/>
            <person name="Liu J."/>
            <person name="Bruns N.E."/>
            <person name="Tsokos M."/>
            <person name="Alt F.W."/>
            <person name="Finkel T."/>
        </authorList>
    </citation>
    <scope>FUNCTION IN DEACETYLATION OF ATG5; ATG7 AND MAP1LC3B</scope>
    <scope>FUNCTION IN AUTOPHAGY</scope>
</reference>
<reference key="46">
    <citation type="journal article" date="2009" name="Anal. Chem.">
        <title>Lys-N and trypsin cover complementary parts of the phosphoproteome in a refined SCX-based approach.</title>
        <authorList>
            <person name="Gauci S."/>
            <person name="Helbig A.O."/>
            <person name="Slijper M."/>
            <person name="Krijgsveld J."/>
            <person name="Heck A.J."/>
            <person name="Mohammed S."/>
        </authorList>
    </citation>
    <scope>ACETYLATION [LARGE SCALE ANALYSIS] AT ALA-2</scope>
    <scope>CLEAVAGE OF INITIATOR METHIONINE [LARGE SCALE ANALYSIS]</scope>
    <scope>IDENTIFICATION BY MASS SPECTROMETRY [LARGE SCALE ANALYSIS]</scope>
</reference>
<reference key="47">
    <citation type="journal article" date="2009" name="Biochem. Biophys. Res. Commun.">
        <title>Carboxy-terminal phosphorylation of SIRT1 by protein kinase CK2.</title>
        <authorList>
            <person name="Zschoernig B."/>
            <person name="Mahlknecht U."/>
        </authorList>
    </citation>
    <scope>PHOSPHORYLATION AT SER-659 AND SER-661</scope>
    <scope>MUTAGENESIS OF SER-659; SER-661 AND SER-684</scope>
</reference>
<reference key="48">
    <citation type="journal article" date="2009" name="Biochemistry">
        <title>Investigating the ADP-ribosyltransferase activity of sirtuins with NAD analogues and 32P-NAD.</title>
        <authorList>
            <person name="Du J."/>
            <person name="Jiang H."/>
            <person name="Lin H."/>
        </authorList>
    </citation>
    <scope>FUNCTION</scope>
</reference>
<reference key="49">
    <citation type="journal article" date="2009" name="Cell Metab.">
        <title>Hepatocyte-specific deletion of SIRT1 alters fatty acid metabolism and results in hepatic steatosis and inflammation.</title>
        <authorList>
            <person name="Purushotham A."/>
            <person name="Schug T.T."/>
            <person name="Xu Q."/>
            <person name="Surapureddi S."/>
            <person name="Guo X."/>
            <person name="Li X."/>
        </authorList>
    </citation>
    <scope>INTERACTION WITH PPARA</scope>
</reference>
<reference key="50">
    <citation type="journal article" date="2009" name="J. Biol. Chem.">
        <title>Transcriptional corepressor SMILE recruits SIRT1 to inhibit nuclear receptor estrogen receptor-related receptor gamma transactivation.</title>
        <authorList>
            <person name="Xie Y.B."/>
            <person name="Park J.H."/>
            <person name="Kim D.K."/>
            <person name="Hwang J.H."/>
            <person name="Oh S."/>
            <person name="Park S.B."/>
            <person name="Shong M."/>
            <person name="Lee I.K."/>
            <person name="Choi H.S."/>
        </authorList>
    </citation>
    <scope>FUNCTION</scope>
    <scope>INTERACTION WITH CREBZF</scope>
</reference>
<reference key="51">
    <citation type="journal article" date="2009" name="J. Cell Biol.">
        <title>A c-Myc-SIRT1 feedback loop regulates cell growth and transformation.</title>
        <authorList>
            <person name="Yuan J."/>
            <person name="Minter-Dykhouse K."/>
            <person name="Lou Z."/>
        </authorList>
    </citation>
    <scope>FUNCTION IN DEACETYLATION OF MYC</scope>
    <scope>FUNCTION IN REGULATION OF MYC</scope>
</reference>
<reference key="52">
    <citation type="journal article" date="2009" name="Mol. Cell. Biol.">
        <title>hSirT1-dependent regulation of the PCAF-E2F1-p73 apoptotic pathway in response to DNA damage.</title>
        <authorList>
            <person name="Pediconi N."/>
            <person name="Guerrieri F."/>
            <person name="Vossio S."/>
            <person name="Bruno T."/>
            <person name="Belloni L."/>
            <person name="Schinzari V."/>
            <person name="Scisciani C."/>
            <person name="Fanciulli M."/>
            <person name="Levrero M."/>
        </authorList>
    </citation>
    <scope>FUNCTION IN DEACETYLATION OF PCAF</scope>
    <scope>FUNCTION IN DNA REPAIR</scope>
</reference>
<reference key="53">
    <citation type="journal article" date="2009" name="PLoS ONE">
        <title>JNK1 phosphorylates SIRT1 and promotes its enzymatic activity.</title>
        <authorList>
            <person name="Nasrin N."/>
            <person name="Kaushik V.K."/>
            <person name="Fortier E."/>
            <person name="Wall D."/>
            <person name="Pearson K.J."/>
            <person name="de Cabo R."/>
            <person name="Bordone L."/>
        </authorList>
    </citation>
    <scope>PHOSPHORYLATION AT SER-27; SER-47 AND THR-530</scope>
    <scope>MUTAGENESIS OF SER-27; SER-47 AND THR-530</scope>
    <scope>SUBCELLULAR LOCATION</scope>
</reference>
<reference key="54">
    <citation type="journal article" date="2009" name="Sci. Signal.">
        <title>Quantitative phosphoproteomic analysis of T cell receptor signaling reveals system-wide modulation of protein-protein interactions.</title>
        <authorList>
            <person name="Mayya V."/>
            <person name="Lundgren D.H."/>
            <person name="Hwang S.-I."/>
            <person name="Rezaul K."/>
            <person name="Wu L."/>
            <person name="Eng J.K."/>
            <person name="Rodionov V."/>
            <person name="Han D.K."/>
        </authorList>
    </citation>
    <scope>PHOSPHORYLATION [LARGE SCALE ANALYSIS] AT THR-530; SER-535 AND THR-719</scope>
    <scope>IDENTIFICATION BY MASS SPECTROMETRY [LARGE SCALE ANALYSIS]</scope>
    <source>
        <tissue>Leukemic T-cell</tissue>
    </source>
</reference>
<reference key="55">
    <citation type="journal article" date="2010" name="Circ. Res.">
        <title>SIRT1 promotes proliferation and prevents senescence through targeting LKB1 in primary porcine aortic endothelial cells.</title>
        <authorList>
            <person name="Zu Y."/>
            <person name="Liu L."/>
            <person name="Lee M.Y."/>
            <person name="Xu C."/>
            <person name="Liang Y."/>
            <person name="Man R.Y."/>
            <person name="Vanhoutte P.M."/>
            <person name="Wang Y."/>
        </authorList>
    </citation>
    <scope>FUNCTION IN REGULATION OF STK11</scope>
</reference>
<reference key="56">
    <citation type="journal article" date="2010" name="DNA Repair">
        <title>Role of SIRT1 in homologous recombination.</title>
        <authorList>
            <person name="Uhl M."/>
            <person name="Csernok A."/>
            <person name="Aydin S."/>
            <person name="Kreienberg R."/>
            <person name="Wiesmuller L."/>
            <person name="Gatz S.A."/>
        </authorList>
    </citation>
    <scope>FUNCTION IN DNA REPAIR HOMOLOGOUS RECOMBINATION</scope>
</reference>
<reference key="57">
    <citation type="journal article" date="2010" name="J. Biol. Chem.">
        <title>SIRT1 suppresses activator protein-1 transcriptional activity and cyclooxygenase-2 expression in macrophages.</title>
        <authorList>
            <person name="Zhang R."/>
            <person name="Chen H.Z."/>
            <person name="Liu J.J."/>
            <person name="Jia Y.Y."/>
            <person name="Zhang Z.Q."/>
            <person name="Yang R.F."/>
            <person name="Zhang Y."/>
            <person name="Xu J."/>
            <person name="Wei Y.S."/>
            <person name="Liu D.P."/>
            <person name="Liang C.C."/>
        </authorList>
    </citation>
    <scope>INTERACTION WITH FOS AND JUN</scope>
</reference>
<reference key="58">
    <citation type="journal article" date="2010" name="J. Biol. Chem.">
        <title>SIRT1 regulates autoacetylation and histone acetyltransferase activity of TIP60.</title>
        <authorList>
            <person name="Wang J."/>
            <person name="Chen J."/>
        </authorList>
    </citation>
    <scope>FUNCTION IN DEACETYLATION OF KAT5</scope>
</reference>
<reference key="59">
    <citation type="journal article" date="2010" name="J. Biol. Chem.">
        <title>DYRK1A and DYRK3 promote cell survival through phosphorylation and activation of SIRT1.</title>
        <authorList>
            <person name="Guo X."/>
            <person name="Williams J.G."/>
            <person name="Schug T.T."/>
            <person name="Li X."/>
        </authorList>
    </citation>
    <scope>SUBCELLULAR LOCATION</scope>
</reference>
<reference key="60">
    <citation type="journal article" date="2010" name="J. Biol. Chem.">
        <title>SIRT1 deacetylates and inhibits SREBP-1C activity in regulation of hepatic lipid metabolism.</title>
        <authorList>
            <person name="Ponugoti B."/>
            <person name="Kim D.H."/>
            <person name="Xiao Z."/>
            <person name="Smith Z."/>
            <person name="Miao J."/>
            <person name="Zang M."/>
            <person name="Wu S.Y."/>
            <person name="Chiang C.M."/>
            <person name="Veenstra T.D."/>
            <person name="Kemper J.K."/>
        </authorList>
    </citation>
    <scope>FUNCTION IN DEACETYLATION OF SREBF1</scope>
</reference>
<reference key="61">
    <citation type="journal article" date="2010" name="Mol. Cell">
        <title>Sirtuin 1 modulates cellular responses to hypoxia by deacetylating hypoxia-inducible factor 1alpha.</title>
        <authorList>
            <person name="Lim J.H."/>
            <person name="Lee Y.M."/>
            <person name="Chun Y.S."/>
            <person name="Chen J."/>
            <person name="Kim J.E."/>
            <person name="Park J.W."/>
        </authorList>
    </citation>
    <scope>FUNCTION IN DEACETYLATION OF HIF1A</scope>
    <scope>FUNCTION IN REGULATION OF HIF1A</scope>
</reference>
<reference key="62">
    <citation type="journal article" date="2010" name="Mol. Cell">
        <title>SIRT1 regulates UV-induced DNA repair through deacetylating XPA.</title>
        <authorList>
            <person name="Fan W."/>
            <person name="Luo J."/>
        </authorList>
    </citation>
    <scope>FUNCTION IN DEACETYLATION OF XPA</scope>
</reference>
<reference key="63">
    <citation type="journal article" date="2010" name="Nucleic Acids Res.">
        <title>SIRT1 deacetylates APE1 and regulates cellular base excision repair.</title>
        <authorList>
            <person name="Yamamori T."/>
            <person name="DeRicco J."/>
            <person name="Naqvi A."/>
            <person name="Hoffman T.A."/>
            <person name="Mattagajasingh I."/>
            <person name="Kasuno K."/>
            <person name="Jung S.B."/>
            <person name="Kim C.S."/>
            <person name="Irani K."/>
        </authorList>
    </citation>
    <scope>FUNCTION IN DEACETYLATION OF APEX1</scope>
    <scope>FUNCTION IN DNA REPAIR</scope>
    <scope>MUTAGENESIS OF HIS-363</scope>
    <scope>ACTIVE SITE</scope>
    <scope>INDUCTION</scope>
    <scope>SUBCELLULAR LOCATION</scope>
</reference>
<reference key="64">
    <citation type="journal article" date="2010" name="Nucleic Acids Res.">
        <title>Transcriptional corepressor SHP recruits SIRT1 histone deacetylase to inhibit LRH-1 transactivation.</title>
        <authorList>
            <person name="Chanda D."/>
            <person name="Xie Y.B."/>
            <person name="Choi H.S."/>
        </authorList>
    </citation>
    <scope>FUNCTION</scope>
    <scope>INTERACTION WITH NR0B2</scope>
</reference>
<reference key="65">
    <citation type="journal article" date="2010" name="PLoS ONE">
        <title>SIRT1 negatively regulates the mammalian target of rapamycin.</title>
        <authorList>
            <person name="Ghosh H.S."/>
            <person name="McBurney M."/>
            <person name="Robbins P.D."/>
        </authorList>
    </citation>
    <scope>INTERACTION WITH TSC2</scope>
</reference>
<reference key="66">
    <citation type="journal article" date="2010" name="PLoS ONE">
        <title>SIRT1 undergoes alternative splicing in a novel auto-regulatory loop with p53.</title>
        <authorList>
            <person name="Lynch C.J."/>
            <person name="Shah Z.H."/>
            <person name="Allison S.J."/>
            <person name="Ahmed S.U."/>
            <person name="Ford J."/>
            <person name="Warnock L.J."/>
            <person name="Li H."/>
            <person name="Serrano M."/>
            <person name="Milner J."/>
        </authorList>
    </citation>
    <scope>ALTERNATIVE SPLICING (ISOFORM 2)</scope>
    <scope>FUNCTION (ISOFORM 2)</scope>
    <scope>INDUCTION (ISOFORM 2)</scope>
    <scope>INTERACTION WITH TP53 AND RPS19BP1</scope>
</reference>
<reference key="67">
    <citation type="journal article" date="2010" name="Proc. Natl. Acad. Sci. U.S.A.">
        <title>Regulation of global genome nucleotide excision repair by SIRT1 through xeroderma pigmentosum C.</title>
        <authorList>
            <person name="Ming M."/>
            <person name="Shea C.R."/>
            <person name="Guo X."/>
            <person name="Li X."/>
            <person name="Soltani K."/>
            <person name="Han W."/>
            <person name="He Y.Y."/>
        </authorList>
    </citation>
    <scope>FUNCTION IN DNA REPAIR</scope>
    <scope>SUPPRESSION OF XPC</scope>
</reference>
<reference key="68">
    <citation type="journal article" date="2010" name="Sci. Signal.">
        <title>Quantitative phosphoproteomics reveals widespread full phosphorylation site occupancy during mitosis.</title>
        <authorList>
            <person name="Olsen J.V."/>
            <person name="Vermeulen M."/>
            <person name="Santamaria A."/>
            <person name="Kumar C."/>
            <person name="Miller M.L."/>
            <person name="Jensen L.J."/>
            <person name="Gnad F."/>
            <person name="Cox J."/>
            <person name="Jensen T.S."/>
            <person name="Nigg E.A."/>
            <person name="Brunak S."/>
            <person name="Mann M."/>
        </authorList>
    </citation>
    <scope>ACETYLATION [LARGE SCALE ANALYSIS] AT ALA-2</scope>
    <scope>PHOSPHORYLATION [LARGE SCALE ANALYSIS] AT SER-14 AND SER-47</scope>
    <scope>CLEAVAGE OF INITIATOR METHIONINE [LARGE SCALE ANALYSIS]</scope>
    <scope>IDENTIFICATION BY MASS SPECTROMETRY [LARGE SCALE ANALYSIS]</scope>
    <source>
        <tissue>Cervix carcinoma</tissue>
    </source>
</reference>
<reference key="69">
    <citation type="journal article" date="2011" name="Aging (Albany NY)">
        <title>SIRT1 and SIRT3 deacetylate homologous substrates: AceCS1,2 and HMGCS1,2.</title>
        <authorList>
            <person name="Hirschey M.D."/>
            <person name="Shimazu T."/>
            <person name="Capra J.A."/>
            <person name="Pollard K.S."/>
            <person name="Verdin E."/>
        </authorList>
    </citation>
    <scope>FUNCTION IN DEACETYLATION OF HMGCS1</scope>
</reference>
<reference key="70">
    <citation type="journal article" date="2011" name="Arthritis Rheum.">
        <title>Tumor necrosis factor alpha-mediated cleavage and inactivation of SirT1 in human osteoarthritic chondrocytes.</title>
        <authorList>
            <person name="Dvir-Ginzberg M."/>
            <person name="Gagarina V."/>
            <person name="Lee E.J."/>
            <person name="Booth R."/>
            <person name="Gabay O."/>
            <person name="Hall D.J."/>
        </authorList>
    </citation>
    <scope>PROCESSING</scope>
</reference>
<reference key="71">
    <citation type="journal article" date="2011" name="BMC Syst. Biol.">
        <title>Initial characterization of the human central proteome.</title>
        <authorList>
            <person name="Burkard T.R."/>
            <person name="Planyavsky M."/>
            <person name="Kaupe I."/>
            <person name="Breitwieser F.P."/>
            <person name="Buerckstuemmer T."/>
            <person name="Bennett K.L."/>
            <person name="Superti-Furga G."/>
            <person name="Colinge J."/>
        </authorList>
    </citation>
    <scope>IDENTIFICATION BY MASS SPECTROMETRY [LARGE SCALE ANALYSIS]</scope>
</reference>
<reference key="72">
    <citation type="journal article" date="2011" name="Biochem. J.">
        <title>Regulation of unfolded protein response modulator XBP1s by acetylation and deacetylation.</title>
        <authorList>
            <person name="Wang F.M."/>
            <person name="Chen Y.J."/>
            <person name="Ouyang H.J."/>
        </authorList>
    </citation>
    <scope>FUNCTION IN DEACETYLATION OF XBP1</scope>
    <scope>INTERACTION WITH XBP1</scope>
    <scope>SUBCELLULAR LOCATION</scope>
</reference>
<reference key="73">
    <citation type="journal article" date="2011" name="Biochim. Biophys. Acta">
        <title>EVI1 up-regulates the stress responsive gene SIRT1 which triggers deacetylation and degradation of EVI1.</title>
        <authorList>
            <person name="Pradhan A.K."/>
            <person name="Kuila N."/>
            <person name="Singh S."/>
            <person name="Chakraborty S."/>
        </authorList>
    </citation>
    <scope>FUNCTION IN DEACETYLATION OF MECOM</scope>
</reference>
<reference key="74">
    <citation type="journal article" date="2011" name="Biochem. Pharmacol.">
        <title>Energy sensing factors PGC-1alpha and SIRT1 modulate PXR expression and function.</title>
        <authorList>
            <person name="Buler M."/>
            <person name="Aatsinki S.M."/>
            <person name="Skoumal R."/>
            <person name="Hakkola J."/>
        </authorList>
    </citation>
    <scope>INTERACTION WITH NR1I2</scope>
</reference>
<reference key="75">
    <citation type="journal article" date="2011" name="Int. J. Biochem. Cell Biol.">
        <title>Sirt1 deacetylates c-Myc and promotes c-Myc/Max association.</title>
        <authorList>
            <person name="Mao B."/>
            <person name="Zhao G."/>
            <person name="Lv X."/>
            <person name="Chen H.Z."/>
            <person name="Xue Z."/>
            <person name="Yang B."/>
            <person name="Liu D.P."/>
            <person name="Liang C.C."/>
        </authorList>
    </citation>
    <scope>FUNCTION IN DEACETYLATION OF MYC</scope>
    <scope>FUNCTION IN REGULATION OF MYC</scope>
</reference>
<reference key="76">
    <citation type="journal article" date="2011" name="J. Biol. Chem.">
        <title>MST1 promotes apoptosis through regulating Sirt1-dependent p53 deacetylation.</title>
        <authorList>
            <person name="Yuan F."/>
            <person name="Xie Q."/>
            <person name="Wu J."/>
            <person name="Bai Y."/>
            <person name="Mao B."/>
            <person name="Dong Y."/>
            <person name="Bi W."/>
            <person name="Ji G."/>
            <person name="Tao W."/>
            <person name="Wang Y."/>
            <person name="Yuan Z."/>
        </authorList>
    </citation>
    <scope>PHOSPHORYLATION BY STK4/MST1</scope>
</reference>
<reference key="77">
    <citation type="journal article" date="2011" name="J. Biol. Chem.">
        <title>Cancer cell survival following DNA damage-mediated premature senescence is regulated by mammalian target of rapamycin (mTOR)-dependent Inhibition of sirtuin 1.</title>
        <authorList>
            <person name="Back J.H."/>
            <person name="Rezvani H.R."/>
            <person name="Zhu Y."/>
            <person name="Guyonnet-Duperat V."/>
            <person name="Athar M."/>
            <person name="Ratner D."/>
            <person name="Kim A.L."/>
        </authorList>
    </citation>
    <scope>FUNCTION IN APOPTOSIS</scope>
    <scope>PHOSPHORYLATION AT SER-47</scope>
    <scope>MUTAGENESIS OF SER-47 AND PHE-474</scope>
</reference>
<reference key="78">
    <citation type="journal article" date="2011" name="Mol. Cell">
        <title>Stabilization of Suv39H1 by SirT1 is part of oxidative stress response and ensures genome protection.</title>
        <authorList>
            <person name="Bosch-Presegue L."/>
            <person name="Raurell-Vila H."/>
            <person name="Marazuela-Duque A."/>
            <person name="Kane-Goldsmith N."/>
            <person name="Valle A."/>
            <person name="Oliver J."/>
            <person name="Serrano L."/>
            <person name="Vaquero A."/>
        </authorList>
    </citation>
    <scope>FUNCTION IN STABILIZATION OF SUV39H1</scope>
</reference>
<reference key="79">
    <citation type="journal article" date="2011" name="Mol. Cell. Biol.">
        <title>SIRT1 deacetylates the DNA methyltransferase 1 (DNMT1) protein and alters its activities.</title>
        <authorList>
            <person name="Peng L."/>
            <person name="Yuan Z."/>
            <person name="Ling H."/>
            <person name="Fukasawa K."/>
            <person name="Robertson K."/>
            <person name="Olashaw N."/>
            <person name="Koomen J."/>
            <person name="Chen J."/>
            <person name="Lane W.S."/>
            <person name="Seto E."/>
        </authorList>
    </citation>
    <scope>FUNCTION IN DEACETYLATION OF DNMT1</scope>
    <scope>FUNCTION IN REGULATION OF DNMT1</scope>
</reference>
<reference key="80">
    <citation type="journal article" date="2011" name="PLoS Genet.">
        <title>SIRT1 promotes N-Myc oncogenesis through a positive feedback loop involving the effects of MKP3 and ERK on N-Myc protein stability.</title>
        <authorList>
            <person name="Marshall G.M."/>
            <person name="Liu P.Y."/>
            <person name="Gherardi S."/>
            <person name="Scarlett C.J."/>
            <person name="Bedalov A."/>
            <person name="Xu N."/>
            <person name="Iraci N."/>
            <person name="Valli E."/>
            <person name="Ling D."/>
            <person name="Thomas W."/>
            <person name="van Bekkum M."/>
            <person name="Sekyere E."/>
            <person name="Jankowski K."/>
            <person name="Trahair T."/>
            <person name="Mackenzie K.L."/>
            <person name="Haber M."/>
            <person name="Norris M.D."/>
            <person name="Biankin A.V."/>
            <person name="Perini G."/>
            <person name="Liu T."/>
        </authorList>
    </citation>
    <scope>FUNCTION IN REGULATION OF MYCN</scope>
    <scope>INTERACTION WITH MYCN</scope>
</reference>
<reference key="81">
    <citation type="journal article" date="2011" name="PLoS Genet.">
        <title>The evolutionarily conserved longevity determinants HCF-1 and SIR-2.1/SIRT1 collaborate to regulate DAF-16/FOXO.</title>
        <authorList>
            <person name="Rizki G."/>
            <person name="Iwata T.N."/>
            <person name="Li J."/>
            <person name="Riedel C.G."/>
            <person name="Picard C.L."/>
            <person name="Jan M."/>
            <person name="Murphy C.T."/>
            <person name="Lee S.S."/>
        </authorList>
    </citation>
    <scope>INTERACTION WITH HCFC1</scope>
</reference>
<reference key="82">
    <citation type="journal article" date="2011" name="Proc. Natl. Acad. Sci. U.S.A.">
        <title>Methyltransferase Set7/9 regulates p53 activity by interacting with Sirtuin 1 (SIRT1).</title>
        <authorList>
            <person name="Liu X."/>
            <person name="Wang D."/>
            <person name="Zhao Y."/>
            <person name="Tu B."/>
            <person name="Zheng Z."/>
            <person name="Wang L."/>
            <person name="Wang H."/>
            <person name="Gu W."/>
            <person name="Roeder R.G."/>
            <person name="Zhu W.G."/>
        </authorList>
    </citation>
    <scope>INTERACTION WITH SETD7</scope>
    <scope>METHYLATION</scope>
    <scope>MUTAGENESIS OF LYS-233; LYS-235; LYS-236 AND LYS-238</scope>
</reference>
<reference key="83">
    <citation type="journal article" date="2011" name="Sci. Signal.">
        <title>The deacetylase SIRT1 promotes membrane localization and activation of Akt and PDK1 during tumorigenesis and cardiac hypertrophy.</title>
        <authorList>
            <person name="Sundaresan N.R."/>
            <person name="Pillai V.B."/>
            <person name="Wolfgeher D."/>
            <person name="Samant S."/>
            <person name="Vasudevan P."/>
            <person name="Parekh V."/>
            <person name="Raghuraman H."/>
            <person name="Cunningham J.M."/>
            <person name="Gupta M."/>
            <person name="Gupta M.P."/>
        </authorList>
    </citation>
    <scope>FUNCTION IN DEACETYLATION OF AKT1</scope>
    <scope>FUNCTION IN REGULATION OF AKT1</scope>
</reference>
<reference key="84">
    <citation type="journal article" date="2011" name="Sci. Signal.">
        <title>System-wide temporal characterization of the proteome and phosphoproteome of human embryonic stem cell differentiation.</title>
        <authorList>
            <person name="Rigbolt K.T."/>
            <person name="Prokhorova T.A."/>
            <person name="Akimov V."/>
            <person name="Henningsen J."/>
            <person name="Johansen P.T."/>
            <person name="Kratchmarova I."/>
            <person name="Kassem M."/>
            <person name="Mann M."/>
            <person name="Olsen J.V."/>
            <person name="Blagoev B."/>
        </authorList>
    </citation>
    <scope>ACETYLATION [LARGE SCALE ANALYSIS] AT ALA-2</scope>
    <scope>PHOSPHORYLATION [LARGE SCALE ANALYSIS] AT SER-14; SER-47 AND THR-719</scope>
    <scope>CLEAVAGE OF INITIATOR METHIONINE [LARGE SCALE ANALYSIS]</scope>
    <scope>IDENTIFICATION BY MASS SPECTROMETRY [LARGE SCALE ANALYSIS]</scope>
</reference>
<reference key="85">
    <citation type="journal article" date="2012" name="Arthritis Rheum.">
        <title>75kDa SirT1 blocks TNFalpha-mediated apoptosis in human osteoarthritic chondrocytes.</title>
        <authorList>
            <person name="Oppenheimer H."/>
            <person name="Gabay O."/>
            <person name="Meir H."/>
            <person name="Haze A."/>
            <person name="Kandel L."/>
            <person name="Liebergall M."/>
            <person name="Gagarina V."/>
            <person name="Lee E.J."/>
            <person name="Dvir-Ginzberg M."/>
        </authorList>
    </citation>
    <scope>FUNCTION (SIRTT1 75 KDA FRAGMENT)</scope>
    <scope>SUBCELLULAR LOCATION (75SIRT1)</scope>
</reference>
<reference key="86">
    <citation type="journal article" date="2011" name="Nucleic Acids Res.">
        <title>SIRT1 links CIITA deacetylation to MHC II activation.</title>
        <authorList>
            <person name="Wu X."/>
            <person name="Kong X."/>
            <person name="Chen D."/>
            <person name="Li H."/>
            <person name="Zhao Y."/>
            <person name="Xia M."/>
            <person name="Fang M."/>
            <person name="Li P."/>
            <person name="Fang F."/>
            <person name="Sun L."/>
            <person name="Tian W."/>
            <person name="Xu H."/>
            <person name="Yang Y."/>
            <person name="Qi X."/>
            <person name="Gao Y."/>
            <person name="Sha J."/>
            <person name="Chen Q."/>
            <person name="Xu Y."/>
        </authorList>
    </citation>
    <scope>FUNCTION IN DEACETYLATION OF CIITA</scope>
</reference>
<reference key="87">
    <citation type="journal article" date="2012" name="Mol. Cell">
        <title>USP22 antagonizes p53 transcriptional activation by deubiquitinating Sirt1 to suppress cell apoptosis and is required for mouse embryonic development.</title>
        <authorList>
            <person name="Lin Z."/>
            <person name="Yang H."/>
            <person name="Kong Q."/>
            <person name="Li J."/>
            <person name="Lee S.M."/>
            <person name="Gao B."/>
            <person name="Dong H."/>
            <person name="Wei J."/>
            <person name="Song J."/>
            <person name="Zhang D.D."/>
            <person name="Fang D."/>
        </authorList>
    </citation>
    <scope>FUNCTION</scope>
    <scope>DEUBIQUITINATION BY USP22</scope>
</reference>
<reference key="88">
    <citation type="journal article" date="2012" name="EMBO J.">
        <title>PML regulates PER2 nuclear localization and circadian function.</title>
        <authorList>
            <person name="Miki T."/>
            <person name="Xu Z."/>
            <person name="Chen-Goodspeed M."/>
            <person name="Liu M."/>
            <person name="Van Oort-Jansen A."/>
            <person name="Rea M.A."/>
            <person name="Zhao Z."/>
            <person name="Lee C.C."/>
            <person name="Chang K.S."/>
        </authorList>
    </citation>
    <scope>FUNCTION IN DEACETYLATION OF PML</scope>
</reference>
<reference key="89">
    <citation type="journal article" date="2012" name="J. Biol. Chem.">
        <title>Autoacetylation of the MYST lysine acetyltransferase MOF protein.</title>
        <authorList>
            <person name="Yang C."/>
            <person name="Wu J."/>
            <person name="Sinha S.H."/>
            <person name="Neveu J.M."/>
            <person name="Zheng Y.G."/>
        </authorList>
    </citation>
    <scope>FUNCTION</scope>
    <scope>CATALYTIC ACTIVITY</scope>
</reference>
<reference key="90">
    <citation type="journal article" date="2012" name="Mol. Cell">
        <title>The deacetylase Sirt6 activates the acetyltransferase GCN5 and suppresses hepatic gluconeogenesis.</title>
        <authorList>
            <person name="Dominy J.E. Jr."/>
            <person name="Lee Y."/>
            <person name="Jedrychowski M.P."/>
            <person name="Chim H."/>
            <person name="Jurczak M.J."/>
            <person name="Camporez J.P."/>
            <person name="Ruan H.B."/>
            <person name="Feldman J."/>
            <person name="Pierce K."/>
            <person name="Mostoslavsky R."/>
            <person name="Denu J.M."/>
            <person name="Clish C.B."/>
            <person name="Yang X."/>
            <person name="Shulman G.I."/>
            <person name="Gygi S.P."/>
            <person name="Puigserver P."/>
        </authorList>
    </citation>
    <scope>FUNCTION IN DEACETYLATION OF PPARGC1A</scope>
</reference>
<reference key="91">
    <citation type="journal article" date="2012" name="Mol. Cell. Proteomics">
        <title>Comparative large-scale characterisation of plant vs. mammal proteins reveals similar and idiosyncratic N-alpha acetylation features.</title>
        <authorList>
            <person name="Bienvenut W.V."/>
            <person name="Sumpton D."/>
            <person name="Martinez A."/>
            <person name="Lilla S."/>
            <person name="Espagne C."/>
            <person name="Meinnel T."/>
            <person name="Giglione C."/>
        </authorList>
    </citation>
    <scope>ACETYLATION [LARGE SCALE ANALYSIS] AT ALA-2</scope>
    <scope>CLEAVAGE OF INITIATOR METHIONINE [LARGE SCALE ANALYSIS]</scope>
    <scope>IDENTIFICATION BY MASS SPECTROMETRY [LARGE SCALE ANALYSIS]</scope>
</reference>
<reference key="92">
    <citation type="journal article" date="2012" name="Oncogene">
        <title>Deacetylation of FOXO3 by SIRT1 or SIRT2 leads to Skp2-mediated FOXO3 ubiquitination and degradation.</title>
        <authorList>
            <person name="Wang F."/>
            <person name="Chan C.H."/>
            <person name="Chen K."/>
            <person name="Guan X."/>
            <person name="Lin H.K."/>
            <person name="Tong Q."/>
        </authorList>
    </citation>
    <scope>FUNCTION IN DEACETYLATION OF FOXO3</scope>
    <scope>FUNCTION IN REGULATION OF FOXO3</scope>
</reference>
<reference key="93">
    <citation type="journal article" date="2012" name="Proc. Natl. Acad. Sci. U.S.A.">
        <title>N-terminal acetylome analyses and functional insights of the N-terminal acetyltransferase NatB.</title>
        <authorList>
            <person name="Van Damme P."/>
            <person name="Lasa M."/>
            <person name="Polevoda B."/>
            <person name="Gazquez C."/>
            <person name="Elosegui-Artola A."/>
            <person name="Kim D.S."/>
            <person name="De Juan-Pardo E."/>
            <person name="Demeyer K."/>
            <person name="Hole K."/>
            <person name="Larrea E."/>
            <person name="Timmerman E."/>
            <person name="Prieto J."/>
            <person name="Arnesen T."/>
            <person name="Sherman F."/>
            <person name="Gevaert K."/>
            <person name="Aldabe R."/>
        </authorList>
    </citation>
    <scope>ACETYLATION [LARGE SCALE ANALYSIS] AT ALA-2</scope>
    <scope>CLEAVAGE OF INITIATOR METHIONINE [LARGE SCALE ANALYSIS]</scope>
    <scope>IDENTIFICATION BY MASS SPECTROMETRY [LARGE SCALE ANALYSIS]</scope>
</reference>
<reference key="94">
    <citation type="journal article" date="2013" name="Cancer Lett.">
        <title>Deleted in breast cancer 1 (DBC1) deficiency results in apoptosis of breast cancer cells through impaired responses to UV-induced DNA damage.</title>
        <authorList>
            <person name="Kim W."/>
            <person name="Kim J.E."/>
        </authorList>
    </citation>
    <scope>INTERACTION WITH CCAR2</scope>
</reference>
<reference key="95">
    <citation type="journal article" date="2013" name="J. Proteome Res.">
        <title>Toward a comprehensive characterization of a human cancer cell phosphoproteome.</title>
        <authorList>
            <person name="Zhou H."/>
            <person name="Di Palma S."/>
            <person name="Preisinger C."/>
            <person name="Peng M."/>
            <person name="Polat A.N."/>
            <person name="Heck A.J."/>
            <person name="Mohammed S."/>
        </authorList>
    </citation>
    <scope>PHOSPHORYLATION [LARGE SCALE ANALYSIS] AT SER-14; SER-27; SER-47 AND THR-719</scope>
    <scope>IDENTIFICATION BY MASS SPECTROMETRY [LARGE SCALE ANALYSIS]</scope>
    <source>
        <tissue>Cervix carcinoma</tissue>
        <tissue>Erythroleukemia</tissue>
    </source>
</reference>
<reference key="96">
    <citation type="journal article" date="2013" name="Mol. Cell. Biol.">
        <title>SIRT4 represses peroxisome proliferator-activated receptor alpha activity to suppress hepatic fat oxidation.</title>
        <authorList>
            <person name="Laurent G."/>
            <person name="de Boer V.C."/>
            <person name="Finley L.W."/>
            <person name="Sweeney M."/>
            <person name="Lu H."/>
            <person name="Schug T.T."/>
            <person name="Cen Y."/>
            <person name="Jeong S.M."/>
            <person name="Li X."/>
            <person name="Sauve A.A."/>
            <person name="Haigis M.C."/>
        </authorList>
    </citation>
    <scope>INTERACTION WITH PPARA</scope>
</reference>
<reference key="97">
    <citation type="journal article" date="2014" name="J. Biol. Chem.">
        <title>Deleted in breast cancer 1 (DBC1) protein regulates hepatic gluconeogenesis.</title>
        <authorList>
            <person name="Nin V."/>
            <person name="Chini C.C."/>
            <person name="Escande C."/>
            <person name="Capellini V."/>
            <person name="Chini E.N."/>
        </authorList>
    </citation>
    <scope>FUNCTION</scope>
</reference>
<reference key="98">
    <citation type="journal article" date="2014" name="J. Proteomics">
        <title>An enzyme assisted RP-RPLC approach for in-depth analysis of human liver phosphoproteome.</title>
        <authorList>
            <person name="Bian Y."/>
            <person name="Song C."/>
            <person name="Cheng K."/>
            <person name="Dong M."/>
            <person name="Wang F."/>
            <person name="Huang J."/>
            <person name="Sun D."/>
            <person name="Wang L."/>
            <person name="Ye M."/>
            <person name="Zou H."/>
        </authorList>
    </citation>
    <scope>PHOSPHORYLATION [LARGE SCALE ANALYSIS] AT SER-14 AND SER-27</scope>
    <scope>IDENTIFICATION BY MASS SPECTROMETRY [LARGE SCALE ANALYSIS]</scope>
    <source>
        <tissue>Liver</tissue>
    </source>
</reference>
<reference key="99">
    <citation type="journal article" date="2014" name="Nat. Commun.">
        <title>Modification of DBC1 by SUMO2/3 is crucial for p53-mediated apoptosis in response to DNA damage.</title>
        <authorList>
            <person name="Park J.H."/>
            <person name="Lee S.W."/>
            <person name="Yang S.W."/>
            <person name="Yoo H.M."/>
            <person name="Park J.M."/>
            <person name="Seong M.W."/>
            <person name="Ka S.H."/>
            <person name="Oh K.H."/>
            <person name="Jeon Y.J."/>
            <person name="Chung C.H."/>
        </authorList>
    </citation>
    <scope>INTERACTION WITH CCAR2 AND TP53</scope>
    <scope>MUTAGENESIS OF 256-ILE-ILE-257 AND HIS-363</scope>
    <scope>ACTIVE SITE</scope>
</reference>
<reference key="100">
    <citation type="journal article" date="2014" name="Nucleic Acids Res.">
        <title>Chk2 and REGgamma-dependent DBC1 regulation in DNA damage induced apoptosis.</title>
        <authorList>
            <person name="Magni M."/>
            <person name="Ruscica V."/>
            <person name="Buscemi G."/>
            <person name="Kim J.E."/>
            <person name="Nachimuthu B.T."/>
            <person name="Fontanella E."/>
            <person name="Delia D."/>
            <person name="Zannini L."/>
        </authorList>
    </citation>
    <scope>INTERACTION WITH CHEK2</scope>
</reference>
<reference key="101">
    <citation type="journal article" date="2015" name="Int. J. Cancer">
        <title>MCC inhibits beta-catenin transcriptional activity by sequestering DBC1 in the cytoplasm.</title>
        <authorList>
            <person name="Pangon L."/>
            <person name="Mladenova D."/>
            <person name="Watkins L."/>
            <person name="Van Kralingen C."/>
            <person name="Currey N."/>
            <person name="Al-Sohaily S."/>
            <person name="Lecine P."/>
            <person name="Borg J.P."/>
            <person name="Kohonen-Corish M.R."/>
        </authorList>
    </citation>
    <scope>FUNCTION IN DEACETYLATION OF CTNB1</scope>
</reference>
<reference key="102">
    <citation type="journal article" date="2015" name="J. Steroid Biochem. Mol. Biol.">
        <title>CCAR2 negatively regulates nuclear receptor LXRalpha by competing with SIRT1 deacetylase.</title>
        <authorList>
            <person name="Sakurabashi A."/>
            <person name="Wada-Hiraike O."/>
            <person name="Hirano M."/>
            <person name="Fu H."/>
            <person name="Isono W."/>
            <person name="Fukuda T."/>
            <person name="Morita Y."/>
            <person name="Tanikawa M."/>
            <person name="Miyamoto Y."/>
            <person name="Oda K."/>
            <person name="Kawana K."/>
            <person name="Osuga Y."/>
            <person name="Fujii T."/>
        </authorList>
    </citation>
    <scope>INTERACTION WITH NR1H3</scope>
</reference>
<reference key="103">
    <citation type="journal article" date="2017" name="Cell Res.">
        <title>Class I histone deacetylases are major histone decrotonylases: evidence for critical and broad function of histone crotonylation in transcription.</title>
        <authorList>
            <person name="Wei W."/>
            <person name="Liu X."/>
            <person name="Chen J."/>
            <person name="Gao S."/>
            <person name="Lu L."/>
            <person name="Zhang H."/>
            <person name="Ding G."/>
            <person name="Wang Z."/>
            <person name="Chen Z."/>
            <person name="Shi T."/>
            <person name="Li J."/>
            <person name="Yu J."/>
            <person name="Wong J."/>
        </authorList>
    </citation>
    <scope>FUNCTION</scope>
    <scope>CATALYTIC ACTIVITY</scope>
    <scope>ACTIVE SITE</scope>
    <scope>MUTAGENESIS OF HIS-363</scope>
</reference>
<reference key="104">
    <citation type="journal article" date="2018" name="Am. J. Hum. Genet.">
        <title>A recurrent de novo PACS2 heterozygous missense variant causes neonatal-onset developmental epileptic encephalopathy, facial dysmorphism, and cerebellar dysgenesis.</title>
        <authorList>
            <consortium name="DDD Study"/>
            <consortium name="C4RCD Research Group"/>
            <person name="Olson H.E."/>
            <person name="Jean-Marcais N."/>
            <person name="Yang E."/>
            <person name="Heron D."/>
            <person name="Tatton-Brown K."/>
            <person name="van der Zwaag P.A."/>
            <person name="Bijlsma E.K."/>
            <person name="Krock B.L."/>
            <person name="Backer E."/>
            <person name="Kamsteeg E.J."/>
            <person name="Sinnema M."/>
            <person name="Reijnders M.R.F."/>
            <person name="Bearden D."/>
            <person name="Begtrup A."/>
            <person name="Telegrafi A."/>
            <person name="Lunsing R.J."/>
            <person name="Burglen L."/>
            <person name="Lesca G."/>
            <person name="Cho M.T."/>
            <person name="Smith L.A."/>
            <person name="Sheidley B.R."/>
            <person name="Moufawad El Achkar C."/>
            <person name="Pearl P.L."/>
            <person name="Poduri A."/>
            <person name="Skraban C.M."/>
            <person name="Tarpinian J."/>
            <person name="Nesbitt A.I."/>
            <person name="Fransen van de Putte D.E."/>
            <person name="Ruivenkamp C.A.L."/>
            <person name="Rump P."/>
            <person name="Chatron N."/>
            <person name="Sabatier I."/>
            <person name="De Bellescize J."/>
            <person name="Guibaud L."/>
            <person name="Sweetser D.A."/>
            <person name="Waxler J.L."/>
            <person name="Wierenga K.J."/>
            <person name="Donadieu J."/>
            <person name="Narayanan V."/>
            <person name="Ramsey K.M."/>
            <person name="Nava C."/>
            <person name="Riviere J.B."/>
            <person name="Vitobello A."/>
            <person name="Tran Mau-Them F."/>
            <person name="Philippe C."/>
            <person name="Bruel A.L."/>
            <person name="Duffourd Y."/>
            <person name="Thomas L."/>
            <person name="Lelieveld S.H."/>
            <person name="Schuurs-Hoeijmakers J."/>
            <person name="Brunner H.G."/>
            <person name="Keren B."/>
            <person name="Thevenon J."/>
            <person name="Faivre L."/>
            <person name="Thomas G."/>
            <person name="Thauvin-Robinet C."/>
        </authorList>
    </citation>
    <scope>INTERACTION WITH PACS2</scope>
</reference>
<reference key="105">
    <citation type="journal article" date="2018" name="Cell Chem. Biol.">
        <title>A Designed Peptide Targets Two Types of Modifications of p53 with Anti-cancer Activity.</title>
        <authorList>
            <person name="Liang L."/>
            <person name="Wang H."/>
            <person name="Shi H."/>
            <person name="Li Z."/>
            <person name="Yao H."/>
            <person name="Bu Z."/>
            <person name="Song N."/>
            <person name="Li C."/>
            <person name="Xiang D."/>
            <person name="Zhang Y."/>
            <person name="Wang J."/>
            <person name="Hu Y."/>
            <person name="Xu Q."/>
            <person name="Ma Y."/>
            <person name="Cheng Z."/>
            <person name="Wang Y."/>
            <person name="Zhao S."/>
            <person name="Qian J."/>
            <person name="Chen Y."/>
            <person name="Fang J.Y."/>
            <person name="Xu J."/>
        </authorList>
    </citation>
    <scope>FUNCTION</scope>
    <scope>INTERACTION WITH MORN3</scope>
</reference>
<reference key="106">
    <citation type="journal article" date="2018" name="Nat. Commun.">
        <title>Tip60-mediated lipin 1 acetylation and ER translocation determine triacylglycerol synthesis rate.</title>
        <authorList>
            <person name="Li T.Y."/>
            <person name="Song L."/>
            <person name="Sun Y."/>
            <person name="Li J."/>
            <person name="Yi C."/>
            <person name="Lam S.M."/>
            <person name="Xu D."/>
            <person name="Zhou L."/>
            <person name="Li X."/>
            <person name="Yang Y."/>
            <person name="Zhang C.S."/>
            <person name="Xie C."/>
            <person name="Huang X."/>
            <person name="Shui G."/>
            <person name="Lin S.Y."/>
            <person name="Reue K."/>
            <person name="Lin S.C."/>
        </authorList>
    </citation>
    <scope>FUNCTION</scope>
    <scope>CATALYTIC ACTIVITY</scope>
</reference>
<reference key="107">
    <citation type="journal article" date="2018" name="Mol. Cell">
        <title>Dynamic acetylation of phosphoenolpyruvate carboxykinase toggles enzyme activity between gluconeogenic and anaplerotic reactions.</title>
        <authorList>
            <person name="Latorre-Muro P."/>
            <person name="Baeza J."/>
            <person name="Armstrong E.A."/>
            <person name="Hurtado-Guerrero R."/>
            <person name="Corzana F."/>
            <person name="Wu L.E."/>
            <person name="Sinclair D.A."/>
            <person name="Lopez-Buesa P."/>
            <person name="Carrodeguas J.A."/>
            <person name="Denu J.M."/>
        </authorList>
    </citation>
    <scope>FUNCTION IN DEACETYLATION OF PCK1</scope>
</reference>
<reference key="108">
    <citation type="journal article" date="2019" name="Biochem. Biophys. Res. Commun.">
        <title>Biochemical insight into pseudouridine synthase 7 (PUS7) as a novel interactor of sirtuin, SIRT1.</title>
        <authorList>
            <person name="Dalal S."/>
            <person name="Deshmukh P."/>
            <person name="Unni S."/>
            <person name="Padavattan S."/>
            <person name="Padmanabhan B."/>
        </authorList>
    </citation>
    <scope>INTERACTION WITH PUS7</scope>
</reference>
<reference key="109">
    <citation type="journal article" date="2019" name="Cell Rep.">
        <title>CCDC84 Acetylation Oscillation Regulates Centrosome Duplication by Modulating HsSAS-6 Degradation.</title>
        <authorList>
            <person name="Wang T."/>
            <person name="Zou Y."/>
            <person name="Huang N."/>
            <person name="Teng J."/>
            <person name="Chen J."/>
        </authorList>
    </citation>
    <scope>FUNCTION</scope>
</reference>
<reference key="110">
    <citation type="journal article" date="2019" name="J. Biol. Chem.">
        <title>Dynamic acetylation of the kinetochore-associated protein HEC1 ensures accurate microtubule-kinetochore attachment.</title>
        <authorList>
            <person name="Zhao G."/>
            <person name="Cheng Y."/>
            <person name="Gui P."/>
            <person name="Cui M."/>
            <person name="Liu W."/>
            <person name="Wang W."/>
            <person name="Wang X."/>
            <person name="Ali M."/>
            <person name="Dou Z."/>
            <person name="Niu L."/>
            <person name="Liu H."/>
            <person name="Anderson L."/>
            <person name="Ruan K."/>
            <person name="Hong J."/>
            <person name="Yao X."/>
        </authorList>
    </citation>
    <scope>FUNCTION</scope>
    <scope>CATALYTIC ACTIVITY</scope>
</reference>
<reference key="111">
    <citation type="journal article" date="2020" name="Elife">
        <title>Synergy between SIRT1 and SIRT6 helps recognize DNA breaks and potentiates the DNA damage response and repair in humans and mice.</title>
        <authorList>
            <person name="Meng F."/>
            <person name="Qian M."/>
            <person name="Peng B."/>
            <person name="Peng L."/>
            <person name="Wang X."/>
            <person name="Zheng K."/>
            <person name="Liu Z."/>
            <person name="Tang X."/>
            <person name="Zhang S."/>
            <person name="Sun S."/>
            <person name="Cao X."/>
            <person name="Pang Q."/>
            <person name="Zhao B."/>
            <person name="Ma W."/>
            <person name="Songyang Z."/>
            <person name="Xu B."/>
            <person name="Zhu W.G."/>
            <person name="Xu X."/>
            <person name="Liu B."/>
        </authorList>
    </citation>
    <scope>FUNCTION</scope>
    <scope>CATALYTIC ACTIVITY</scope>
    <scope>MUTAGENESIS OF HIS-363</scope>
</reference>
<reference key="112">
    <citation type="journal article" date="2020" name="Nat. Commun.">
        <title>Acetylation of XPF by TIP60 facilitates XPF-ERCC1 complex assembly and activation.</title>
        <authorList>
            <person name="Wang J."/>
            <person name="He H."/>
            <person name="Chen B."/>
            <person name="Jiang G."/>
            <person name="Cao L."/>
            <person name="Jiang H."/>
            <person name="Zhang G."/>
            <person name="Chen J."/>
            <person name="Huang J."/>
            <person name="Yang B."/>
            <person name="Zhou C."/>
            <person name="Liu T."/>
        </authorList>
    </citation>
    <scope>FUNCTION</scope>
    <scope>CATALYTIC ACTIVITY</scope>
    <scope>MUTAGENESIS OF HIS-363</scope>
</reference>
<reference key="113">
    <citation type="journal article" date="2022" name="Am. J. Hum. Genet.">
        <title>Progressive liver, kidney, and heart degeneration in children and adults affected by TULP3 mutations.</title>
        <authorList>
            <person name="Devane J."/>
            <person name="Ott E."/>
            <person name="Olinger E.G."/>
            <person name="Epting D."/>
            <person name="Decker E."/>
            <person name="Friedrich A."/>
            <person name="Bachmann N."/>
            <person name="Renschler G."/>
            <person name="Eisenberger T."/>
            <person name="Briem-Richter A."/>
            <person name="Grabhorn E.F."/>
            <person name="Powell L."/>
            <person name="Wilson I.J."/>
            <person name="Rice S.J."/>
            <person name="Miles C.G."/>
            <person name="Wood K."/>
            <person name="Trivedi P."/>
            <person name="Hirschfield G."/>
            <person name="Pietrobattista A."/>
            <person name="Wohler E."/>
            <person name="Mezina A."/>
            <person name="Sobreira N."/>
            <person name="Agolini E."/>
            <person name="Maggiore G."/>
            <person name="Dahmer-Heath M."/>
            <person name="Yilmaz A."/>
            <person name="Boerries M."/>
            <person name="Metzger P."/>
            <person name="Schell C."/>
            <person name="Gruenewald I."/>
            <person name="Konrad M."/>
            <person name="Koenig J."/>
            <person name="Schlevogt B."/>
            <person name="Sayer J.A."/>
            <person name="Bergmann C."/>
        </authorList>
    </citation>
    <scope>INTERACTION WITH TULP3</scope>
</reference>
<reference key="114">
    <citation type="journal article" date="2024" name="J. Clin. Invest.">
        <title>The alanyl-tRNA synthetase AARS1 moonlights as a lactyltransferase to promote YAP signaling in gastric cancer.</title>
        <authorList>
            <person name="Ju J."/>
            <person name="Zhang H."/>
            <person name="Lin M."/>
            <person name="Yan Z."/>
            <person name="An L."/>
            <person name="Cao Z."/>
            <person name="Geng D."/>
            <person name="Yue J."/>
            <person name="Tang Y."/>
            <person name="Tian L."/>
            <person name="Chen F."/>
            <person name="Han Y."/>
            <person name="Wang W."/>
            <person name="Zhao S."/>
            <person name="Jiao S."/>
            <person name="Zhou Z."/>
        </authorList>
    </citation>
    <scope>FUNCTION</scope>
    <scope>CATALYTIC ACTIVITY</scope>
    <scope>ACTIVE SITE</scope>
    <scope>MUTAGENESIS OF HIS-363</scope>
</reference>
<accession>Q96EB6</accession>
<accession>Q2XNF6</accession>
<accession>Q5JVQ0</accession>
<accession>Q9GZR9</accession>
<accession>Q9Y6F0</accession>
<keyword id="KW-0002">3D-structure</keyword>
<keyword id="KW-0007">Acetylation</keyword>
<keyword id="KW-0025">Alternative splicing</keyword>
<keyword id="KW-0053">Apoptosis</keyword>
<keyword id="KW-0090">Biological rhythms</keyword>
<keyword id="KW-0963">Cytoplasm</keyword>
<keyword id="KW-0217">Developmental protein</keyword>
<keyword id="KW-0221">Differentiation</keyword>
<keyword id="KW-0945">Host-virus interaction</keyword>
<keyword id="KW-0479">Metal-binding</keyword>
<keyword id="KW-0488">Methylation</keyword>
<keyword id="KW-0496">Mitochondrion</keyword>
<keyword id="KW-0517">Myogenesis</keyword>
<keyword id="KW-0520">NAD</keyword>
<keyword id="KW-0539">Nucleus</keyword>
<keyword id="KW-0597">Phosphoprotein</keyword>
<keyword id="KW-1267">Proteomics identification</keyword>
<keyword id="KW-1185">Reference proteome</keyword>
<keyword id="KW-0702">S-nitrosylation</keyword>
<keyword id="KW-0804">Transcription</keyword>
<keyword id="KW-0805">Transcription regulation</keyword>
<keyword id="KW-0808">Transferase</keyword>
<keyword id="KW-0832">Ubl conjugation</keyword>
<keyword id="KW-0862">Zinc</keyword>
<dbReference type="EC" id="2.3.1.286" evidence="4 8 83 97 100"/>
<dbReference type="EC" id="2.3.1.-" evidence="92"/>
<dbReference type="EMBL" id="AF083106">
    <property type="protein sequence ID" value="AAD40849.2"/>
    <property type="molecule type" value="mRNA"/>
</dbReference>
<dbReference type="EMBL" id="AF235040">
    <property type="protein sequence ID" value="AAG38486.1"/>
    <property type="molecule type" value="mRNA"/>
</dbReference>
<dbReference type="EMBL" id="DQ278604">
    <property type="protein sequence ID" value="ABB72675.1"/>
    <property type="molecule type" value="Genomic_DNA"/>
</dbReference>
<dbReference type="EMBL" id="AL133551">
    <property type="status" value="NOT_ANNOTATED_CDS"/>
    <property type="molecule type" value="Genomic_DNA"/>
</dbReference>
<dbReference type="EMBL" id="BC012499">
    <property type="protein sequence ID" value="AAH12499.1"/>
    <property type="status" value="ALT_INIT"/>
    <property type="molecule type" value="mRNA"/>
</dbReference>
<dbReference type="CCDS" id="CCDS7273.1">
    <molecule id="Q96EB6-1"/>
</dbReference>
<dbReference type="RefSeq" id="NP_001135970.1">
    <property type="nucleotide sequence ID" value="NM_001142498.1"/>
</dbReference>
<dbReference type="RefSeq" id="NP_001300978.1">
    <property type="nucleotide sequence ID" value="NM_001314049.1"/>
</dbReference>
<dbReference type="RefSeq" id="NP_036370.2">
    <molecule id="Q96EB6-1"/>
    <property type="nucleotide sequence ID" value="NM_012238.4"/>
</dbReference>
<dbReference type="PDB" id="4I5I">
    <property type="method" value="X-ray"/>
    <property type="resolution" value="2.50 A"/>
    <property type="chains" value="A/B=241-516"/>
</dbReference>
<dbReference type="PDB" id="4IF6">
    <property type="method" value="X-ray"/>
    <property type="resolution" value="2.25 A"/>
    <property type="chains" value="A=234-510, B=641-665"/>
</dbReference>
<dbReference type="PDB" id="4IG9">
    <property type="method" value="X-ray"/>
    <property type="resolution" value="2.64 A"/>
    <property type="chains" value="A/C/E/G=234-510, B/D/F/H=641-665"/>
</dbReference>
<dbReference type="PDB" id="4KXQ">
    <property type="method" value="X-ray"/>
    <property type="resolution" value="1.85 A"/>
    <property type="chains" value="A=234-510, B=641-663"/>
</dbReference>
<dbReference type="PDB" id="4ZZH">
    <property type="method" value="X-ray"/>
    <property type="resolution" value="3.10 A"/>
    <property type="chains" value="A=183-505"/>
</dbReference>
<dbReference type="PDB" id="4ZZI">
    <property type="method" value="X-ray"/>
    <property type="resolution" value="2.73 A"/>
    <property type="chains" value="A=183-505"/>
</dbReference>
<dbReference type="PDB" id="4ZZJ">
    <property type="method" value="X-ray"/>
    <property type="resolution" value="2.74 A"/>
    <property type="chains" value="A=183-505"/>
</dbReference>
<dbReference type="PDB" id="5BTR">
    <property type="method" value="X-ray"/>
    <property type="resolution" value="3.20 A"/>
    <property type="chains" value="A/B/C=143-665"/>
</dbReference>
<dbReference type="PDB" id="8ANB">
    <property type="method" value="X-ray"/>
    <property type="resolution" value="1.64 A"/>
    <property type="chains" value="P=665-675"/>
</dbReference>
<dbReference type="PDBsum" id="4I5I"/>
<dbReference type="PDBsum" id="4IF6"/>
<dbReference type="PDBsum" id="4IG9"/>
<dbReference type="PDBsum" id="4KXQ"/>
<dbReference type="PDBsum" id="4ZZH"/>
<dbReference type="PDBsum" id="4ZZI"/>
<dbReference type="PDBsum" id="4ZZJ"/>
<dbReference type="PDBsum" id="5BTR"/>
<dbReference type="PDBsum" id="8ANB"/>
<dbReference type="SMR" id="Q96EB6"/>
<dbReference type="BioGRID" id="116983">
    <property type="interactions" value="410"/>
</dbReference>
<dbReference type="ComplexPortal" id="CPX-467">
    <property type="entry name" value="eNoSc complex"/>
</dbReference>
<dbReference type="CORUM" id="Q96EB6"/>
<dbReference type="DIP" id="DIP-29757N"/>
<dbReference type="FunCoup" id="Q96EB6">
    <property type="interactions" value="4620"/>
</dbReference>
<dbReference type="IntAct" id="Q96EB6">
    <property type="interactions" value="243"/>
</dbReference>
<dbReference type="MINT" id="Q96EB6"/>
<dbReference type="STRING" id="9606.ENSP00000212015"/>
<dbReference type="BindingDB" id="Q96EB6"/>
<dbReference type="ChEMBL" id="CHEMBL4506"/>
<dbReference type="DrugBank" id="DB15493">
    <property type="generic name" value="Cambinol"/>
</dbReference>
<dbReference type="DrugBank" id="DB02709">
    <property type="generic name" value="Resveratrol"/>
</dbReference>
<dbReference type="DrugBank" id="DB13978">
    <property type="generic name" value="Selisistat"/>
</dbReference>
<dbReference type="DrugBank" id="DB12186">
    <property type="generic name" value="SRT-2104"/>
</dbReference>
<dbReference type="DrugCentral" id="Q96EB6"/>
<dbReference type="GuidetoPHARMACOLOGY" id="2707"/>
<dbReference type="MoonProt" id="Q96EB6"/>
<dbReference type="GlyCosmos" id="Q96EB6">
    <property type="glycosylation" value="2 sites, 1 glycan"/>
</dbReference>
<dbReference type="GlyGen" id="Q96EB6">
    <property type="glycosylation" value="2 sites, 1 O-linked glycan (2 sites)"/>
</dbReference>
<dbReference type="iPTMnet" id="Q96EB6"/>
<dbReference type="MetOSite" id="Q96EB6"/>
<dbReference type="PhosphoSitePlus" id="Q96EB6"/>
<dbReference type="BioMuta" id="SIRT1"/>
<dbReference type="DMDM" id="38258633"/>
<dbReference type="jPOST" id="Q96EB6"/>
<dbReference type="MassIVE" id="Q96EB6"/>
<dbReference type="PaxDb" id="9606-ENSP00000212015"/>
<dbReference type="PeptideAtlas" id="Q96EB6"/>
<dbReference type="ProteomicsDB" id="76393">
    <molecule id="Q96EB6-1"/>
</dbReference>
<dbReference type="ProteomicsDB" id="76394">
    <molecule id="Q96EB6-2"/>
</dbReference>
<dbReference type="Pumba" id="Q96EB6"/>
<dbReference type="Antibodypedia" id="1637">
    <property type="antibodies" value="1151 antibodies from 51 providers"/>
</dbReference>
<dbReference type="DNASU" id="23411"/>
<dbReference type="Ensembl" id="ENST00000212015.11">
    <molecule id="Q96EB6-1"/>
    <property type="protein sequence ID" value="ENSP00000212015.6"/>
    <property type="gene ID" value="ENSG00000096717.12"/>
</dbReference>
<dbReference type="GeneID" id="23411"/>
<dbReference type="KEGG" id="hsa:23411"/>
<dbReference type="MANE-Select" id="ENST00000212015.11">
    <property type="protein sequence ID" value="ENSP00000212015.6"/>
    <property type="RefSeq nucleotide sequence ID" value="NM_012238.5"/>
    <property type="RefSeq protein sequence ID" value="NP_036370.2"/>
</dbReference>
<dbReference type="UCSC" id="uc001jnd.3">
    <molecule id="Q96EB6-1"/>
    <property type="organism name" value="human"/>
</dbReference>
<dbReference type="AGR" id="HGNC:14929"/>
<dbReference type="CTD" id="23411"/>
<dbReference type="DisGeNET" id="23411"/>
<dbReference type="GeneCards" id="SIRT1"/>
<dbReference type="HGNC" id="HGNC:14929">
    <property type="gene designation" value="SIRT1"/>
</dbReference>
<dbReference type="HPA" id="ENSG00000096717">
    <property type="expression patterns" value="Low tissue specificity"/>
</dbReference>
<dbReference type="MalaCards" id="SIRT1"/>
<dbReference type="MIM" id="604479">
    <property type="type" value="gene"/>
</dbReference>
<dbReference type="neXtProt" id="NX_Q96EB6"/>
<dbReference type="OpenTargets" id="ENSG00000096717"/>
<dbReference type="PharmGKB" id="PA37935"/>
<dbReference type="VEuPathDB" id="HostDB:ENSG00000096717"/>
<dbReference type="eggNOG" id="KOG2684">
    <property type="taxonomic scope" value="Eukaryota"/>
</dbReference>
<dbReference type="GeneTree" id="ENSGT00940000159406"/>
<dbReference type="HOGENOM" id="CLU_016587_0_0_1"/>
<dbReference type="InParanoid" id="Q96EB6"/>
<dbReference type="OMA" id="RYWMSRV"/>
<dbReference type="OrthoDB" id="424302at2759"/>
<dbReference type="PAN-GO" id="Q96EB6">
    <property type="GO annotations" value="10 GO annotations based on evolutionary models"/>
</dbReference>
<dbReference type="PhylomeDB" id="Q96EB6"/>
<dbReference type="TreeFam" id="TF105896"/>
<dbReference type="BioCyc" id="MetaCyc:ENSG00000096717-MONOMER"/>
<dbReference type="BRENDA" id="2.3.1.286">
    <property type="organism ID" value="2681"/>
</dbReference>
<dbReference type="PathwayCommons" id="Q96EB6"/>
<dbReference type="Reactome" id="R-HSA-3371453">
    <property type="pathway name" value="Regulation of HSF1-mediated heat shock response"/>
</dbReference>
<dbReference type="Reactome" id="R-HSA-400253">
    <property type="pathway name" value="Circadian Clock"/>
</dbReference>
<dbReference type="Reactome" id="R-HSA-427359">
    <property type="pathway name" value="SIRT1 negatively regulates rRNA expression"/>
</dbReference>
<dbReference type="Reactome" id="R-HSA-9617629">
    <property type="pathway name" value="Regulation of FOXO transcriptional activity by acetylation"/>
</dbReference>
<dbReference type="Reactome" id="R-HSA-9707616">
    <property type="pathway name" value="Heme signaling"/>
</dbReference>
<dbReference type="Reactome" id="R-HSA-9841922">
    <property type="pathway name" value="MLL4 and MLL3 complexes regulate expression of PPARG target genes in adipogenesis and hepatic steatosis"/>
</dbReference>
<dbReference type="Reactome" id="R-HSA-9854907">
    <property type="pathway name" value="Regulation of MITF-M dependent genes involved in metabolism"/>
</dbReference>
<dbReference type="Reactome" id="R-HSA-9856649">
    <property type="pathway name" value="Transcriptional and post-translational regulation of MITF-M expression and activity"/>
</dbReference>
<dbReference type="SABIO-RK" id="Q96EB6"/>
<dbReference type="SignaLink" id="Q96EB6"/>
<dbReference type="SIGNOR" id="Q96EB6"/>
<dbReference type="STRENDA-DB" id="NC2FY0">
    <property type="experiment" value="SIRT1 WT and variant activation by resveratrol and STAC1"/>
</dbReference>
<dbReference type="BioGRID-ORCS" id="23411">
    <property type="hits" value="25 hits in 1175 CRISPR screens"/>
</dbReference>
<dbReference type="CD-CODE" id="B5B9A610">
    <property type="entry name" value="PML body"/>
</dbReference>
<dbReference type="EvolutionaryTrace" id="Q96EB6"/>
<dbReference type="GeneWiki" id="Sirtuin_1"/>
<dbReference type="GenomeRNAi" id="23411"/>
<dbReference type="Pharos" id="Q96EB6">
    <property type="development level" value="Tchem"/>
</dbReference>
<dbReference type="PRO" id="PR:Q96EB6"/>
<dbReference type="Proteomes" id="UP000005640">
    <property type="component" value="Chromosome 10"/>
</dbReference>
<dbReference type="RNAct" id="Q96EB6">
    <property type="molecule type" value="protein"/>
</dbReference>
<dbReference type="Bgee" id="ENSG00000096717">
    <property type="expression patterns" value="Expressed in calcaneal tendon and 192 other cell types or tissues"/>
</dbReference>
<dbReference type="ExpressionAtlas" id="Q96EB6">
    <property type="expression patterns" value="baseline and differential"/>
</dbReference>
<dbReference type="GO" id="GO:0000785">
    <property type="term" value="C:chromatin"/>
    <property type="evidence" value="ECO:0000314"/>
    <property type="project" value="UniProtKB"/>
</dbReference>
<dbReference type="GO" id="GO:0005677">
    <property type="term" value="C:chromatin silencing complex"/>
    <property type="evidence" value="ECO:0000314"/>
    <property type="project" value="UniProtKB"/>
</dbReference>
<dbReference type="GO" id="GO:0005737">
    <property type="term" value="C:cytoplasm"/>
    <property type="evidence" value="ECO:0000314"/>
    <property type="project" value="BHF-UCL"/>
</dbReference>
<dbReference type="GO" id="GO:0005829">
    <property type="term" value="C:cytosol"/>
    <property type="evidence" value="ECO:0000314"/>
    <property type="project" value="HPA"/>
</dbReference>
<dbReference type="GO" id="GO:0061773">
    <property type="term" value="C:eNoSc complex"/>
    <property type="evidence" value="ECO:0000353"/>
    <property type="project" value="ComplexPortal"/>
</dbReference>
<dbReference type="GO" id="GO:0000791">
    <property type="term" value="C:euchromatin"/>
    <property type="evidence" value="ECO:0000314"/>
    <property type="project" value="UniProtKB"/>
</dbReference>
<dbReference type="GO" id="GO:0001650">
    <property type="term" value="C:fibrillar center"/>
    <property type="evidence" value="ECO:0000314"/>
    <property type="project" value="HPA"/>
</dbReference>
<dbReference type="GO" id="GO:0000792">
    <property type="term" value="C:heterochromatin"/>
    <property type="evidence" value="ECO:0000314"/>
    <property type="project" value="UniProtKB"/>
</dbReference>
<dbReference type="GO" id="GO:0005739">
    <property type="term" value="C:mitochondrion"/>
    <property type="evidence" value="ECO:0000314"/>
    <property type="project" value="HPA"/>
</dbReference>
<dbReference type="GO" id="GO:0005635">
    <property type="term" value="C:nuclear envelope"/>
    <property type="evidence" value="ECO:0000314"/>
    <property type="project" value="BHF-UCL"/>
</dbReference>
<dbReference type="GO" id="GO:0005637">
    <property type="term" value="C:nuclear inner membrane"/>
    <property type="evidence" value="ECO:0000314"/>
    <property type="project" value="UniProtKB"/>
</dbReference>
<dbReference type="GO" id="GO:0005730">
    <property type="term" value="C:nucleolus"/>
    <property type="evidence" value="ECO:0000314"/>
    <property type="project" value="BHF-UCL"/>
</dbReference>
<dbReference type="GO" id="GO:0005654">
    <property type="term" value="C:nucleoplasm"/>
    <property type="evidence" value="ECO:0000314"/>
    <property type="project" value="HPA"/>
</dbReference>
<dbReference type="GO" id="GO:0005634">
    <property type="term" value="C:nucleus"/>
    <property type="evidence" value="ECO:0000314"/>
    <property type="project" value="UniProtKB"/>
</dbReference>
<dbReference type="GO" id="GO:0016605">
    <property type="term" value="C:PML body"/>
    <property type="evidence" value="ECO:0000314"/>
    <property type="project" value="BHF-UCL"/>
</dbReference>
<dbReference type="GO" id="GO:0033553">
    <property type="term" value="C:rDNA heterochromatin"/>
    <property type="evidence" value="ECO:0000314"/>
    <property type="project" value="UniProtKB"/>
</dbReference>
<dbReference type="GO" id="GO:0043425">
    <property type="term" value="F:bHLH transcription factor binding"/>
    <property type="evidence" value="ECO:0000353"/>
    <property type="project" value="UniProtKB"/>
</dbReference>
<dbReference type="GO" id="GO:0019213">
    <property type="term" value="F:deacetylase activity"/>
    <property type="evidence" value="ECO:0000314"/>
    <property type="project" value="UniProtKB"/>
</dbReference>
<dbReference type="GO" id="GO:0140297">
    <property type="term" value="F:DNA-binding transcription factor binding"/>
    <property type="evidence" value="ECO:0000353"/>
    <property type="project" value="UniProtKB"/>
</dbReference>
<dbReference type="GO" id="GO:0008047">
    <property type="term" value="F:enzyme activator activity"/>
    <property type="evidence" value="ECO:0000314"/>
    <property type="project" value="UniProtKB"/>
</dbReference>
<dbReference type="GO" id="GO:0019899">
    <property type="term" value="F:enzyme binding"/>
    <property type="evidence" value="ECO:0000353"/>
    <property type="project" value="UniProtKB"/>
</dbReference>
<dbReference type="GO" id="GO:0042393">
    <property type="term" value="F:histone binding"/>
    <property type="evidence" value="ECO:0000353"/>
    <property type="project" value="UniProtKB"/>
</dbReference>
<dbReference type="GO" id="GO:0004407">
    <property type="term" value="F:histone deacetylase activity"/>
    <property type="evidence" value="ECO:0000269"/>
    <property type="project" value="Reactome"/>
</dbReference>
<dbReference type="GO" id="GO:0017136">
    <property type="term" value="F:histone deacetylase activity, NAD-dependent"/>
    <property type="evidence" value="ECO:0000314"/>
    <property type="project" value="UniProtKB"/>
</dbReference>
<dbReference type="GO" id="GO:0141050">
    <property type="term" value="F:histone H3K deacetylase activity"/>
    <property type="evidence" value="ECO:0000314"/>
    <property type="project" value="BHF-UCL"/>
</dbReference>
<dbReference type="GO" id="GO:0032041">
    <property type="term" value="F:histone H3K14 deacetylase activity, NAD-dependent"/>
    <property type="evidence" value="ECO:0000314"/>
    <property type="project" value="BHF-UCL"/>
</dbReference>
<dbReference type="GO" id="GO:0046969">
    <property type="term" value="F:histone H3K9 deacetylase activity, NAD-dependent"/>
    <property type="evidence" value="ECO:0000314"/>
    <property type="project" value="BHF-UCL"/>
</dbReference>
<dbReference type="GO" id="GO:0140937">
    <property type="term" value="F:histone H4K12 deacetylase activity, hydrolytic mechanism"/>
    <property type="evidence" value="ECO:0000314"/>
    <property type="project" value="BHF-UCL"/>
</dbReference>
<dbReference type="GO" id="GO:0046970">
    <property type="term" value="F:histone H4K16 deacetylase activity, NAD-dependent"/>
    <property type="evidence" value="ECO:0000314"/>
    <property type="project" value="BHF-UCL"/>
</dbReference>
<dbReference type="GO" id="GO:0043398">
    <property type="term" value="F:HLH domain binding"/>
    <property type="evidence" value="ECO:0000353"/>
    <property type="project" value="BHF-UCL"/>
</dbReference>
<dbReference type="GO" id="GO:0042802">
    <property type="term" value="F:identical protein binding"/>
    <property type="evidence" value="ECO:0000353"/>
    <property type="project" value="BHF-UCL"/>
</dbReference>
<dbReference type="GO" id="GO:1990254">
    <property type="term" value="F:keratin filament binding"/>
    <property type="evidence" value="ECO:0000353"/>
    <property type="project" value="UniProtKB"/>
</dbReference>
<dbReference type="GO" id="GO:0046872">
    <property type="term" value="F:metal ion binding"/>
    <property type="evidence" value="ECO:0007669"/>
    <property type="project" value="UniProtKB-KW"/>
</dbReference>
<dbReference type="GO" id="GO:0051019">
    <property type="term" value="F:mitogen-activated protein kinase binding"/>
    <property type="evidence" value="ECO:0000353"/>
    <property type="project" value="BHF-UCL"/>
</dbReference>
<dbReference type="GO" id="GO:0070403">
    <property type="term" value="F:NAD+ binding"/>
    <property type="evidence" value="ECO:0000318"/>
    <property type="project" value="GO_Central"/>
</dbReference>
<dbReference type="GO" id="GO:0160012">
    <property type="term" value="F:NAD-dependent histone decrotonylase activity"/>
    <property type="evidence" value="ECO:0000314"/>
    <property type="project" value="UniProtKB"/>
</dbReference>
<dbReference type="GO" id="GO:0034979">
    <property type="term" value="F:NAD-dependent protein lysine deacetylase activity"/>
    <property type="evidence" value="ECO:0000314"/>
    <property type="project" value="UniProt"/>
</dbReference>
<dbReference type="GO" id="GO:0141208">
    <property type="term" value="F:NAD-dependent protein lysine delactylase activity"/>
    <property type="evidence" value="ECO:0000314"/>
    <property type="project" value="UniProtKB"/>
</dbReference>
<dbReference type="GO" id="GO:0106231">
    <property type="term" value="F:NAD-dependent protein-lysine depropionylase activity"/>
    <property type="evidence" value="ECO:0000250"/>
    <property type="project" value="UniProtKB"/>
</dbReference>
<dbReference type="GO" id="GO:0016922">
    <property type="term" value="F:nuclear receptor binding"/>
    <property type="evidence" value="ECO:0000353"/>
    <property type="project" value="UniProtKB"/>
</dbReference>
<dbReference type="GO" id="GO:0002039">
    <property type="term" value="F:p53 binding"/>
    <property type="evidence" value="ECO:0000353"/>
    <property type="project" value="BHF-UCL"/>
</dbReference>
<dbReference type="GO" id="GO:1990841">
    <property type="term" value="F:promoter-specific chromatin binding"/>
    <property type="evidence" value="ECO:0007669"/>
    <property type="project" value="Ensembl"/>
</dbReference>
<dbReference type="GO" id="GO:0033558">
    <property type="term" value="F:protein lysine deacetylase activity"/>
    <property type="evidence" value="ECO:0000314"/>
    <property type="project" value="UniProtKB"/>
</dbReference>
<dbReference type="GO" id="GO:0000978">
    <property type="term" value="F:RNA polymerase II cis-regulatory region sequence-specific DNA binding"/>
    <property type="evidence" value="ECO:0007669"/>
    <property type="project" value="Ensembl"/>
</dbReference>
<dbReference type="GO" id="GO:0003713">
    <property type="term" value="F:transcription coactivator activity"/>
    <property type="evidence" value="ECO:0007669"/>
    <property type="project" value="Ensembl"/>
</dbReference>
<dbReference type="GO" id="GO:0003714">
    <property type="term" value="F:transcription corepressor activity"/>
    <property type="evidence" value="ECO:0000314"/>
    <property type="project" value="BHF-UCL"/>
</dbReference>
<dbReference type="GO" id="GO:0140416">
    <property type="term" value="F:transcription regulator inhibitor activity"/>
    <property type="evidence" value="ECO:0000314"/>
    <property type="project" value="BHF-UCL"/>
</dbReference>
<dbReference type="GO" id="GO:0001525">
    <property type="term" value="P:angiogenesis"/>
    <property type="evidence" value="ECO:0000314"/>
    <property type="project" value="UniProtKB"/>
</dbReference>
<dbReference type="GO" id="GO:0042595">
    <property type="term" value="P:behavioral response to starvation"/>
    <property type="evidence" value="ECO:0007669"/>
    <property type="project" value="Ensembl"/>
</dbReference>
<dbReference type="GO" id="GO:0042149">
    <property type="term" value="P:cellular response to glucose starvation"/>
    <property type="evidence" value="ECO:0000315"/>
    <property type="project" value="ComplexPortal"/>
</dbReference>
<dbReference type="GO" id="GO:0070301">
    <property type="term" value="P:cellular response to hydrogen peroxide"/>
    <property type="evidence" value="ECO:0000314"/>
    <property type="project" value="BHF-UCL"/>
</dbReference>
<dbReference type="GO" id="GO:0071456">
    <property type="term" value="P:cellular response to hypoxia"/>
    <property type="evidence" value="ECO:0000315"/>
    <property type="project" value="UniProtKB"/>
</dbReference>
<dbReference type="GO" id="GO:0071479">
    <property type="term" value="P:cellular response to ionizing radiation"/>
    <property type="evidence" value="ECO:0000250"/>
    <property type="project" value="UniProtKB"/>
</dbReference>
<dbReference type="GO" id="GO:1990830">
    <property type="term" value="P:cellular response to leukemia inhibitory factor"/>
    <property type="evidence" value="ECO:0007669"/>
    <property type="project" value="Ensembl"/>
</dbReference>
<dbReference type="GO" id="GO:0009267">
    <property type="term" value="P:cellular response to starvation"/>
    <property type="evidence" value="ECO:0000250"/>
    <property type="project" value="BHF-UCL"/>
</dbReference>
<dbReference type="GO" id="GO:0071356">
    <property type="term" value="P:cellular response to tumor necrosis factor"/>
    <property type="evidence" value="ECO:0000314"/>
    <property type="project" value="UniProtKB"/>
</dbReference>
<dbReference type="GO" id="GO:0042632">
    <property type="term" value="P:cholesterol homeostasis"/>
    <property type="evidence" value="ECO:0000250"/>
    <property type="project" value="UniProtKB"/>
</dbReference>
<dbReference type="GO" id="GO:0006325">
    <property type="term" value="P:chromatin organization"/>
    <property type="evidence" value="ECO:0000315"/>
    <property type="project" value="UniProtKB"/>
</dbReference>
<dbReference type="GO" id="GO:0032922">
    <property type="term" value="P:circadian regulation of gene expression"/>
    <property type="evidence" value="ECO:0000315"/>
    <property type="project" value="UniProtKB"/>
</dbReference>
<dbReference type="GO" id="GO:0006974">
    <property type="term" value="P:DNA damage response"/>
    <property type="evidence" value="ECO:0000314"/>
    <property type="project" value="UniProtKB"/>
</dbReference>
<dbReference type="GO" id="GO:0006346">
    <property type="term" value="P:DNA methylation-dependent constitutive heterochromatin formation"/>
    <property type="evidence" value="ECO:0000304"/>
    <property type="project" value="UniProtKB"/>
</dbReference>
<dbReference type="GO" id="GO:0140861">
    <property type="term" value="P:DNA repair-dependent chromatin remodeling"/>
    <property type="evidence" value="ECO:0000314"/>
    <property type="project" value="UniProt"/>
</dbReference>
<dbReference type="GO" id="GO:0000731">
    <property type="term" value="P:DNA synthesis involved in DNA repair"/>
    <property type="evidence" value="ECO:0000250"/>
    <property type="project" value="UniProtKB"/>
</dbReference>
<dbReference type="GO" id="GO:0097009">
    <property type="term" value="P:energy homeostasis"/>
    <property type="evidence" value="ECO:0000315"/>
    <property type="project" value="ComplexPortal"/>
</dbReference>
<dbReference type="GO" id="GO:0055089">
    <property type="term" value="P:fatty acid homeostasis"/>
    <property type="evidence" value="ECO:0000250"/>
    <property type="project" value="UniProtKB"/>
</dbReference>
<dbReference type="GO" id="GO:0031507">
    <property type="term" value="P:heterochromatin formation"/>
    <property type="evidence" value="ECO:0000314"/>
    <property type="project" value="BHF-UCL"/>
</dbReference>
<dbReference type="GO" id="GO:0001678">
    <property type="term" value="P:intracellular glucose homeostasis"/>
    <property type="evidence" value="ECO:0000250"/>
    <property type="project" value="UniProtKB"/>
</dbReference>
<dbReference type="GO" id="GO:0035356">
    <property type="term" value="P:intracellular triglyceride homeostasis"/>
    <property type="evidence" value="ECO:0000250"/>
    <property type="project" value="UniProtKB"/>
</dbReference>
<dbReference type="GO" id="GO:0042771">
    <property type="term" value="P:intrinsic apoptotic signaling pathway in response to DNA damage by p53 class mediator"/>
    <property type="evidence" value="ECO:0000315"/>
    <property type="project" value="UniProtKB"/>
</dbReference>
<dbReference type="GO" id="GO:0033210">
    <property type="term" value="P:leptin-mediated signaling pathway"/>
    <property type="evidence" value="ECO:0000250"/>
    <property type="project" value="UniProtKB"/>
</dbReference>
<dbReference type="GO" id="GO:0030225">
    <property type="term" value="P:macrophage differentiation"/>
    <property type="evidence" value="ECO:0000250"/>
    <property type="project" value="UniProtKB"/>
</dbReference>
<dbReference type="GO" id="GO:0051658">
    <property type="term" value="P:maintenance of nucleus location"/>
    <property type="evidence" value="ECO:0000314"/>
    <property type="project" value="UniProt"/>
</dbReference>
<dbReference type="GO" id="GO:0007517">
    <property type="term" value="P:muscle organ development"/>
    <property type="evidence" value="ECO:0007669"/>
    <property type="project" value="UniProtKB-KW"/>
</dbReference>
<dbReference type="GO" id="GO:0060766">
    <property type="term" value="P:negative regulation of androgen receptor signaling pathway"/>
    <property type="evidence" value="ECO:0000315"/>
    <property type="project" value="BHF-UCL"/>
</dbReference>
<dbReference type="GO" id="GO:0043066">
    <property type="term" value="P:negative regulation of apoptotic process"/>
    <property type="evidence" value="ECO:0000315"/>
    <property type="project" value="UniProtKB"/>
</dbReference>
<dbReference type="GO" id="GO:1902424">
    <property type="term" value="P:negative regulation of attachment of mitotic spindle microtubules to kinetochore"/>
    <property type="evidence" value="ECO:0000314"/>
    <property type="project" value="UniProt"/>
</dbReference>
<dbReference type="GO" id="GO:0043124">
    <property type="term" value="P:negative regulation of canonical NF-kappaB signal transduction"/>
    <property type="evidence" value="ECO:0000314"/>
    <property type="project" value="UniProtKB"/>
</dbReference>
<dbReference type="GO" id="GO:0045786">
    <property type="term" value="P:negative regulation of cell cycle"/>
    <property type="evidence" value="ECO:0000315"/>
    <property type="project" value="ComplexPortal"/>
</dbReference>
<dbReference type="GO" id="GO:2000655">
    <property type="term" value="P:negative regulation of cellular response to testosterone stimulus"/>
    <property type="evidence" value="ECO:0000315"/>
    <property type="project" value="BHF-UCL"/>
</dbReference>
<dbReference type="GO" id="GO:2000773">
    <property type="term" value="P:negative regulation of cellular senescence"/>
    <property type="evidence" value="ECO:0000314"/>
    <property type="project" value="UniProtKB"/>
</dbReference>
<dbReference type="GO" id="GO:0043518">
    <property type="term" value="P:negative regulation of DNA damage response, signal transduction by p53 class mediator"/>
    <property type="evidence" value="ECO:0000314"/>
    <property type="project" value="BHF-UCL"/>
</dbReference>
<dbReference type="GO" id="GO:0043433">
    <property type="term" value="P:negative regulation of DNA-binding transcription factor activity"/>
    <property type="evidence" value="ECO:0000314"/>
    <property type="project" value="ParkinsonsUK-UCL"/>
</dbReference>
<dbReference type="GO" id="GO:0045892">
    <property type="term" value="P:negative regulation of DNA-templated transcription"/>
    <property type="evidence" value="ECO:0000314"/>
    <property type="project" value="UniProtKB"/>
</dbReference>
<dbReference type="GO" id="GO:0045599">
    <property type="term" value="P:negative regulation of fat cell differentiation"/>
    <property type="evidence" value="ECO:0000250"/>
    <property type="project" value="BHF-UCL"/>
</dbReference>
<dbReference type="GO" id="GO:0010629">
    <property type="term" value="P:negative regulation of gene expression"/>
    <property type="evidence" value="ECO:0000315"/>
    <property type="project" value="CACAO"/>
</dbReference>
<dbReference type="GO" id="GO:0035331">
    <property type="term" value="P:negative regulation of hippo signaling"/>
    <property type="evidence" value="ECO:0000314"/>
    <property type="project" value="UniProt"/>
</dbReference>
<dbReference type="GO" id="GO:1902166">
    <property type="term" value="P:negative regulation of intrinsic apoptotic signaling pathway in response to DNA damage by p53 class mediator"/>
    <property type="evidence" value="ECO:0000250"/>
    <property type="project" value="BHF-UCL"/>
</dbReference>
<dbReference type="GO" id="GO:0043524">
    <property type="term" value="P:negative regulation of neuron apoptotic process"/>
    <property type="evidence" value="ECO:0007669"/>
    <property type="project" value="Ensembl"/>
</dbReference>
<dbReference type="GO" id="GO:0032088">
    <property type="term" value="P:negative regulation of NF-kappaB transcription factor activity"/>
    <property type="evidence" value="ECO:0000314"/>
    <property type="project" value="UniProtKB"/>
</dbReference>
<dbReference type="GO" id="GO:1902176">
    <property type="term" value="P:negative regulation of oxidative stress-induced intrinsic apoptotic signaling pathway"/>
    <property type="evidence" value="ECO:0000315"/>
    <property type="project" value="BHF-UCL"/>
</dbReference>
<dbReference type="GO" id="GO:2000757">
    <property type="term" value="P:negative regulation of peptidyl-lysine acetylation"/>
    <property type="evidence" value="ECO:0000314"/>
    <property type="project" value="UniProtKB"/>
</dbReference>
<dbReference type="GO" id="GO:0051898">
    <property type="term" value="P:negative regulation of phosphatidylinositol 3-kinase/protein kinase B signal transduction"/>
    <property type="evidence" value="ECO:0000315"/>
    <property type="project" value="UniProtKB"/>
</dbReference>
<dbReference type="GO" id="GO:0042326">
    <property type="term" value="P:negative regulation of phosphorylation"/>
    <property type="evidence" value="ECO:0000315"/>
    <property type="project" value="UniProtKB"/>
</dbReference>
<dbReference type="GO" id="GO:0031393">
    <property type="term" value="P:negative regulation of prostaglandin biosynthetic process"/>
    <property type="evidence" value="ECO:0000250"/>
    <property type="project" value="UniProtKB"/>
</dbReference>
<dbReference type="GO" id="GO:1901984">
    <property type="term" value="P:negative regulation of protein acetylation"/>
    <property type="evidence" value="ECO:0000315"/>
    <property type="project" value="CACAO"/>
</dbReference>
<dbReference type="GO" id="GO:1901797">
    <property type="term" value="P:negative regulation of signal transduction by p53 class mediator"/>
    <property type="evidence" value="ECO:0000314"/>
    <property type="project" value="UniProt"/>
</dbReference>
<dbReference type="GO" id="GO:0032007">
    <property type="term" value="P:negative regulation of TOR signaling"/>
    <property type="evidence" value="ECO:0000315"/>
    <property type="project" value="UniProtKB"/>
</dbReference>
<dbReference type="GO" id="GO:0000122">
    <property type="term" value="P:negative regulation of transcription by RNA polymerase II"/>
    <property type="evidence" value="ECO:0000314"/>
    <property type="project" value="UniProtKB"/>
</dbReference>
<dbReference type="GO" id="GO:0030512">
    <property type="term" value="P:negative regulation of transforming growth factor beta receptor signaling pathway"/>
    <property type="evidence" value="ECO:0000250"/>
    <property type="project" value="UniProtKB"/>
</dbReference>
<dbReference type="GO" id="GO:0010868">
    <property type="term" value="P:negative regulation of triglyceride biosynthetic process"/>
    <property type="evidence" value="ECO:0000314"/>
    <property type="project" value="UniProt"/>
</dbReference>
<dbReference type="GO" id="GO:0001542">
    <property type="term" value="P:ovulation from ovarian follicle"/>
    <property type="evidence" value="ECO:0007669"/>
    <property type="project" value="Ensembl"/>
</dbReference>
<dbReference type="GO" id="GO:0018394">
    <property type="term" value="P:peptidyl-lysine acetylation"/>
    <property type="evidence" value="ECO:0000315"/>
    <property type="project" value="UniProtKB"/>
</dbReference>
<dbReference type="GO" id="GO:0002821">
    <property type="term" value="P:positive regulation of adaptive immune response"/>
    <property type="evidence" value="ECO:0000314"/>
    <property type="project" value="UniProtKB"/>
</dbReference>
<dbReference type="GO" id="GO:1904179">
    <property type="term" value="P:positive regulation of adipose tissue development"/>
    <property type="evidence" value="ECO:0000250"/>
    <property type="project" value="UniProtKB"/>
</dbReference>
<dbReference type="GO" id="GO:0045766">
    <property type="term" value="P:positive regulation of angiogenesis"/>
    <property type="evidence" value="ECO:0000314"/>
    <property type="project" value="BHF-UCL"/>
</dbReference>
<dbReference type="GO" id="GO:0043065">
    <property type="term" value="P:positive regulation of apoptotic process"/>
    <property type="evidence" value="ECO:0000314"/>
    <property type="project" value="UniProtKB"/>
</dbReference>
<dbReference type="GO" id="GO:0043536">
    <property type="term" value="P:positive regulation of blood vessel endothelial cell migration"/>
    <property type="evidence" value="ECO:0000314"/>
    <property type="project" value="BHF-UCL"/>
</dbReference>
<dbReference type="GO" id="GO:2000481">
    <property type="term" value="P:positive regulation of cAMP-dependent protein kinase activity"/>
    <property type="evidence" value="ECO:0000315"/>
    <property type="project" value="UniProtKB"/>
</dbReference>
<dbReference type="GO" id="GO:0008284">
    <property type="term" value="P:positive regulation of cell population proliferation"/>
    <property type="evidence" value="ECO:0000315"/>
    <property type="project" value="UniProtKB"/>
</dbReference>
<dbReference type="GO" id="GO:2000774">
    <property type="term" value="P:positive regulation of cellular senescence"/>
    <property type="evidence" value="ECO:0000314"/>
    <property type="project" value="UniProtKB"/>
</dbReference>
<dbReference type="GO" id="GO:0010875">
    <property type="term" value="P:positive regulation of cholesterol efflux"/>
    <property type="evidence" value="ECO:0000250"/>
    <property type="project" value="UniProtKB"/>
</dbReference>
<dbReference type="GO" id="GO:0045739">
    <property type="term" value="P:positive regulation of DNA repair"/>
    <property type="evidence" value="ECO:0000315"/>
    <property type="project" value="UniProtKB"/>
</dbReference>
<dbReference type="GO" id="GO:2000781">
    <property type="term" value="P:positive regulation of double-strand break repair"/>
    <property type="evidence" value="ECO:0000314"/>
    <property type="project" value="UniProt"/>
</dbReference>
<dbReference type="GO" id="GO:1902237">
    <property type="term" value="P:positive regulation of endoplasmic reticulum stress-induced intrinsic apoptotic signaling pathway"/>
    <property type="evidence" value="ECO:0007669"/>
    <property type="project" value="Ensembl"/>
</dbReference>
<dbReference type="GO" id="GO:0001938">
    <property type="term" value="P:positive regulation of endothelial cell proliferation"/>
    <property type="evidence" value="ECO:0000315"/>
    <property type="project" value="AgBase"/>
</dbReference>
<dbReference type="GO" id="GO:0045722">
    <property type="term" value="P:positive regulation of gluconeogenesis"/>
    <property type="evidence" value="ECO:0000314"/>
    <property type="project" value="UniProtKB"/>
</dbReference>
<dbReference type="GO" id="GO:0046628">
    <property type="term" value="P:positive regulation of insulin receptor signaling pathway"/>
    <property type="evidence" value="ECO:0000314"/>
    <property type="project" value="UniProtKB"/>
</dbReference>
<dbReference type="GO" id="GO:0016239">
    <property type="term" value="P:positive regulation of macroautophagy"/>
    <property type="evidence" value="ECO:0000314"/>
    <property type="project" value="UniProtKB"/>
</dbReference>
<dbReference type="GO" id="GO:2000111">
    <property type="term" value="P:positive regulation of macrophage apoptotic process"/>
    <property type="evidence" value="ECO:0000250"/>
    <property type="project" value="UniProtKB"/>
</dbReference>
<dbReference type="GO" id="GO:0060907">
    <property type="term" value="P:positive regulation of macrophage cytokine production"/>
    <property type="evidence" value="ECO:0000250"/>
    <property type="project" value="UniProtKB"/>
</dbReference>
<dbReference type="GO" id="GO:0045348">
    <property type="term" value="P:positive regulation of MHC class II biosynthetic process"/>
    <property type="evidence" value="ECO:0000314"/>
    <property type="project" value="UniProtKB"/>
</dbReference>
<dbReference type="GO" id="GO:0051897">
    <property type="term" value="P:positive regulation of phosphatidylinositol 3-kinase/protein kinase B signal transduction"/>
    <property type="evidence" value="ECO:0000250"/>
    <property type="project" value="UniProtKB"/>
</dbReference>
<dbReference type="GO" id="GO:0032436">
    <property type="term" value="P:positive regulation of proteasomal ubiquitin-dependent protein catabolic process"/>
    <property type="evidence" value="ECO:0000315"/>
    <property type="project" value="AgBase"/>
</dbReference>
<dbReference type="GO" id="GO:0001934">
    <property type="term" value="P:positive regulation of protein phosphorylation"/>
    <property type="evidence" value="ECO:0000250"/>
    <property type="project" value="UniProtKB"/>
</dbReference>
<dbReference type="GO" id="GO:0051152">
    <property type="term" value="P:positive regulation of smooth muscle cell differentiation"/>
    <property type="evidence" value="ECO:0007669"/>
    <property type="project" value="Ensembl"/>
</dbReference>
<dbReference type="GO" id="GO:0045944">
    <property type="term" value="P:positive regulation of transcription by RNA polymerase II"/>
    <property type="evidence" value="ECO:0000314"/>
    <property type="project" value="UniProtKB"/>
</dbReference>
<dbReference type="GO" id="GO:0043161">
    <property type="term" value="P:proteasome-mediated ubiquitin-dependent protein catabolic process"/>
    <property type="evidence" value="ECO:0000315"/>
    <property type="project" value="UniProtKB"/>
</dbReference>
<dbReference type="GO" id="GO:0006476">
    <property type="term" value="P:protein deacetylation"/>
    <property type="evidence" value="ECO:0000314"/>
    <property type="project" value="UniProtKB"/>
</dbReference>
<dbReference type="GO" id="GO:0106230">
    <property type="term" value="P:protein depropionylation"/>
    <property type="evidence" value="ECO:0000250"/>
    <property type="project" value="UniProtKB"/>
</dbReference>
<dbReference type="GO" id="GO:0031648">
    <property type="term" value="P:protein destabilization"/>
    <property type="evidence" value="ECO:0000250"/>
    <property type="project" value="UniProtKB"/>
</dbReference>
<dbReference type="GO" id="GO:0016567">
    <property type="term" value="P:protein ubiquitination"/>
    <property type="evidence" value="ECO:0000314"/>
    <property type="project" value="UniProtKB"/>
</dbReference>
<dbReference type="GO" id="GO:0000720">
    <property type="term" value="P:pyrimidine dimer repair by nucleotide-excision repair"/>
    <property type="evidence" value="ECO:0000315"/>
    <property type="project" value="UniProtKB"/>
</dbReference>
<dbReference type="GO" id="GO:0000183">
    <property type="term" value="P:rDNA heterochromatin formation"/>
    <property type="evidence" value="ECO:0000314"/>
    <property type="project" value="UniProtKB"/>
</dbReference>
<dbReference type="GO" id="GO:0042981">
    <property type="term" value="P:regulation of apoptotic process"/>
    <property type="evidence" value="ECO:0000315"/>
    <property type="project" value="UniProtKB"/>
</dbReference>
<dbReference type="GO" id="GO:0070857">
    <property type="term" value="P:regulation of bile acid biosynthetic process"/>
    <property type="evidence" value="ECO:0000250"/>
    <property type="project" value="UniProtKB"/>
</dbReference>
<dbReference type="GO" id="GO:0090335">
    <property type="term" value="P:regulation of brown fat cell differentiation"/>
    <property type="evidence" value="ECO:0000250"/>
    <property type="project" value="UniProtKB"/>
</dbReference>
<dbReference type="GO" id="GO:0042127">
    <property type="term" value="P:regulation of cell population proliferation"/>
    <property type="evidence" value="ECO:0000315"/>
    <property type="project" value="BHF-UCL"/>
</dbReference>
<dbReference type="GO" id="GO:1900034">
    <property type="term" value="P:regulation of cellular response to heat"/>
    <property type="evidence" value="ECO:0000304"/>
    <property type="project" value="Reactome"/>
</dbReference>
<dbReference type="GO" id="GO:0010824">
    <property type="term" value="P:regulation of centrosome duplication"/>
    <property type="evidence" value="ECO:0000314"/>
    <property type="project" value="UniProtKB"/>
</dbReference>
<dbReference type="GO" id="GO:0032071">
    <property type="term" value="P:regulation of endodeoxyribonuclease activity"/>
    <property type="evidence" value="ECO:0000315"/>
    <property type="project" value="UniProtKB"/>
</dbReference>
<dbReference type="GO" id="GO:0010906">
    <property type="term" value="P:regulation of glucose metabolic process"/>
    <property type="evidence" value="ECO:0000250"/>
    <property type="project" value="UniProtKB"/>
</dbReference>
<dbReference type="GO" id="GO:0010883">
    <property type="term" value="P:regulation of lipid storage"/>
    <property type="evidence" value="ECO:0000250"/>
    <property type="project" value="UniProtKB"/>
</dbReference>
<dbReference type="GO" id="GO:0007346">
    <property type="term" value="P:regulation of mitotic cell cycle"/>
    <property type="evidence" value="ECO:0000314"/>
    <property type="project" value="UniProtKB"/>
</dbReference>
<dbReference type="GO" id="GO:0035358">
    <property type="term" value="P:regulation of peroxisome proliferator activated receptor signaling pathway"/>
    <property type="evidence" value="ECO:0000250"/>
    <property type="project" value="BHF-UCL"/>
</dbReference>
<dbReference type="GO" id="GO:0034391">
    <property type="term" value="P:regulation of smooth muscle cell apoptotic process"/>
    <property type="evidence" value="ECO:0000250"/>
    <property type="project" value="UniProtKB"/>
</dbReference>
<dbReference type="GO" id="GO:0046015">
    <property type="term" value="P:regulation of transcription by glucose"/>
    <property type="evidence" value="ECO:0000315"/>
    <property type="project" value="ComplexPortal"/>
</dbReference>
<dbReference type="GO" id="GO:0042542">
    <property type="term" value="P:response to hydrogen peroxide"/>
    <property type="evidence" value="ECO:0000314"/>
    <property type="project" value="UniProtKB"/>
</dbReference>
<dbReference type="GO" id="GO:0032868">
    <property type="term" value="P:response to insulin"/>
    <property type="evidence" value="ECO:0000250"/>
    <property type="project" value="UniProtKB"/>
</dbReference>
<dbReference type="GO" id="GO:0044321">
    <property type="term" value="P:response to leptin"/>
    <property type="evidence" value="ECO:0000250"/>
    <property type="project" value="UniProtKB"/>
</dbReference>
<dbReference type="GO" id="GO:0006979">
    <property type="term" value="P:response to oxidative stress"/>
    <property type="evidence" value="ECO:0000314"/>
    <property type="project" value="UniProtKB"/>
</dbReference>
<dbReference type="GO" id="GO:0000012">
    <property type="term" value="P:single strand break repair"/>
    <property type="evidence" value="ECO:0000315"/>
    <property type="project" value="UniProtKB"/>
</dbReference>
<dbReference type="GO" id="GO:0007283">
    <property type="term" value="P:spermatogenesis"/>
    <property type="evidence" value="ECO:0007669"/>
    <property type="project" value="Ensembl"/>
</dbReference>
<dbReference type="GO" id="GO:0090400">
    <property type="term" value="P:stress-induced premature senescence"/>
    <property type="evidence" value="ECO:0000315"/>
    <property type="project" value="CACAO"/>
</dbReference>
<dbReference type="GO" id="GO:0007179">
    <property type="term" value="P:transforming growth factor beta receptor signaling pathway"/>
    <property type="evidence" value="ECO:0000314"/>
    <property type="project" value="BHF-UCL"/>
</dbReference>
<dbReference type="GO" id="GO:0006642">
    <property type="term" value="P:triglyceride mobilization"/>
    <property type="evidence" value="ECO:0000250"/>
    <property type="project" value="BHF-UCL"/>
</dbReference>
<dbReference type="GO" id="GO:0070914">
    <property type="term" value="P:UV-damage excision repair"/>
    <property type="evidence" value="ECO:0000315"/>
    <property type="project" value="CACAO"/>
</dbReference>
<dbReference type="GO" id="GO:0050872">
    <property type="term" value="P:white fat cell differentiation"/>
    <property type="evidence" value="ECO:0000250"/>
    <property type="project" value="BHF-UCL"/>
</dbReference>
<dbReference type="CDD" id="cd01408">
    <property type="entry name" value="SIRT1"/>
    <property type="match status" value="1"/>
</dbReference>
<dbReference type="FunFam" id="3.30.1600.10:FF:000013">
    <property type="entry name" value="NAD-dependent protein deacetylase sirtuin-1"/>
    <property type="match status" value="2"/>
</dbReference>
<dbReference type="Gene3D" id="3.30.1600.10">
    <property type="entry name" value="SIR2/SIRT2 'Small Domain"/>
    <property type="match status" value="1"/>
</dbReference>
<dbReference type="Gene3D" id="3.40.50.1220">
    <property type="entry name" value="TPP-binding domain"/>
    <property type="match status" value="1"/>
</dbReference>
<dbReference type="InterPro" id="IPR029035">
    <property type="entry name" value="DHS-like_NAD/FAD-binding_dom"/>
</dbReference>
<dbReference type="InterPro" id="IPR050134">
    <property type="entry name" value="NAD-dep_sirtuin_deacylases"/>
</dbReference>
<dbReference type="InterPro" id="IPR003000">
    <property type="entry name" value="Sirtuin"/>
</dbReference>
<dbReference type="InterPro" id="IPR026591">
    <property type="entry name" value="Sirtuin_cat_small_dom_sf"/>
</dbReference>
<dbReference type="InterPro" id="IPR026590">
    <property type="entry name" value="Ssirtuin_cat_dom"/>
</dbReference>
<dbReference type="PANTHER" id="PTHR11085:SF9">
    <property type="entry name" value="NAD-DEPENDENT PROTEIN DEACETYLASE SIRTUIN-1"/>
    <property type="match status" value="1"/>
</dbReference>
<dbReference type="PANTHER" id="PTHR11085">
    <property type="entry name" value="NAD-DEPENDENT PROTEIN DEACYLASE SIRTUIN-5, MITOCHONDRIAL-RELATED"/>
    <property type="match status" value="1"/>
</dbReference>
<dbReference type="Pfam" id="PF02146">
    <property type="entry name" value="SIR2"/>
    <property type="match status" value="1"/>
</dbReference>
<dbReference type="SUPFAM" id="SSF52467">
    <property type="entry name" value="DHS-like NAD/FAD-binding domain"/>
    <property type="match status" value="1"/>
</dbReference>
<dbReference type="PROSITE" id="PS50305">
    <property type="entry name" value="SIRTUIN"/>
    <property type="match status" value="1"/>
</dbReference>
<feature type="initiator methionine" description="Removed" evidence="115 117 118 119 120">
    <location>
        <position position="1"/>
    </location>
</feature>
<feature type="chain" id="PRO_0000110256" description="NAD-dependent protein deacetylase sirtuin-1">
    <location>
        <begin position="2"/>
        <end position="747"/>
    </location>
</feature>
<feature type="chain" id="PRO_0000415289" description="SirtT1 75 kDa fragment">
    <location>
        <begin position="2"/>
        <end position="533"/>
    </location>
</feature>
<feature type="domain" description="Deacetylase sirtuin-type" evidence="4">
    <location>
        <begin position="236"/>
        <end position="496"/>
    </location>
</feature>
<feature type="region of interest" description="Disordered" evidence="5">
    <location>
        <begin position="1"/>
        <end position="135"/>
    </location>
</feature>
<feature type="region of interest" description="Interaction with H1-4" evidence="17">
    <location>
        <begin position="2"/>
        <end position="268"/>
    </location>
</feature>
<feature type="region of interest" description="Interaction with CLOCK" evidence="3">
    <location>
        <begin position="2"/>
        <end position="139"/>
    </location>
</feature>
<feature type="region of interest" description="Interaction with CCAR2">
    <location>
        <begin position="143"/>
        <end position="541"/>
    </location>
</feature>
<feature type="region of interest" description="Required for interaction with the sumoylated form of CCAR2" evidence="90">
    <location>
        <begin position="256"/>
        <end position="259"/>
    </location>
</feature>
<feature type="region of interest" description="Disordered" evidence="5">
    <location>
        <begin position="523"/>
        <end position="549"/>
    </location>
</feature>
<feature type="region of interest" description="Phosphorylated at one of three serine residues">
    <location>
        <begin position="538"/>
        <end position="540"/>
    </location>
</feature>
<feature type="region of interest" description="Disordered" evidence="5">
    <location>
        <begin position="562"/>
        <end position="587"/>
    </location>
</feature>
<feature type="region of interest" description="Disordered" evidence="5">
    <location>
        <begin position="663"/>
        <end position="726"/>
    </location>
</feature>
<feature type="short sequence motif" description="Nuclear localization signal" evidence="1">
    <location>
        <begin position="32"/>
        <end position="39"/>
    </location>
</feature>
<feature type="short sequence motif" description="Nuclear export signal" evidence="1">
    <location>
        <begin position="138"/>
        <end position="145"/>
    </location>
</feature>
<feature type="short sequence motif" description="Nuclear localization signal" evidence="1">
    <location>
        <begin position="223"/>
        <end position="230"/>
    </location>
</feature>
<feature type="short sequence motif" description="Nuclear export signal" evidence="1">
    <location>
        <begin position="425"/>
        <end position="431"/>
    </location>
</feature>
<feature type="compositionally biased region" description="Low complexity" evidence="5">
    <location>
        <begin position="61"/>
        <end position="100"/>
    </location>
</feature>
<feature type="compositionally biased region" description="Acidic residues" evidence="5">
    <location>
        <begin position="120"/>
        <end position="135"/>
    </location>
</feature>
<feature type="compositionally biased region" description="Polar residues" evidence="5">
    <location>
        <begin position="537"/>
        <end position="549"/>
    </location>
</feature>
<feature type="compositionally biased region" description="Basic and acidic residues" evidence="5">
    <location>
        <begin position="569"/>
        <end position="580"/>
    </location>
</feature>
<feature type="compositionally biased region" description="Low complexity" evidence="5">
    <location>
        <begin position="666"/>
        <end position="677"/>
    </location>
</feature>
<feature type="compositionally biased region" description="Acidic residues" evidence="5">
    <location>
        <begin position="687"/>
        <end position="707"/>
    </location>
</feature>
<feature type="active site" description="Proton acceptor" evidence="4 7 8 10 26 34 36 40 51 90 92 103">
    <location>
        <position position="363"/>
    </location>
</feature>
<feature type="binding site" evidence="2">
    <location>
        <begin position="261"/>
        <end position="280"/>
    </location>
    <ligand>
        <name>NAD(+)</name>
        <dbReference type="ChEBI" id="CHEBI:57540"/>
    </ligand>
</feature>
<feature type="binding site" evidence="2">
    <location>
        <begin position="345"/>
        <end position="348"/>
    </location>
    <ligand>
        <name>NAD(+)</name>
        <dbReference type="ChEBI" id="CHEBI:57540"/>
    </ligand>
</feature>
<feature type="binding site" evidence="4">
    <location>
        <position position="371"/>
    </location>
    <ligand>
        <name>Zn(2+)</name>
        <dbReference type="ChEBI" id="CHEBI:29105"/>
    </ligand>
</feature>
<feature type="binding site" evidence="4">
    <location>
        <position position="374"/>
    </location>
    <ligand>
        <name>Zn(2+)</name>
        <dbReference type="ChEBI" id="CHEBI:29105"/>
    </ligand>
</feature>
<feature type="binding site" evidence="4">
    <location>
        <position position="395"/>
    </location>
    <ligand>
        <name>Zn(2+)</name>
        <dbReference type="ChEBI" id="CHEBI:29105"/>
    </ligand>
</feature>
<feature type="binding site" evidence="4">
    <location>
        <position position="398"/>
    </location>
    <ligand>
        <name>Zn(2+)</name>
        <dbReference type="ChEBI" id="CHEBI:29105"/>
    </ligand>
</feature>
<feature type="binding site" evidence="2">
    <location>
        <begin position="440"/>
        <end position="442"/>
    </location>
    <ligand>
        <name>NAD(+)</name>
        <dbReference type="ChEBI" id="CHEBI:57540"/>
    </ligand>
</feature>
<feature type="binding site" evidence="2">
    <location>
        <begin position="465"/>
        <end position="467"/>
    </location>
    <ligand>
        <name>NAD(+)</name>
        <dbReference type="ChEBI" id="CHEBI:57540"/>
    </ligand>
</feature>
<feature type="binding site" evidence="1">
    <location>
        <position position="482"/>
    </location>
    <ligand>
        <name>NAD(+)</name>
        <dbReference type="ChEBI" id="CHEBI:57540"/>
    </ligand>
</feature>
<feature type="modified residue" description="N-acetylalanine" evidence="115 117 118 119 120">
    <location>
        <position position="2"/>
    </location>
</feature>
<feature type="modified residue" description="Phosphoserine" evidence="44 117 118 121 122">
    <location>
        <position position="14"/>
    </location>
</feature>
<feature type="modified residue" description="Phosphoserine" evidence="44">
    <location>
        <position position="26"/>
    </location>
</feature>
<feature type="modified residue" description="Phosphoserine; by MAPK8" evidence="43 44 52 121 122">
    <location>
        <position position="27"/>
    </location>
</feature>
<feature type="modified residue" description="Phosphoserine; by MAPK8" evidence="43 44 52 68 113 117 118 121">
    <location>
        <position position="47"/>
    </location>
</feature>
<feature type="modified residue" description="Phosphoserine" evidence="109">
    <location>
        <position position="159"/>
    </location>
</feature>
<feature type="modified residue" description="Phosphoserine" evidence="109">
    <location>
        <position position="162"/>
    </location>
</feature>
<feature type="modified residue" description="Phosphoserine" evidence="44">
    <location>
        <position position="172"/>
    </location>
</feature>
<feature type="modified residue" description="Phosphoserine" evidence="44">
    <location>
        <position position="173"/>
    </location>
</feature>
<feature type="modified residue" description="N6-acetyllysine" evidence="3">
    <location>
        <position position="238"/>
    </location>
</feature>
<feature type="modified residue" description="N6-acetyllysine" evidence="3">
    <location>
        <position position="377"/>
    </location>
</feature>
<feature type="modified residue" description="S-nitrosocysteine" evidence="3">
    <location>
        <position position="395"/>
    </location>
</feature>
<feature type="modified residue" description="S-nitrosocysteine" evidence="3">
    <location>
        <position position="398"/>
    </location>
</feature>
<feature type="modified residue" description="N6-acetyllysine" evidence="3">
    <location>
        <position position="430"/>
    </location>
</feature>
<feature type="modified residue" description="N6-acetyllysine" evidence="3">
    <location>
        <position position="513"/>
    </location>
</feature>
<feature type="modified residue" description="Phosphothreonine; by DYRK1A, DYRK3 and MAPK8" evidence="44 52 116">
    <location>
        <position position="530"/>
    </location>
</feature>
<feature type="modified residue" description="Phosphoserine" evidence="116">
    <location>
        <position position="535"/>
    </location>
</feature>
<feature type="modified residue" description="Phosphothreonine" evidence="109">
    <location>
        <position position="544"/>
    </location>
</feature>
<feature type="modified residue" description="Phosphoserine" evidence="109">
    <location>
        <position position="545"/>
    </location>
</feature>
<feature type="modified residue" description="N6-acetyllysine" evidence="3">
    <location>
        <position position="610"/>
    </location>
</feature>
<feature type="modified residue" description="Phosphoserine; by CaMK2" evidence="3">
    <location>
        <position position="659"/>
    </location>
</feature>
<feature type="modified residue" description="Phosphoserine; by CaMK2" evidence="111">
    <location>
        <position position="661"/>
    </location>
</feature>
<feature type="modified residue" description="Phosphothreonine" evidence="44 114 116 118 121">
    <location>
        <position position="719"/>
    </location>
</feature>
<feature type="modified residue" description="Phosphoserine" evidence="44">
    <location>
        <position position="747"/>
    </location>
</feature>
<feature type="splice variant" id="VSP_042189" description="In isoform 2." evidence="107">
    <location>
        <begin position="454"/>
        <end position="639"/>
    </location>
</feature>
<feature type="sequence variant" id="VAR_025148" description="In dbSNP:rs35671182." evidence="104">
    <original>D</original>
    <variation>E</variation>
    <location>
        <position position="3"/>
    </location>
</feature>
<feature type="sequence variant" id="VAR_051976" description="In dbSNP:rs1063111.">
    <original>V</original>
    <variation>D</variation>
    <location>
        <position position="484"/>
    </location>
</feature>
<feature type="mutagenesis site" description="Greatly diminishes phosphorylation by MAPK8; when associated with A-47 and A-530." evidence="52">
    <original>S</original>
    <variation>A</variation>
    <location>
        <position position="27"/>
    </location>
</feature>
<feature type="mutagenesis site" description="Blocks residue phosphorylation, restores deacetylation activity and inhibits DNA damage-induced apoptosis." evidence="52 68">
    <original>S</original>
    <variation>A</variation>
    <location>
        <position position="47"/>
    </location>
</feature>
<feature type="mutagenesis site" description="Greatly diminishes phosphorylation by MAPK8; when associated with A-27 and A-530." evidence="52 68">
    <original>S</original>
    <variation>A</variation>
    <location>
        <position position="47"/>
    </location>
</feature>
<feature type="mutagenesis site" description="Impairs in vitro methylation by SETD7; when associated with R-235, R-236 and R-238." evidence="67">
    <original>K</original>
    <variation>R</variation>
    <location>
        <position position="233"/>
    </location>
</feature>
<feature type="mutagenesis site" description="Impairs in vitro methylation by SETD7; when associated with R-233, R-236 and R-238." evidence="67">
    <original>K</original>
    <variation>R</variation>
    <location>
        <position position="235"/>
    </location>
</feature>
<feature type="mutagenesis site" description="Impairs in vitro methylation by SETD7; when associated with R-233, R-235 and R-238." evidence="67">
    <original>K</original>
    <variation>R</variation>
    <location>
        <position position="236"/>
    </location>
</feature>
<feature type="mutagenesis site" description="Impairs in vitro methylation by SETD7; when associated with R-233, R-235a and R-236." evidence="67">
    <original>K</original>
    <variation>R</variation>
    <location>
        <position position="238"/>
    </location>
</feature>
<feature type="mutagenesis site" description="Loss of interaction with the sumoylated form of CCAR2. No effect on its deacetylation activity." evidence="90">
    <original>II</original>
    <variation>KK</variation>
    <location>
        <begin position="256"/>
        <end position="257"/>
    </location>
</feature>
<feature type="mutagenesis site" description="Loss of function; abolishes both protein deacetylase, delactylase and decrotonylase activities. Reduces the interaction with CCAR2 and APEX1. Increases acetylation of APEX1." evidence="7 8 10 26 34 36 40 51 90 92 100 101 103">
    <original>H</original>
    <variation>Y</variation>
    <location>
        <position position="363"/>
    </location>
</feature>
<feature type="mutagenesis site" description="Abolishes phosphorylation at Ser-47, restores deacetylation activity and inhibits DNA damage-induced apoptosis." evidence="68">
    <original>F</original>
    <variation>A</variation>
    <location>
        <position position="474"/>
    </location>
</feature>
<feature type="mutagenesis site" description="Greatly diminishes phosphorylation by MAPK8; when associated with A-27 and A-47." evidence="44 52">
    <original>T</original>
    <variation>A</variation>
    <location>
        <position position="530"/>
    </location>
</feature>
<feature type="mutagenesis site" description="Reduces in vitro phosphorylation by CDK1. Impairs cell proliferation and cell cycle progression; when associated with A-540." evidence="44 52">
    <original>T</original>
    <variation>A</variation>
    <location>
        <position position="530"/>
    </location>
</feature>
<feature type="mutagenesis site" description="Reduces in vitro phosphorylation by CDK1. Impairs cell proliferation and cell cycle progression; when associated with A-530." evidence="44">
    <original>S</original>
    <variation>A</variation>
    <location>
        <position position="540"/>
    </location>
</feature>
<feature type="mutagenesis site" description="Reduces in vitro phosphorylation by CaMK2; when associated with S-661. Greatly reduces in vivo phosphorylation; when associated with A-661." evidence="47">
    <original>S</original>
    <variation>A</variation>
    <location>
        <position position="659"/>
    </location>
</feature>
<feature type="mutagenesis site" description="Reduces in vitro phosphorylation by CaMK2; when associated with S-659. Greatly reduces in vivo phosphorylation; when associated with A-659." evidence="47">
    <original>S</original>
    <variation>A</variation>
    <location>
        <position position="661"/>
    </location>
</feature>
<feature type="mutagenesis site" description="No effect on phosphorylation (in vitro and in vivo)." evidence="47">
    <original>S</original>
    <variation>A</variation>
    <location>
        <position position="684"/>
    </location>
</feature>
<feature type="sequence conflict" description="In Ref. 5; AAH12499." evidence="107" ref="5">
    <original>DIFN</original>
    <variation>ALFS</variation>
    <location>
        <begin position="386"/>
        <end position="389"/>
    </location>
</feature>
<feature type="helix" evidence="126">
    <location>
        <begin position="184"/>
        <end position="194"/>
    </location>
</feature>
<feature type="helix" evidence="126">
    <location>
        <begin position="198"/>
        <end position="205"/>
    </location>
</feature>
<feature type="helix" evidence="126">
    <location>
        <begin position="217"/>
        <end position="228"/>
    </location>
</feature>
<feature type="helix" evidence="125">
    <location>
        <begin position="243"/>
        <end position="252"/>
    </location>
</feature>
<feature type="strand" evidence="125">
    <location>
        <begin position="254"/>
        <end position="260"/>
    </location>
</feature>
<feature type="helix" evidence="125">
    <location>
        <begin position="262"/>
        <end position="268"/>
    </location>
</feature>
<feature type="strand" evidence="125">
    <location>
        <begin position="273"/>
        <end position="275"/>
    </location>
</feature>
<feature type="turn" evidence="124">
    <location>
        <begin position="276"/>
        <end position="278"/>
    </location>
</feature>
<feature type="helix" evidence="125">
    <location>
        <begin position="279"/>
        <end position="286"/>
    </location>
</feature>
<feature type="strand" evidence="125">
    <location>
        <begin position="290"/>
        <end position="292"/>
    </location>
</feature>
<feature type="helix" evidence="125">
    <location>
        <begin position="293"/>
        <end position="297"/>
    </location>
</feature>
<feature type="helix" evidence="125">
    <location>
        <begin position="299"/>
        <end position="304"/>
    </location>
</feature>
<feature type="helix" evidence="125">
    <location>
        <begin position="307"/>
        <end position="312"/>
    </location>
</feature>
<feature type="helix" evidence="125">
    <location>
        <begin position="313"/>
        <end position="316"/>
    </location>
</feature>
<feature type="strand" evidence="123">
    <location>
        <begin position="318"/>
        <end position="320"/>
    </location>
</feature>
<feature type="helix" evidence="125">
    <location>
        <begin position="325"/>
        <end position="335"/>
    </location>
</feature>
<feature type="strand" evidence="125">
    <location>
        <begin position="339"/>
        <end position="344"/>
    </location>
</feature>
<feature type="helix" evidence="125">
    <location>
        <begin position="350"/>
        <end position="354"/>
    </location>
</feature>
<feature type="strand" evidence="125">
    <location>
        <begin position="358"/>
        <end position="361"/>
    </location>
</feature>
<feature type="strand" evidence="125">
    <location>
        <begin position="364"/>
        <end position="371"/>
    </location>
</feature>
<feature type="turn" evidence="125">
    <location>
        <begin position="372"/>
        <end position="374"/>
    </location>
</feature>
<feature type="strand" evidence="125">
    <location>
        <begin position="377"/>
        <end position="379"/>
    </location>
</feature>
<feature type="helix" evidence="125">
    <location>
        <begin position="380"/>
        <end position="382"/>
    </location>
</feature>
<feature type="helix" evidence="125">
    <location>
        <begin position="384"/>
        <end position="388"/>
    </location>
</feature>
<feature type="strand" evidence="125">
    <location>
        <begin position="396"/>
        <end position="398"/>
    </location>
</feature>
<feature type="strand" evidence="125">
    <location>
        <begin position="406"/>
        <end position="411"/>
    </location>
</feature>
<feature type="helix" evidence="125">
    <location>
        <begin position="420"/>
        <end position="429"/>
    </location>
</feature>
<feature type="turn" evidence="125">
    <location>
        <begin position="430"/>
        <end position="432"/>
    </location>
</feature>
<feature type="strand" evidence="125">
    <location>
        <begin position="435"/>
        <end position="440"/>
    </location>
</feature>
<feature type="helix" evidence="125">
    <location>
        <begin position="448"/>
        <end position="450"/>
    </location>
</feature>
<feature type="helix" evidence="125">
    <location>
        <begin position="451"/>
        <end position="454"/>
    </location>
</feature>
<feature type="strand" evidence="125">
    <location>
        <begin position="461"/>
        <end position="467"/>
    </location>
</feature>
<feature type="strand" evidence="125">
    <location>
        <begin position="475"/>
        <end position="480"/>
    </location>
</feature>
<feature type="helix" evidence="125">
    <location>
        <begin position="482"/>
        <end position="493"/>
    </location>
</feature>
<feature type="helix" evidence="125">
    <location>
        <begin position="495"/>
        <end position="500"/>
    </location>
</feature>
<feature type="strand" evidence="127">
    <location>
        <begin position="506"/>
        <end position="510"/>
    </location>
</feature>
<feature type="strand" evidence="125">
    <location>
        <begin position="643"/>
        <end position="645"/>
    </location>
</feature>
<feature type="turn" evidence="125">
    <location>
        <begin position="646"/>
        <end position="648"/>
    </location>
</feature>
<feature type="strand" evidence="125">
    <location>
        <begin position="649"/>
        <end position="651"/>
    </location>
</feature>
<feature type="helix" evidence="125">
    <location>
        <begin position="656"/>
        <end position="658"/>
    </location>
</feature>
<feature type="turn" evidence="128">
    <location>
        <begin position="671"/>
        <end position="674"/>
    </location>
</feature>